<evidence type="ECO:0000250" key="1"/>
<evidence type="ECO:0000250" key="2">
    <source>
        <dbReference type="UniProtKB" id="P20171"/>
    </source>
</evidence>
<evidence type="ECO:0000250" key="3">
    <source>
        <dbReference type="UniProtKB" id="Q61411"/>
    </source>
</evidence>
<evidence type="ECO:0000269" key="4">
    <source>
    </source>
</evidence>
<evidence type="ECO:0000269" key="5">
    <source>
    </source>
</evidence>
<evidence type="ECO:0000269" key="6">
    <source>
    </source>
</evidence>
<evidence type="ECO:0000269" key="7">
    <source>
    </source>
</evidence>
<evidence type="ECO:0000269" key="8">
    <source>
    </source>
</evidence>
<evidence type="ECO:0000269" key="9">
    <source>
    </source>
</evidence>
<evidence type="ECO:0000269" key="10">
    <source>
    </source>
</evidence>
<evidence type="ECO:0000269" key="11">
    <source>
    </source>
</evidence>
<evidence type="ECO:0000269" key="12">
    <source>
    </source>
</evidence>
<evidence type="ECO:0000269" key="13">
    <source>
    </source>
</evidence>
<evidence type="ECO:0000269" key="14">
    <source>
    </source>
</evidence>
<evidence type="ECO:0000269" key="15">
    <source>
    </source>
</evidence>
<evidence type="ECO:0000269" key="16">
    <source>
    </source>
</evidence>
<evidence type="ECO:0000269" key="17">
    <source>
    </source>
</evidence>
<evidence type="ECO:0000269" key="18">
    <source>
    </source>
</evidence>
<evidence type="ECO:0000269" key="19">
    <source>
    </source>
</evidence>
<evidence type="ECO:0000269" key="20">
    <source>
    </source>
</evidence>
<evidence type="ECO:0000269" key="21">
    <source>
    </source>
</evidence>
<evidence type="ECO:0000269" key="22">
    <source>
    </source>
</evidence>
<evidence type="ECO:0000269" key="23">
    <source>
    </source>
</evidence>
<evidence type="ECO:0000269" key="24">
    <source>
    </source>
</evidence>
<evidence type="ECO:0000269" key="25">
    <source>
    </source>
</evidence>
<evidence type="ECO:0000269" key="26">
    <source>
    </source>
</evidence>
<evidence type="ECO:0000269" key="27">
    <source>
    </source>
</evidence>
<evidence type="ECO:0000269" key="28">
    <source>
    </source>
</evidence>
<evidence type="ECO:0000269" key="29">
    <source>
    </source>
</evidence>
<evidence type="ECO:0000269" key="30">
    <source>
    </source>
</evidence>
<evidence type="ECO:0000269" key="31">
    <source>
    </source>
</evidence>
<evidence type="ECO:0000269" key="32">
    <source>
    </source>
</evidence>
<evidence type="ECO:0000269" key="33">
    <source>
    </source>
</evidence>
<evidence type="ECO:0000269" key="34">
    <source>
    </source>
</evidence>
<evidence type="ECO:0000269" key="35">
    <source>
    </source>
</evidence>
<evidence type="ECO:0000269" key="36">
    <source>
    </source>
</evidence>
<evidence type="ECO:0000269" key="37">
    <source>
    </source>
</evidence>
<evidence type="ECO:0000269" key="38">
    <source>
    </source>
</evidence>
<evidence type="ECO:0000269" key="39">
    <source>
    </source>
</evidence>
<evidence type="ECO:0000269" key="40">
    <source>
    </source>
</evidence>
<evidence type="ECO:0000269" key="41">
    <source>
    </source>
</evidence>
<evidence type="ECO:0000269" key="42">
    <source>
    </source>
</evidence>
<evidence type="ECO:0000269" key="43">
    <source>
    </source>
</evidence>
<evidence type="ECO:0000269" key="44">
    <source>
    </source>
</evidence>
<evidence type="ECO:0000269" key="45">
    <source>
    </source>
</evidence>
<evidence type="ECO:0000269" key="46">
    <source>
    </source>
</evidence>
<evidence type="ECO:0000269" key="47">
    <source>
    </source>
</evidence>
<evidence type="ECO:0000269" key="48">
    <source>
    </source>
</evidence>
<evidence type="ECO:0000269" key="49">
    <source>
    </source>
</evidence>
<evidence type="ECO:0000269" key="50">
    <source ref="12"/>
</evidence>
<evidence type="ECO:0000303" key="51">
    <source>
    </source>
</evidence>
<evidence type="ECO:0000303" key="52">
    <source>
    </source>
</evidence>
<evidence type="ECO:0000305" key="53"/>
<evidence type="ECO:0000305" key="54">
    <source>
    </source>
</evidence>
<evidence type="ECO:0007744" key="55">
    <source>
        <dbReference type="PDB" id="121P"/>
    </source>
</evidence>
<evidence type="ECO:0007744" key="56">
    <source>
        <dbReference type="PDB" id="1CTQ"/>
    </source>
</evidence>
<evidence type="ECO:0007744" key="57">
    <source>
        <dbReference type="PDB" id="1LF0"/>
    </source>
</evidence>
<evidence type="ECO:0007744" key="58">
    <source>
        <dbReference type="PDB" id="1LF5"/>
    </source>
</evidence>
<evidence type="ECO:0007744" key="59">
    <source>
        <dbReference type="PDB" id="1Q21"/>
    </source>
</evidence>
<evidence type="ECO:0007744" key="60">
    <source>
        <dbReference type="PDB" id="1QRA"/>
    </source>
</evidence>
<evidence type="ECO:0007744" key="61">
    <source>
        <dbReference type="PDB" id="1WQ1"/>
    </source>
</evidence>
<evidence type="ECO:0007744" key="62">
    <source>
        <dbReference type="PDB" id="2CE2"/>
    </source>
</evidence>
<evidence type="ECO:0007744" key="63">
    <source>
        <dbReference type="PDB" id="2CL0"/>
    </source>
</evidence>
<evidence type="ECO:0007744" key="64">
    <source>
        <dbReference type="PDB" id="2CL6"/>
    </source>
</evidence>
<evidence type="ECO:0007744" key="65">
    <source>
        <dbReference type="PDB" id="2CL7"/>
    </source>
</evidence>
<evidence type="ECO:0007744" key="66">
    <source>
        <dbReference type="PDB" id="2CLC"/>
    </source>
</evidence>
<evidence type="ECO:0007744" key="67">
    <source>
        <dbReference type="PDB" id="2CLD"/>
    </source>
</evidence>
<evidence type="ECO:0007744" key="68">
    <source>
        <dbReference type="PDB" id="2EVW"/>
    </source>
</evidence>
<evidence type="ECO:0007744" key="69">
    <source>
        <dbReference type="PDB" id="2Q21"/>
    </source>
</evidence>
<evidence type="ECO:0007744" key="70">
    <source>
        <dbReference type="PDB" id="2RGA"/>
    </source>
</evidence>
<evidence type="ECO:0007744" key="71">
    <source>
        <dbReference type="PDB" id="2RGB"/>
    </source>
</evidence>
<evidence type="ECO:0007744" key="72">
    <source>
        <dbReference type="PDB" id="2RGC"/>
    </source>
</evidence>
<evidence type="ECO:0007744" key="73">
    <source>
        <dbReference type="PDB" id="2RGD"/>
    </source>
</evidence>
<evidence type="ECO:0007744" key="74">
    <source>
        <dbReference type="PDB" id="2RGE"/>
    </source>
</evidence>
<evidence type="ECO:0007744" key="75">
    <source>
        <dbReference type="PDB" id="2RGG"/>
    </source>
</evidence>
<evidence type="ECO:0007744" key="76">
    <source>
        <dbReference type="PDB" id="3DDC"/>
    </source>
</evidence>
<evidence type="ECO:0007744" key="77">
    <source>
        <dbReference type="PDB" id="5P21"/>
    </source>
</evidence>
<evidence type="ECO:0007744" key="78">
    <source>
        <dbReference type="PDB" id="7VV8"/>
    </source>
</evidence>
<evidence type="ECO:0007744" key="79">
    <source>
        <dbReference type="PDB" id="7VV9"/>
    </source>
</evidence>
<evidence type="ECO:0007744" key="80">
    <source>
        <dbReference type="PDB" id="7VVG"/>
    </source>
</evidence>
<evidence type="ECO:0007829" key="81">
    <source>
        <dbReference type="PDB" id="1CRP"/>
    </source>
</evidence>
<evidence type="ECO:0007829" key="82">
    <source>
        <dbReference type="PDB" id="1XCM"/>
    </source>
</evidence>
<evidence type="ECO:0007829" key="83">
    <source>
        <dbReference type="PDB" id="1XD2"/>
    </source>
</evidence>
<evidence type="ECO:0007829" key="84">
    <source>
        <dbReference type="PDB" id="2CE2"/>
    </source>
</evidence>
<evidence type="ECO:0007829" key="85">
    <source>
        <dbReference type="PDB" id="2CLD"/>
    </source>
</evidence>
<evidence type="ECO:0007829" key="86">
    <source>
        <dbReference type="PDB" id="6V9M"/>
    </source>
</evidence>
<evidence type="ECO:0007829" key="87">
    <source>
        <dbReference type="PDB" id="7VV9"/>
    </source>
</evidence>
<feature type="chain" id="PRO_0000042996" description="GTPase HRas">
    <location>
        <begin position="1"/>
        <end position="186"/>
    </location>
</feature>
<feature type="initiator methionine" description="Removed; alternate" evidence="50">
    <location>
        <position position="1"/>
    </location>
</feature>
<feature type="chain" id="PRO_0000326476" description="GTPase HRas, N-terminally processed">
    <location>
        <begin position="2"/>
        <end position="186"/>
    </location>
</feature>
<feature type="propeptide" id="PRO_0000042997" description="Removed in mature form">
    <location>
        <begin position="187"/>
        <end position="189"/>
    </location>
</feature>
<feature type="region of interest" description="Hypervariable region">
    <location>
        <begin position="166"/>
        <end position="185"/>
    </location>
</feature>
<feature type="short sequence motif" description="Effector region">
    <location>
        <begin position="32"/>
        <end position="40"/>
    </location>
</feature>
<feature type="binding site" evidence="21 54">
    <location>
        <begin position="13"/>
        <end position="18"/>
    </location>
    <ligand>
        <name>GTP</name>
        <dbReference type="ChEBI" id="CHEBI:37565"/>
    </ligand>
</feature>
<feature type="binding site" evidence="21 54">
    <location>
        <begin position="29"/>
        <end position="35"/>
    </location>
    <ligand>
        <name>GTP</name>
        <dbReference type="ChEBI" id="CHEBI:37565"/>
    </ligand>
</feature>
<feature type="binding site" evidence="21 54">
    <location>
        <begin position="59"/>
        <end position="60"/>
    </location>
    <ligand>
        <name>GTP</name>
        <dbReference type="ChEBI" id="CHEBI:37565"/>
    </ligand>
</feature>
<feature type="binding site" evidence="21 54">
    <location>
        <begin position="116"/>
        <end position="119"/>
    </location>
    <ligand>
        <name>GTP</name>
        <dbReference type="ChEBI" id="CHEBI:37565"/>
    </ligand>
</feature>
<feature type="binding site" evidence="21 54">
    <location>
        <begin position="145"/>
        <end position="147"/>
    </location>
    <ligand>
        <name>GTP</name>
        <dbReference type="ChEBI" id="CHEBI:37565"/>
    </ligand>
</feature>
<feature type="modified residue" description="N-acetylmethionine; in GTPase HRas; alternate" evidence="50">
    <location>
        <position position="1"/>
    </location>
</feature>
<feature type="modified residue" description="N-acetylthreonine; in GTPase HRas, N-terminally processed" evidence="50">
    <location>
        <position position="2"/>
    </location>
</feature>
<feature type="modified residue" description="S-nitrosocysteine" evidence="48">
    <location>
        <position position="118"/>
    </location>
</feature>
<feature type="modified residue" description="Cysteine methyl ester" evidence="47">
    <location>
        <position position="186"/>
    </location>
</feature>
<feature type="lipid moiety-binding region" description="S-palmitoyl cysteine" evidence="16 17 33 47">
    <location>
        <position position="181"/>
    </location>
</feature>
<feature type="lipid moiety-binding region" description="S-(15-deoxy-Delta12,14-prostaglandin J2-9-yl)cysteine; alternate" evidence="10">
    <location>
        <position position="184"/>
    </location>
</feature>
<feature type="lipid moiety-binding region" description="S-palmitoyl cysteine; alternate" evidence="16 17 33 47">
    <location>
        <position position="184"/>
    </location>
</feature>
<feature type="lipid moiety-binding region" description="S-farnesyl cysteine" evidence="47">
    <location>
        <position position="186"/>
    </location>
</feature>
<feature type="glycosylation site" description="(Microbial infection) O-linked (Glc) threonine; by P.sordellii toxin TcsL" evidence="29 45 46 49">
    <location>
        <position position="35"/>
    </location>
</feature>
<feature type="cross-link" description="Glycyl lysine isopeptide (Lys-Gly) (interchain with G-Cter in ubiquitin)" evidence="36">
    <location>
        <position position="170"/>
    </location>
</feature>
<feature type="splice variant" id="VSP_041597" description="In isoform 2." evidence="51 52">
    <original>VEDAFYTLVREIRQHKLRKLNPPDESGPGCMSCKCVLS</original>
    <variation>SRSGSSSSSGTLWDPPGPM</variation>
    <location>
        <begin position="152"/>
        <end position="189"/>
    </location>
</feature>
<feature type="sequence variant" id="VAR_026106" description="In CSTLO; dbSNP:rs104894230." evidence="18 19 20">
    <original>G</original>
    <variation>A</variation>
    <location>
        <position position="12"/>
    </location>
</feature>
<feature type="sequence variant" id="VAR_045975" description="In CSTLO; dbSNP:rs104894229." evidence="20 25">
    <original>G</original>
    <variation>C</variation>
    <location>
        <position position="12"/>
    </location>
</feature>
<feature type="sequence variant" id="VAR_068816" description="In CSTLO; severe mutation; dbSNP:rs104894230." evidence="25">
    <original>G</original>
    <variation>D</variation>
    <location>
        <position position="12"/>
    </location>
</feature>
<feature type="sequence variant" id="VAR_045976" description="In CSTLO." evidence="20">
    <original>G</original>
    <variation>E</variation>
    <location>
        <position position="12"/>
    </location>
</feature>
<feature type="sequence variant" id="VAR_006837" description="In CSTLO and CMEMS; also found in patients with oral squamous cell carcinoma; dbSNP:rs104894229." evidence="14 18 19 20 22 24">
    <original>G</original>
    <variation>S</variation>
    <location>
        <position position="12"/>
    </location>
</feature>
<feature type="sequence variant" id="VAR_006836" description="In CSTLO, bladder carcinoma and CMEMS; constitutively activated; interacts and recruits PLCE1 to plasma membrane; dbSNP:rs104894230." evidence="6 15 18 24">
    <original>G</original>
    <variation>V</variation>
    <location>
        <position position="12"/>
    </location>
</feature>
<feature type="sequence variant" id="VAR_026107" description="In CSTLO; dbSNP:rs104894228." evidence="19">
    <original>G</original>
    <variation>C</variation>
    <location>
        <position position="13"/>
    </location>
</feature>
<feature type="sequence variant" id="VAR_026108" description="In CSTLO; dbSNP:rs104894226." evidence="18">
    <original>G</original>
    <variation>D</variation>
    <location>
        <position position="13"/>
    </location>
</feature>
<feature type="sequence variant" id="VAR_068817" description="In SFM; somatic mutation; shows constitutive activation of the MAPK and PI3K-AKT signaling pathways; dbSNP:rs104894228." evidence="31">
    <original>G</original>
    <variation>R</variation>
    <location>
        <position position="13"/>
    </location>
</feature>
<feature type="sequence variant" id="VAR_045977" description="In CMEMS; dbSNP:rs121917757." evidence="24">
    <original>Q</original>
    <variation>K</variation>
    <location>
        <position position="22"/>
    </location>
</feature>
<feature type="sequence variant" id="VAR_068818" description="In CSTLO." evidence="30">
    <original>E</original>
    <variation>EE</variation>
    <location>
        <position position="37"/>
    </location>
</feature>
<feature type="sequence variant" id="VAR_045978" description="In CSTLO; dbSNP:rs121917758." evidence="27">
    <original>T</original>
    <variation>I</variation>
    <location>
        <position position="58"/>
    </location>
</feature>
<feature type="sequence variant" id="VAR_045979" description="In NMTC2; somatic mutation; increases transformation of cultured cell lines; dbSNP:rs28933406." evidence="11 26">
    <original>Q</original>
    <variation>K</variation>
    <location>
        <position position="61"/>
    </location>
</feature>
<feature type="sequence variant" id="VAR_006838" description="In melanoma; strongly reduced GTP hydrolysis in the presence of RAF1; increases transformation of cultured cell lines; dbSNP:rs121913233." evidence="26">
    <original>Q</original>
    <variation>L</variation>
    <location>
        <position position="61"/>
    </location>
</feature>
<feature type="sequence variant" id="VAR_045980" description="In CMEMS; dbSNP:rs121917756." evidence="24">
    <original>E</original>
    <variation>K</variation>
    <location>
        <position position="63"/>
    </location>
</feature>
<feature type="sequence variant" id="VAR_078259" description="Found in a patient with severe fetal hydrops and pleural effusion; uncertain significance; decreased activation of Ras protein signal transduction; dbSNP:rs755322824." evidence="32">
    <original>S</original>
    <variation>C</variation>
    <location>
        <position position="89"/>
    </location>
</feature>
<feature type="sequence variant" id="VAR_045981" description="In CSTLO; dbSNP:rs104894227." evidence="20">
    <original>K</original>
    <variation>R</variation>
    <location>
        <position position="117"/>
    </location>
</feature>
<feature type="sequence variant" id="VAR_045982" description="In CSTLO; dbSNP:rs104894231." evidence="22">
    <original>A</original>
    <variation>T</variation>
    <location>
        <position position="146"/>
    </location>
</feature>
<feature type="sequence variant" id="VAR_045983" description="In CSTLO; dbSNP:rs121917759." evidence="27">
    <original>A</original>
    <variation>V</variation>
    <location>
        <position position="146"/>
    </location>
</feature>
<feature type="mutagenesis site" description="Dominant negative. Prevents PLCE1 EGF-induced recruitment to plasma membrane. No effect on subcellular location of isoform 2." evidence="6 13">
    <original>S</original>
    <variation>N</variation>
    <location>
        <position position="17"/>
    </location>
</feature>
<feature type="mutagenesis site" description="Loss of interaction with PLCE1; when associated with V-12." evidence="6">
    <original>N</original>
    <variation>G</variation>
    <location>
        <position position="26"/>
    </location>
</feature>
<feature type="mutagenesis site" description="No effect on interaction with PLCE1; when associated with V-12." evidence="6">
    <original>V</original>
    <variation>A</variation>
    <location>
        <position position="29"/>
    </location>
</feature>
<feature type="mutagenesis site" description="Loss of interaction and recruitment to plasma membrane of PLCE1; when associated with V-12." evidence="6">
    <original>Y</original>
    <variation>F</variation>
    <location>
        <position position="32"/>
    </location>
</feature>
<feature type="mutagenesis site" description="No effect on interaction with PLCE1; when associated with V-12." evidence="6">
    <original>P</original>
    <variation>G</variation>
    <location>
        <position position="34"/>
    </location>
</feature>
<feature type="mutagenesis site" description="Loss of interaction with PLCE1; when associated with V-12." evidence="6">
    <original>T</original>
    <variation>S</variation>
    <location>
        <position position="35"/>
    </location>
</feature>
<feature type="mutagenesis site" description="No effect on interaction with PLCE1; when associated with V-12." evidence="6">
    <original>E</original>
    <variation>G</variation>
    <location>
        <position position="37"/>
    </location>
</feature>
<feature type="mutagenesis site" description="No effect on interaction with PLCE1; when associated with V-12." evidence="6">
    <original>D</original>
    <variation>N</variation>
    <location>
        <position position="38"/>
    </location>
</feature>
<feature type="mutagenesis site" description="No effect on interaction with PLCE1; when associated with V-12." evidence="6">
    <original>S</original>
    <variation>C</variation>
    <location>
        <position position="39"/>
    </location>
</feature>
<feature type="mutagenesis site" description="Loss of GTPase activity and creation of an autophosphorylation site.">
    <original>A</original>
    <variation>T</variation>
    <location>
        <position position="59"/>
    </location>
</feature>
<feature type="mutagenesis site" description="Moderately increased transformation of cultured cell lines." evidence="26">
    <original>Q</original>
    <variation>I</variation>
    <location>
        <position position="61"/>
    </location>
</feature>
<feature type="mutagenesis site" description="Promotes interaction with SHOC2 and PP1C." evidence="40">
    <original>Q</original>
    <variation>R</variation>
    <location>
        <position position="61"/>
    </location>
</feature>
<feature type="mutagenesis site" description="Strongly increased transformation of cultured cell lines." evidence="26">
    <original>Q</original>
    <variation>V</variation>
    <location>
        <position position="61"/>
    </location>
</feature>
<feature type="mutagenesis site" description="GTP-binding activity reduced by factor of 30." evidence="37">
    <original>A</original>
    <variation>T</variation>
    <location>
        <position position="83"/>
    </location>
</feature>
<feature type="mutagenesis site" description="Abolishes S-nitrosylation. No stimulation of guanine nucleotide exchange." evidence="12 48">
    <original>C</original>
    <variation>S</variation>
    <location>
        <position position="118"/>
    </location>
</feature>
<feature type="mutagenesis site" description="Loss of GTP-binding activity." evidence="37">
    <original>D</original>
    <variation>N</variation>
    <location>
        <position position="119"/>
    </location>
</feature>
<feature type="mutagenesis site" description="GTP-binding activity reduced by factor of 25." evidence="37">
    <original>T</original>
    <variation>I</variation>
    <location>
        <position position="144"/>
    </location>
</feature>
<feature type="mutagenesis site" description="Loss of GTP-binding activity." evidence="35">
    <original>RQ</original>
    <variation>AV</variation>
    <location>
        <begin position="164"/>
        <end position="165"/>
    </location>
</feature>
<feature type="mutagenesis site" description="In H-Ras-3KR mutant; decreased fatty-acylation." evidence="34">
    <original>KLRKLNPPDESGPGCMSCK</original>
    <variation>RLRRLNPPDESGPGCMSCR</variation>
    <location>
        <begin position="167"/>
        <end position="185"/>
    </location>
</feature>
<feature type="mutagenesis site" description="Increased Ras signaling due to impaired ubiquitination." evidence="36">
    <original>K</original>
    <variation>R</variation>
    <location>
        <position position="170"/>
    </location>
</feature>
<feature type="mutagenesis site" description="Exclusively localized in Golgi. Non-specifically localized on all endomembranes; when associated with S-184." evidence="16 47">
    <original>C</original>
    <variation>S</variation>
    <location>
        <position position="181"/>
    </location>
</feature>
<feature type="mutagenesis site" description="Loss of S-(15-deoxy-Delta12,14-prostaglandin J2-9-yl)cysteine stimulation of Ras-GTPase activity. Mainly localized in Golgi. Non-specifically localized on all endomembranes; when associated with S-181." evidence="10 16 47">
    <original>C</original>
    <variation>S</variation>
    <location>
        <position position="184"/>
    </location>
</feature>
<feature type="strand" evidence="84">
    <location>
        <begin position="3"/>
        <end position="11"/>
    </location>
</feature>
<feature type="strand" evidence="86">
    <location>
        <begin position="12"/>
        <end position="15"/>
    </location>
</feature>
<feature type="helix" evidence="84">
    <location>
        <begin position="16"/>
        <end position="25"/>
    </location>
</feature>
<feature type="strand" evidence="82">
    <location>
        <begin position="27"/>
        <end position="31"/>
    </location>
</feature>
<feature type="strand" evidence="83">
    <location>
        <begin position="34"/>
        <end position="37"/>
    </location>
</feature>
<feature type="strand" evidence="84">
    <location>
        <begin position="38"/>
        <end position="46"/>
    </location>
</feature>
<feature type="strand" evidence="84">
    <location>
        <begin position="49"/>
        <end position="57"/>
    </location>
</feature>
<feature type="strand" evidence="85">
    <location>
        <begin position="60"/>
        <end position="63"/>
    </location>
</feature>
<feature type="helix" evidence="84">
    <location>
        <begin position="66"/>
        <end position="74"/>
    </location>
</feature>
<feature type="strand" evidence="84">
    <location>
        <begin position="76"/>
        <end position="83"/>
    </location>
</feature>
<feature type="turn" evidence="81">
    <location>
        <begin position="84"/>
        <end position="86"/>
    </location>
</feature>
<feature type="helix" evidence="84">
    <location>
        <begin position="87"/>
        <end position="104"/>
    </location>
</feature>
<feature type="strand" evidence="87">
    <location>
        <begin position="105"/>
        <end position="107"/>
    </location>
</feature>
<feature type="strand" evidence="84">
    <location>
        <begin position="111"/>
        <end position="116"/>
    </location>
</feature>
<feature type="strand" evidence="85">
    <location>
        <begin position="120"/>
        <end position="122"/>
    </location>
</feature>
<feature type="helix" evidence="84">
    <location>
        <begin position="127"/>
        <end position="136"/>
    </location>
</feature>
<feature type="strand" evidence="84">
    <location>
        <begin position="141"/>
        <end position="144"/>
    </location>
</feature>
<feature type="turn" evidence="84">
    <location>
        <begin position="146"/>
        <end position="148"/>
    </location>
</feature>
<feature type="helix" evidence="84">
    <location>
        <begin position="152"/>
        <end position="164"/>
    </location>
</feature>
<organism>
    <name type="scientific">Homo sapiens</name>
    <name type="common">Human</name>
    <dbReference type="NCBI Taxonomy" id="9606"/>
    <lineage>
        <taxon>Eukaryota</taxon>
        <taxon>Metazoa</taxon>
        <taxon>Chordata</taxon>
        <taxon>Craniata</taxon>
        <taxon>Vertebrata</taxon>
        <taxon>Euteleostomi</taxon>
        <taxon>Mammalia</taxon>
        <taxon>Eutheria</taxon>
        <taxon>Euarchontoglires</taxon>
        <taxon>Primates</taxon>
        <taxon>Haplorrhini</taxon>
        <taxon>Catarrhini</taxon>
        <taxon>Hominidae</taxon>
        <taxon>Homo</taxon>
    </lineage>
</organism>
<keyword id="KW-0002">3D-structure</keyword>
<keyword id="KW-0007">Acetylation</keyword>
<keyword id="KW-0025">Alternative splicing</keyword>
<keyword id="KW-1003">Cell membrane</keyword>
<keyword id="KW-0963">Cytoplasm</keyword>
<keyword id="KW-0903">Direct protein sequencing</keyword>
<keyword id="KW-0225">Disease variant</keyword>
<keyword id="KW-0325">Glycoprotein</keyword>
<keyword id="KW-0333">Golgi apparatus</keyword>
<keyword id="KW-0342">GTP-binding</keyword>
<keyword id="KW-0378">Hydrolase</keyword>
<keyword id="KW-1017">Isopeptide bond</keyword>
<keyword id="KW-0449">Lipoprotein</keyword>
<keyword id="KW-0472">Membrane</keyword>
<keyword id="KW-0488">Methylation</keyword>
<keyword id="KW-0547">Nucleotide-binding</keyword>
<keyword id="KW-0539">Nucleus</keyword>
<keyword id="KW-0564">Palmitate</keyword>
<keyword id="KW-0636">Prenylation</keyword>
<keyword id="KW-1267">Proteomics identification</keyword>
<keyword id="KW-0656">Proto-oncogene</keyword>
<keyword id="KW-1185">Reference proteome</keyword>
<keyword id="KW-0702">S-nitrosylation</keyword>
<keyword id="KW-0832">Ubl conjugation</keyword>
<gene>
    <name type="primary">HRAS</name>
    <name type="synonym">HRAS1</name>
</gene>
<accession>P01112</accession>
<accession>B5BUA0</accession>
<accession>Q14080</accession>
<accession>Q6FHV9</accession>
<accession>Q9BR65</accession>
<accession>Q9UCE2</accession>
<sequence>MTEYKLVVVGAGGVGKSALTIQLIQNHFVDEYDPTIEDSYRKQVVIDGETCLLDILDTAGQEEYSAMRDQYMRTGEGFLCVFAINNTKSFEDIHQYREQIKRVKDSDDVPMVLVGNKCDLAARTVESRQAQDLARSYGIPYIETSAKTRQGVEDAFYTLVREIRQHKLRKLNPPDESGPGCMSCKCVLS</sequence>
<dbReference type="EC" id="3.6.5.2" evidence="48"/>
<dbReference type="EMBL" id="J00277">
    <property type="protein sequence ID" value="AAB02605.1"/>
    <property type="molecule type" value="Genomic_DNA"/>
</dbReference>
<dbReference type="EMBL" id="AJ437024">
    <property type="protein sequence ID" value="CAD24594.1"/>
    <property type="molecule type" value="mRNA"/>
</dbReference>
<dbReference type="EMBL" id="AF493916">
    <property type="protein sequence ID" value="AAM12630.1"/>
    <property type="molecule type" value="mRNA"/>
</dbReference>
<dbReference type="EMBL" id="CR536579">
    <property type="protein sequence ID" value="CAG38816.1"/>
    <property type="molecule type" value="mRNA"/>
</dbReference>
<dbReference type="EMBL" id="CR542271">
    <property type="protein sequence ID" value="CAG47067.1"/>
    <property type="molecule type" value="mRNA"/>
</dbReference>
<dbReference type="EMBL" id="BT019421">
    <property type="protein sequence ID" value="AAV38228.1"/>
    <property type="molecule type" value="mRNA"/>
</dbReference>
<dbReference type="EMBL" id="EF015887">
    <property type="protein sequence ID" value="ABI97389.1"/>
    <property type="molecule type" value="Genomic_DNA"/>
</dbReference>
<dbReference type="EMBL" id="AB451336">
    <property type="protein sequence ID" value="BAG70150.1"/>
    <property type="molecule type" value="mRNA"/>
</dbReference>
<dbReference type="EMBL" id="AB451485">
    <property type="protein sequence ID" value="BAG70299.1"/>
    <property type="molecule type" value="mRNA"/>
</dbReference>
<dbReference type="EMBL" id="CH471158">
    <property type="protein sequence ID" value="EAX02337.1"/>
    <property type="molecule type" value="Genomic_DNA"/>
</dbReference>
<dbReference type="EMBL" id="CH471158">
    <property type="protein sequence ID" value="EAX02338.1"/>
    <property type="molecule type" value="Genomic_DNA"/>
</dbReference>
<dbReference type="EMBL" id="BC006499">
    <property type="protein sequence ID" value="AAH06499.1"/>
    <property type="molecule type" value="mRNA"/>
</dbReference>
<dbReference type="EMBL" id="BC095471">
    <property type="protein sequence ID" value="AAH95471.1"/>
    <property type="molecule type" value="mRNA"/>
</dbReference>
<dbReference type="EMBL" id="M17232">
    <property type="protein sequence ID" value="AAA35685.1"/>
    <property type="molecule type" value="Genomic_DNA"/>
</dbReference>
<dbReference type="CCDS" id="CCDS7698.1">
    <molecule id="P01112-1"/>
</dbReference>
<dbReference type="CCDS" id="CCDS7699.1">
    <molecule id="P01112-2"/>
</dbReference>
<dbReference type="PIR" id="A93299">
    <property type="entry name" value="TVHUH"/>
</dbReference>
<dbReference type="RefSeq" id="NP_001123914.1">
    <molecule id="P01112-1"/>
    <property type="nucleotide sequence ID" value="NM_001130442.3"/>
</dbReference>
<dbReference type="RefSeq" id="NP_001304983.1">
    <property type="nucleotide sequence ID" value="NM_001318054.1"/>
</dbReference>
<dbReference type="RefSeq" id="NP_005334.1">
    <molecule id="P01112-1"/>
    <property type="nucleotide sequence ID" value="NM_005343.4"/>
</dbReference>
<dbReference type="RefSeq" id="NP_789765.1">
    <molecule id="P01112-2"/>
    <property type="nucleotide sequence ID" value="NM_176795.5"/>
</dbReference>
<dbReference type="RefSeq" id="XP_054224585.1">
    <molecule id="P01112-1"/>
    <property type="nucleotide sequence ID" value="XM_054368610.1"/>
</dbReference>
<dbReference type="PDB" id="121P">
    <property type="method" value="X-ray"/>
    <property type="resolution" value="1.54 A"/>
    <property type="chains" value="A=1-166"/>
</dbReference>
<dbReference type="PDB" id="1AA9">
    <property type="method" value="NMR"/>
    <property type="chains" value="A=1-171"/>
</dbReference>
<dbReference type="PDB" id="1AGP">
    <property type="method" value="X-ray"/>
    <property type="resolution" value="2.30 A"/>
    <property type="chains" value="A=1-166"/>
</dbReference>
<dbReference type="PDB" id="1BKD">
    <property type="method" value="X-ray"/>
    <property type="resolution" value="2.80 A"/>
    <property type="chains" value="R=1-166"/>
</dbReference>
<dbReference type="PDB" id="1CLU">
    <property type="method" value="X-ray"/>
    <property type="resolution" value="1.70 A"/>
    <property type="chains" value="A=1-166"/>
</dbReference>
<dbReference type="PDB" id="1CRP">
    <property type="method" value="NMR"/>
    <property type="chains" value="A=1-166"/>
</dbReference>
<dbReference type="PDB" id="1CRQ">
    <property type="method" value="NMR"/>
    <property type="chains" value="A=1-166"/>
</dbReference>
<dbReference type="PDB" id="1CRR">
    <property type="method" value="NMR"/>
    <property type="chains" value="A=1-166"/>
</dbReference>
<dbReference type="PDB" id="1CTQ">
    <property type="method" value="X-ray"/>
    <property type="resolution" value="1.26 A"/>
    <property type="chains" value="A=1-166"/>
</dbReference>
<dbReference type="PDB" id="1GNP">
    <property type="method" value="X-ray"/>
    <property type="resolution" value="2.70 A"/>
    <property type="chains" value="A=1-166"/>
</dbReference>
<dbReference type="PDB" id="1GNQ">
    <property type="method" value="X-ray"/>
    <property type="resolution" value="2.50 A"/>
    <property type="chains" value="A=1-166"/>
</dbReference>
<dbReference type="PDB" id="1GNR">
    <property type="method" value="X-ray"/>
    <property type="resolution" value="1.85 A"/>
    <property type="chains" value="A=1-166"/>
</dbReference>
<dbReference type="PDB" id="1HE8">
    <property type="method" value="X-ray"/>
    <property type="resolution" value="3.00 A"/>
    <property type="chains" value="B=1-166"/>
</dbReference>
<dbReference type="PDB" id="1IAQ">
    <property type="method" value="X-ray"/>
    <property type="resolution" value="2.90 A"/>
    <property type="chains" value="A/B/C=1-166"/>
</dbReference>
<dbReference type="PDB" id="1IOZ">
    <property type="method" value="X-ray"/>
    <property type="resolution" value="2.00 A"/>
    <property type="chains" value="A=1-171"/>
</dbReference>
<dbReference type="PDB" id="1JAH">
    <property type="method" value="X-ray"/>
    <property type="resolution" value="1.80 A"/>
    <property type="chains" value="A=1-166"/>
</dbReference>
<dbReference type="PDB" id="1JAI">
    <property type="method" value="X-ray"/>
    <property type="resolution" value="1.80 A"/>
    <property type="chains" value="A=1-166"/>
</dbReference>
<dbReference type="PDB" id="1K8R">
    <property type="method" value="X-ray"/>
    <property type="resolution" value="3.00 A"/>
    <property type="chains" value="A=1-166"/>
</dbReference>
<dbReference type="PDB" id="1LF0">
    <property type="method" value="X-ray"/>
    <property type="resolution" value="1.70 A"/>
    <property type="chains" value="A=1-166"/>
</dbReference>
<dbReference type="PDB" id="1LF5">
    <property type="method" value="X-ray"/>
    <property type="resolution" value="1.70 A"/>
    <property type="chains" value="A=1-166"/>
</dbReference>
<dbReference type="PDB" id="1LFD">
    <property type="method" value="X-ray"/>
    <property type="resolution" value="2.10 A"/>
    <property type="chains" value="B/D=1-167"/>
</dbReference>
<dbReference type="PDB" id="1NVU">
    <property type="method" value="X-ray"/>
    <property type="resolution" value="2.20 A"/>
    <property type="chains" value="Q/R=1-166"/>
</dbReference>
<dbReference type="PDB" id="1NVV">
    <property type="method" value="X-ray"/>
    <property type="resolution" value="2.18 A"/>
    <property type="chains" value="Q/R=1-166"/>
</dbReference>
<dbReference type="PDB" id="1NVW">
    <property type="method" value="X-ray"/>
    <property type="resolution" value="2.70 A"/>
    <property type="chains" value="Q/R=1-166"/>
</dbReference>
<dbReference type="PDB" id="1NVX">
    <property type="method" value="X-ray"/>
    <property type="resolution" value="3.20 A"/>
    <property type="chains" value="Q/R=1-166"/>
</dbReference>
<dbReference type="PDB" id="1P2S">
    <property type="method" value="X-ray"/>
    <property type="resolution" value="2.45 A"/>
    <property type="chains" value="A=1-166"/>
</dbReference>
<dbReference type="PDB" id="1P2T">
    <property type="method" value="X-ray"/>
    <property type="resolution" value="2.00 A"/>
    <property type="chains" value="A=1-166"/>
</dbReference>
<dbReference type="PDB" id="1P2U">
    <property type="method" value="X-ray"/>
    <property type="resolution" value="2.00 A"/>
    <property type="chains" value="A=1-166"/>
</dbReference>
<dbReference type="PDB" id="1P2V">
    <property type="method" value="X-ray"/>
    <property type="resolution" value="2.30 A"/>
    <property type="chains" value="A=1-166"/>
</dbReference>
<dbReference type="PDB" id="1PLJ">
    <property type="method" value="X-ray"/>
    <property type="resolution" value="2.80 A"/>
    <property type="chains" value="A=1-166"/>
</dbReference>
<dbReference type="PDB" id="1PLK">
    <property type="method" value="X-ray"/>
    <property type="resolution" value="2.80 A"/>
    <property type="chains" value="A=1-166"/>
</dbReference>
<dbReference type="PDB" id="1PLL">
    <property type="method" value="X-ray"/>
    <property type="resolution" value="2.80 A"/>
    <property type="chains" value="A=1-166"/>
</dbReference>
<dbReference type="PDB" id="1Q21">
    <property type="method" value="X-ray"/>
    <property type="resolution" value="2.20 A"/>
    <property type="chains" value="A=1-171"/>
</dbReference>
<dbReference type="PDB" id="1QRA">
    <property type="method" value="X-ray"/>
    <property type="resolution" value="1.60 A"/>
    <property type="chains" value="A=1-166"/>
</dbReference>
<dbReference type="PDB" id="1RVD">
    <property type="method" value="X-ray"/>
    <property type="resolution" value="1.90 A"/>
    <property type="chains" value="A=1-166"/>
</dbReference>
<dbReference type="PDB" id="1WQ1">
    <property type="method" value="X-ray"/>
    <property type="resolution" value="2.50 A"/>
    <property type="chains" value="R=1-166"/>
</dbReference>
<dbReference type="PDB" id="1XCM">
    <property type="method" value="X-ray"/>
    <property type="resolution" value="1.84 A"/>
    <property type="chains" value="A=1-167"/>
</dbReference>
<dbReference type="PDB" id="1XD2">
    <property type="method" value="X-ray"/>
    <property type="resolution" value="2.70 A"/>
    <property type="chains" value="A/B=1-166"/>
</dbReference>
<dbReference type="PDB" id="1XJ0">
    <property type="method" value="X-ray"/>
    <property type="resolution" value="1.70 A"/>
    <property type="chains" value="A=1-166"/>
</dbReference>
<dbReference type="PDB" id="1ZVQ">
    <property type="method" value="X-ray"/>
    <property type="resolution" value="2.00 A"/>
    <property type="chains" value="A=1-166"/>
</dbReference>
<dbReference type="PDB" id="1ZW6">
    <property type="method" value="X-ray"/>
    <property type="resolution" value="1.50 A"/>
    <property type="chains" value="A=1-166"/>
</dbReference>
<dbReference type="PDB" id="221P">
    <property type="method" value="X-ray"/>
    <property type="resolution" value="2.30 A"/>
    <property type="chains" value="A=1-166"/>
</dbReference>
<dbReference type="PDB" id="2C5L">
    <property type="method" value="X-ray"/>
    <property type="resolution" value="1.90 A"/>
    <property type="chains" value="A/B=1-166"/>
</dbReference>
<dbReference type="PDB" id="2CE2">
    <property type="method" value="X-ray"/>
    <property type="resolution" value="1.00 A"/>
    <property type="chains" value="X=1-166"/>
</dbReference>
<dbReference type="PDB" id="2CL0">
    <property type="method" value="X-ray"/>
    <property type="resolution" value="1.80 A"/>
    <property type="chains" value="X=1-166"/>
</dbReference>
<dbReference type="PDB" id="2CL6">
    <property type="method" value="X-ray"/>
    <property type="resolution" value="1.24 A"/>
    <property type="chains" value="X=1-166"/>
</dbReference>
<dbReference type="PDB" id="2CL7">
    <property type="method" value="X-ray"/>
    <property type="resolution" value="1.25 A"/>
    <property type="chains" value="X=1-166"/>
</dbReference>
<dbReference type="PDB" id="2CLC">
    <property type="method" value="X-ray"/>
    <property type="resolution" value="1.30 A"/>
    <property type="chains" value="X=1-166"/>
</dbReference>
<dbReference type="PDB" id="2CLD">
    <property type="method" value="X-ray"/>
    <property type="resolution" value="1.22 A"/>
    <property type="chains" value="X=1-166"/>
</dbReference>
<dbReference type="PDB" id="2EVW">
    <property type="method" value="X-ray"/>
    <property type="resolution" value="1.05 A"/>
    <property type="chains" value="X=1-166"/>
</dbReference>
<dbReference type="PDB" id="2LCF">
    <property type="method" value="NMR"/>
    <property type="chains" value="A=1-166"/>
</dbReference>
<dbReference type="PDB" id="2LWI">
    <property type="method" value="NMR"/>
    <property type="chains" value="A=1-166"/>
</dbReference>
<dbReference type="PDB" id="2N42">
    <property type="method" value="NMR"/>
    <property type="chains" value="A=1-166"/>
</dbReference>
<dbReference type="PDB" id="2N46">
    <property type="method" value="NMR"/>
    <property type="chains" value="A=1-166"/>
</dbReference>
<dbReference type="PDB" id="2Q21">
    <property type="method" value="X-ray"/>
    <property type="resolution" value="2.20 A"/>
    <property type="chains" value="A=1-171"/>
</dbReference>
<dbReference type="PDB" id="2QUZ">
    <property type="method" value="X-ray"/>
    <property type="resolution" value="1.49 A"/>
    <property type="chains" value="A=1-166"/>
</dbReference>
<dbReference type="PDB" id="2RGA">
    <property type="method" value="X-ray"/>
    <property type="resolution" value="1.90 A"/>
    <property type="chains" value="A=1-166"/>
</dbReference>
<dbReference type="PDB" id="2RGB">
    <property type="method" value="X-ray"/>
    <property type="resolution" value="1.35 A"/>
    <property type="chains" value="A=1-166"/>
</dbReference>
<dbReference type="PDB" id="2RGC">
    <property type="method" value="X-ray"/>
    <property type="resolution" value="1.60 A"/>
    <property type="chains" value="A=1-166"/>
</dbReference>
<dbReference type="PDB" id="2RGD">
    <property type="method" value="X-ray"/>
    <property type="resolution" value="2.00 A"/>
    <property type="chains" value="A=1-166"/>
</dbReference>
<dbReference type="PDB" id="2RGE">
    <property type="method" value="X-ray"/>
    <property type="resolution" value="1.40 A"/>
    <property type="chains" value="A=1-166"/>
</dbReference>
<dbReference type="PDB" id="2RGG">
    <property type="method" value="X-ray"/>
    <property type="resolution" value="1.45 A"/>
    <property type="chains" value="A=1-166"/>
</dbReference>
<dbReference type="PDB" id="2UZI">
    <property type="method" value="X-ray"/>
    <property type="resolution" value="2.00 A"/>
    <property type="chains" value="R=1-166"/>
</dbReference>
<dbReference type="PDB" id="2VH5">
    <property type="method" value="X-ray"/>
    <property type="resolution" value="2.70 A"/>
    <property type="chains" value="R=1-166"/>
</dbReference>
<dbReference type="PDB" id="2X1V">
    <property type="method" value="X-ray"/>
    <property type="resolution" value="1.70 A"/>
    <property type="chains" value="A=1-166"/>
</dbReference>
<dbReference type="PDB" id="3DDC">
    <property type="method" value="X-ray"/>
    <property type="resolution" value="1.80 A"/>
    <property type="chains" value="A=1-166"/>
</dbReference>
<dbReference type="PDB" id="3I3S">
    <property type="method" value="X-ray"/>
    <property type="resolution" value="1.36 A"/>
    <property type="chains" value="R=1-166"/>
</dbReference>
<dbReference type="PDB" id="3K8Y">
    <property type="method" value="X-ray"/>
    <property type="resolution" value="1.30 A"/>
    <property type="chains" value="A=1-166"/>
</dbReference>
<dbReference type="PDB" id="3K9L">
    <property type="method" value="X-ray"/>
    <property type="resolution" value="1.80 A"/>
    <property type="chains" value="A/B/C=1-166"/>
</dbReference>
<dbReference type="PDB" id="3K9N">
    <property type="method" value="X-ray"/>
    <property type="resolution" value="2.00 A"/>
    <property type="chains" value="A=1-166"/>
</dbReference>
<dbReference type="PDB" id="3KKM">
    <property type="method" value="X-ray"/>
    <property type="resolution" value="1.70 A"/>
    <property type="chains" value="A=1-166"/>
</dbReference>
<dbReference type="PDB" id="3KKN">
    <property type="method" value="X-ray"/>
    <property type="resolution" value="2.09 A"/>
    <property type="chains" value="A=1-166"/>
</dbReference>
<dbReference type="PDB" id="3KUD">
    <property type="method" value="X-ray"/>
    <property type="resolution" value="2.15 A"/>
    <property type="chains" value="A=1-166"/>
</dbReference>
<dbReference type="PDB" id="3L8Y">
    <property type="method" value="X-ray"/>
    <property type="resolution" value="2.02 A"/>
    <property type="chains" value="A=1-166"/>
</dbReference>
<dbReference type="PDB" id="3L8Z">
    <property type="method" value="X-ray"/>
    <property type="resolution" value="1.44 A"/>
    <property type="chains" value="A=1-166"/>
</dbReference>
<dbReference type="PDB" id="3LBH">
    <property type="method" value="X-ray"/>
    <property type="resolution" value="1.85 A"/>
    <property type="chains" value="A=1-166"/>
</dbReference>
<dbReference type="PDB" id="3LBI">
    <property type="method" value="X-ray"/>
    <property type="resolution" value="2.09 A"/>
    <property type="chains" value="A=1-166"/>
</dbReference>
<dbReference type="PDB" id="3LBN">
    <property type="method" value="X-ray"/>
    <property type="resolution" value="1.86 A"/>
    <property type="chains" value="A=1-166"/>
</dbReference>
<dbReference type="PDB" id="3LO5">
    <property type="method" value="X-ray"/>
    <property type="resolution" value="2.57 A"/>
    <property type="chains" value="A/C/E=1-166"/>
</dbReference>
<dbReference type="PDB" id="3OIU">
    <property type="method" value="X-ray"/>
    <property type="resolution" value="1.32 A"/>
    <property type="chains" value="A=1-166"/>
</dbReference>
<dbReference type="PDB" id="3OIV">
    <property type="method" value="X-ray"/>
    <property type="resolution" value="1.84 A"/>
    <property type="chains" value="A=1-166"/>
</dbReference>
<dbReference type="PDB" id="3OIW">
    <property type="method" value="X-ray"/>
    <property type="resolution" value="1.30 A"/>
    <property type="chains" value="A=1-166"/>
</dbReference>
<dbReference type="PDB" id="3RRY">
    <property type="method" value="X-ray"/>
    <property type="resolution" value="1.60 A"/>
    <property type="chains" value="A=1-166"/>
</dbReference>
<dbReference type="PDB" id="3RRZ">
    <property type="method" value="X-ray"/>
    <property type="resolution" value="1.60 A"/>
    <property type="chains" value="A=1-166"/>
</dbReference>
<dbReference type="PDB" id="3RS0">
    <property type="method" value="X-ray"/>
    <property type="resolution" value="1.40 A"/>
    <property type="chains" value="A=1-166"/>
</dbReference>
<dbReference type="PDB" id="3RS2">
    <property type="method" value="X-ray"/>
    <property type="resolution" value="1.84 A"/>
    <property type="chains" value="A=1-166"/>
</dbReference>
<dbReference type="PDB" id="3RS3">
    <property type="method" value="X-ray"/>
    <property type="resolution" value="1.52 A"/>
    <property type="chains" value="A=1-166"/>
</dbReference>
<dbReference type="PDB" id="3RS4">
    <property type="method" value="X-ray"/>
    <property type="resolution" value="1.70 A"/>
    <property type="chains" value="A=1-166"/>
</dbReference>
<dbReference type="PDB" id="3RS5">
    <property type="method" value="X-ray"/>
    <property type="resolution" value="1.68 A"/>
    <property type="chains" value="A=1-166"/>
</dbReference>
<dbReference type="PDB" id="3RS7">
    <property type="method" value="X-ray"/>
    <property type="resolution" value="1.70 A"/>
    <property type="chains" value="A=1-166"/>
</dbReference>
<dbReference type="PDB" id="3RSL">
    <property type="method" value="X-ray"/>
    <property type="resolution" value="1.70 A"/>
    <property type="chains" value="A=1-166"/>
</dbReference>
<dbReference type="PDB" id="3RSO">
    <property type="method" value="X-ray"/>
    <property type="resolution" value="1.60 A"/>
    <property type="chains" value="A=1-166"/>
</dbReference>
<dbReference type="PDB" id="3TGP">
    <property type="method" value="X-ray"/>
    <property type="resolution" value="1.31 A"/>
    <property type="chains" value="A=1-166"/>
</dbReference>
<dbReference type="PDB" id="421P">
    <property type="method" value="X-ray"/>
    <property type="resolution" value="2.20 A"/>
    <property type="chains" value="A=1-166"/>
</dbReference>
<dbReference type="PDB" id="4DLR">
    <property type="method" value="X-ray"/>
    <property type="resolution" value="1.32 A"/>
    <property type="chains" value="A=1-166"/>
</dbReference>
<dbReference type="PDB" id="4DLS">
    <property type="method" value="X-ray"/>
    <property type="resolution" value="1.82 A"/>
    <property type="chains" value="A=1-166"/>
</dbReference>
<dbReference type="PDB" id="4DLT">
    <property type="method" value="X-ray"/>
    <property type="resolution" value="1.70 A"/>
    <property type="chains" value="A=1-166"/>
</dbReference>
<dbReference type="PDB" id="4DLU">
    <property type="method" value="X-ray"/>
    <property type="resolution" value="1.60 A"/>
    <property type="chains" value="A=1-166"/>
</dbReference>
<dbReference type="PDB" id="4DLV">
    <property type="method" value="X-ray"/>
    <property type="resolution" value="1.57 A"/>
    <property type="chains" value="A=1-166"/>
</dbReference>
<dbReference type="PDB" id="4DLW">
    <property type="method" value="X-ray"/>
    <property type="resolution" value="1.72 A"/>
    <property type="chains" value="A=1-166"/>
</dbReference>
<dbReference type="PDB" id="4DLX">
    <property type="method" value="X-ray"/>
    <property type="resolution" value="1.73 A"/>
    <property type="chains" value="A=1-166"/>
</dbReference>
<dbReference type="PDB" id="4DLY">
    <property type="method" value="X-ray"/>
    <property type="resolution" value="1.57 A"/>
    <property type="chains" value="A=1-166"/>
</dbReference>
<dbReference type="PDB" id="4DLZ">
    <property type="method" value="X-ray"/>
    <property type="resolution" value="1.66 A"/>
    <property type="chains" value="A=1-166"/>
</dbReference>
<dbReference type="PDB" id="4DST">
    <property type="method" value="X-ray"/>
    <property type="resolution" value="2.30 A"/>
    <property type="chains" value="A=2-167"/>
</dbReference>
<dbReference type="PDB" id="4DSU">
    <property type="method" value="X-ray"/>
    <property type="resolution" value="1.70 A"/>
    <property type="chains" value="A=2-167"/>
</dbReference>
<dbReference type="PDB" id="4EFL">
    <property type="method" value="X-ray"/>
    <property type="resolution" value="1.90 A"/>
    <property type="chains" value="A=1-166"/>
</dbReference>
<dbReference type="PDB" id="4EFM">
    <property type="method" value="X-ray"/>
    <property type="resolution" value="1.90 A"/>
    <property type="chains" value="A=1-166"/>
</dbReference>
<dbReference type="PDB" id="4EFN">
    <property type="method" value="X-ray"/>
    <property type="resolution" value="2.30 A"/>
    <property type="chains" value="A=1-166"/>
</dbReference>
<dbReference type="PDB" id="4G0N">
    <property type="method" value="X-ray"/>
    <property type="resolution" value="2.45 A"/>
    <property type="chains" value="A=1-166"/>
</dbReference>
<dbReference type="PDB" id="4G3X">
    <property type="method" value="X-ray"/>
    <property type="resolution" value="3.25 A"/>
    <property type="chains" value="A=1-166"/>
</dbReference>
<dbReference type="PDB" id="4K81">
    <property type="method" value="X-ray"/>
    <property type="resolution" value="2.40 A"/>
    <property type="chains" value="B/D/F/H=1-166"/>
</dbReference>
<dbReference type="PDB" id="4L9S">
    <property type="method" value="X-ray"/>
    <property type="resolution" value="1.61 A"/>
    <property type="chains" value="A=1-166"/>
</dbReference>
<dbReference type="PDB" id="4L9W">
    <property type="method" value="X-ray"/>
    <property type="resolution" value="1.95 A"/>
    <property type="chains" value="A=1-166"/>
</dbReference>
<dbReference type="PDB" id="4NYI">
    <property type="method" value="X-ray"/>
    <property type="resolution" value="2.96 A"/>
    <property type="chains" value="Q/R=1-166"/>
</dbReference>
<dbReference type="PDB" id="4NYJ">
    <property type="method" value="X-ray"/>
    <property type="resolution" value="2.85 A"/>
    <property type="chains" value="Q/R=1-166"/>
</dbReference>
<dbReference type="PDB" id="4NYM">
    <property type="method" value="X-ray"/>
    <property type="resolution" value="3.55 A"/>
    <property type="chains" value="Q/R=1-166"/>
</dbReference>
<dbReference type="PDB" id="4Q21">
    <property type="method" value="X-ray"/>
    <property type="resolution" value="2.00 A"/>
    <property type="chains" value="A=1-189"/>
</dbReference>
<dbReference type="PDB" id="4RSG">
    <property type="method" value="Neutron"/>
    <property type="resolution" value="1.91 A"/>
    <property type="chains" value="A=1-166"/>
</dbReference>
<dbReference type="PDB" id="4URU">
    <property type="method" value="X-ray"/>
    <property type="resolution" value="2.83 A"/>
    <property type="chains" value="R=1-166"/>
</dbReference>
<dbReference type="PDB" id="4URV">
    <property type="method" value="X-ray"/>
    <property type="resolution" value="2.58 A"/>
    <property type="chains" value="R=1-166"/>
</dbReference>
<dbReference type="PDB" id="4URW">
    <property type="method" value="X-ray"/>
    <property type="resolution" value="2.76 A"/>
    <property type="chains" value="R=1-166"/>
</dbReference>
<dbReference type="PDB" id="4URX">
    <property type="method" value="X-ray"/>
    <property type="resolution" value="2.49 A"/>
    <property type="chains" value="R=1-166"/>
</dbReference>
<dbReference type="PDB" id="4URY">
    <property type="method" value="X-ray"/>
    <property type="resolution" value="2.47 A"/>
    <property type="chains" value="R=1-166"/>
</dbReference>
<dbReference type="PDB" id="4URZ">
    <property type="method" value="X-ray"/>
    <property type="resolution" value="2.24 A"/>
    <property type="chains" value="R=1-166"/>
</dbReference>
<dbReference type="PDB" id="4US0">
    <property type="method" value="X-ray"/>
    <property type="resolution" value="2.17 A"/>
    <property type="chains" value="R=1-166"/>
</dbReference>
<dbReference type="PDB" id="4US1">
    <property type="method" value="X-ray"/>
    <property type="resolution" value="2.65 A"/>
    <property type="chains" value="R=1-166"/>
</dbReference>
<dbReference type="PDB" id="4US2">
    <property type="method" value="X-ray"/>
    <property type="resolution" value="2.48 A"/>
    <property type="chains" value="R=1-166"/>
</dbReference>
<dbReference type="PDB" id="4XVQ">
    <property type="method" value="X-ray"/>
    <property type="resolution" value="1.89 A"/>
    <property type="chains" value="A=1-166"/>
</dbReference>
<dbReference type="PDB" id="4XVR">
    <property type="method" value="X-ray"/>
    <property type="resolution" value="2.03 A"/>
    <property type="chains" value="A=1-166"/>
</dbReference>
<dbReference type="PDB" id="521P">
    <property type="method" value="X-ray"/>
    <property type="resolution" value="2.60 A"/>
    <property type="chains" value="A=1-166"/>
</dbReference>
<dbReference type="PDB" id="5B2Z">
    <property type="method" value="X-ray"/>
    <property type="resolution" value="1.56 A"/>
    <property type="chains" value="A=1-166"/>
</dbReference>
<dbReference type="PDB" id="5B30">
    <property type="method" value="X-ray"/>
    <property type="resolution" value="1.60 A"/>
    <property type="chains" value="A=1-166"/>
</dbReference>
<dbReference type="PDB" id="5E95">
    <property type="method" value="X-ray"/>
    <property type="resolution" value="1.40 A"/>
    <property type="chains" value="A=1-166"/>
</dbReference>
<dbReference type="PDB" id="5P21">
    <property type="method" value="X-ray"/>
    <property type="resolution" value="1.35 A"/>
    <property type="chains" value="A=1-166"/>
</dbReference>
<dbReference type="PDB" id="5VBE">
    <property type="method" value="X-ray"/>
    <property type="resolution" value="1.57 A"/>
    <property type="chains" value="A=1-166"/>
</dbReference>
<dbReference type="PDB" id="5VBZ">
    <property type="method" value="X-ray"/>
    <property type="resolution" value="2.20 A"/>
    <property type="chains" value="A/B/C=1-166"/>
</dbReference>
<dbReference type="PDB" id="5WDO">
    <property type="method" value="X-ray"/>
    <property type="resolution" value="1.65 A"/>
    <property type="chains" value="A=1-166"/>
</dbReference>
<dbReference type="PDB" id="5WDP">
    <property type="method" value="X-ray"/>
    <property type="resolution" value="1.35 A"/>
    <property type="chains" value="A=1-166"/>
</dbReference>
<dbReference type="PDB" id="5WDQ">
    <property type="method" value="X-ray"/>
    <property type="resolution" value="1.25 A"/>
    <property type="chains" value="A=1-166"/>
</dbReference>
<dbReference type="PDB" id="5WFO">
    <property type="method" value="X-ray"/>
    <property type="resolution" value="1.99 A"/>
    <property type="chains" value="Q/R=1-166"/>
</dbReference>
<dbReference type="PDB" id="5WFP">
    <property type="method" value="X-ray"/>
    <property type="resolution" value="2.08 A"/>
    <property type="chains" value="Q/R=1-166"/>
</dbReference>
<dbReference type="PDB" id="5WFQ">
    <property type="method" value="X-ray"/>
    <property type="resolution" value="2.26 A"/>
    <property type="chains" value="Q/R=1-166"/>
</dbReference>
<dbReference type="PDB" id="5WFR">
    <property type="method" value="X-ray"/>
    <property type="resolution" value="2.46 A"/>
    <property type="chains" value="Q/R=1-166"/>
</dbReference>
<dbReference type="PDB" id="5WPL">
    <property type="method" value="X-ray"/>
    <property type="resolution" value="2.15 A"/>
    <property type="chains" value="A/D/G/J=1-166"/>
</dbReference>
<dbReference type="PDB" id="5X9S">
    <property type="method" value="X-ray"/>
    <property type="resolution" value="2.50 A"/>
    <property type="chains" value="A=1-166"/>
</dbReference>
<dbReference type="PDB" id="5ZC6">
    <property type="method" value="NMR"/>
    <property type="chains" value="A=1-166"/>
</dbReference>
<dbReference type="PDB" id="621P">
    <property type="method" value="X-ray"/>
    <property type="resolution" value="2.40 A"/>
    <property type="chains" value="A=1-166"/>
</dbReference>
<dbReference type="PDB" id="6AMB">
    <property type="method" value="X-ray"/>
    <property type="resolution" value="2.50 A"/>
    <property type="chains" value="A=1-168"/>
</dbReference>
<dbReference type="PDB" id="6AXG">
    <property type="method" value="X-ray"/>
    <property type="resolution" value="3.30 A"/>
    <property type="chains" value="B/D/F/H/J/L=1-166"/>
</dbReference>
<dbReference type="PDB" id="6BVI">
    <property type="method" value="X-ray"/>
    <property type="resolution" value="1.75 A"/>
    <property type="chains" value="A/C=1-166"/>
</dbReference>
<dbReference type="PDB" id="6BVJ">
    <property type="method" value="X-ray"/>
    <property type="resolution" value="1.75 A"/>
    <property type="chains" value="A/C=1-166"/>
</dbReference>
<dbReference type="PDB" id="6BVK">
    <property type="method" value="X-ray"/>
    <property type="resolution" value="1.80 A"/>
    <property type="chains" value="A/C=1-166"/>
</dbReference>
<dbReference type="PDB" id="6BVL">
    <property type="method" value="X-ray"/>
    <property type="resolution" value="1.75 A"/>
    <property type="chains" value="A/C=1-166"/>
</dbReference>
<dbReference type="PDB" id="6BVM">
    <property type="method" value="X-ray"/>
    <property type="resolution" value="1.80 A"/>
    <property type="chains" value="A/C=1-166"/>
</dbReference>
<dbReference type="PDB" id="6CUO">
    <property type="method" value="X-ray"/>
    <property type="resolution" value="1.73 A"/>
    <property type="chains" value="A/C=1-166"/>
</dbReference>
<dbReference type="PDB" id="6CUP">
    <property type="method" value="X-ray"/>
    <property type="resolution" value="1.83 A"/>
    <property type="chains" value="A/C=1-166"/>
</dbReference>
<dbReference type="PDB" id="6CUR">
    <property type="method" value="X-ray"/>
    <property type="resolution" value="1.73 A"/>
    <property type="chains" value="A/C=1-166"/>
</dbReference>
<dbReference type="PDB" id="6D55">
    <property type="method" value="X-ray"/>
    <property type="resolution" value="1.68 A"/>
    <property type="chains" value="A/C=1-166"/>
</dbReference>
<dbReference type="PDB" id="6D56">
    <property type="method" value="X-ray"/>
    <property type="resolution" value="1.68 A"/>
    <property type="chains" value="A/C=1-166"/>
</dbReference>
<dbReference type="PDB" id="6D59">
    <property type="method" value="X-ray"/>
    <property type="resolution" value="1.70 A"/>
    <property type="chains" value="A/C=1-166"/>
</dbReference>
<dbReference type="PDB" id="6D5E">
    <property type="method" value="X-ray"/>
    <property type="resolution" value="1.75 A"/>
    <property type="chains" value="A/C=1-166"/>
</dbReference>
<dbReference type="PDB" id="6D5G">
    <property type="method" value="X-ray"/>
    <property type="resolution" value="1.92 A"/>
    <property type="chains" value="A/C=1-166"/>
</dbReference>
<dbReference type="PDB" id="6D5H">
    <property type="method" value="X-ray"/>
    <property type="resolution" value="1.80 A"/>
    <property type="chains" value="A/C=1-166"/>
</dbReference>
<dbReference type="PDB" id="6D5J">
    <property type="method" value="X-ray"/>
    <property type="resolution" value="1.75 A"/>
    <property type="chains" value="A/C=1-166"/>
</dbReference>
<dbReference type="PDB" id="6D5L">
    <property type="method" value="X-ray"/>
    <property type="resolution" value="1.70 A"/>
    <property type="chains" value="A/C=1-166"/>
</dbReference>
<dbReference type="PDB" id="6D5M">
    <property type="method" value="X-ray"/>
    <property type="resolution" value="2.08 A"/>
    <property type="chains" value="Q/R=1-166"/>
</dbReference>
<dbReference type="PDB" id="6D5V">
    <property type="method" value="X-ray"/>
    <property type="resolution" value="2.04 A"/>
    <property type="chains" value="Q/R=1-166"/>
</dbReference>
<dbReference type="PDB" id="6D5W">
    <property type="method" value="X-ray"/>
    <property type="resolution" value="2.48 A"/>
    <property type="chains" value="Q/R=1-166"/>
</dbReference>
<dbReference type="PDB" id="6DZH">
    <property type="method" value="X-ray"/>
    <property type="resolution" value="1.95 A"/>
    <property type="chains" value="A/B/C=1-166"/>
</dbReference>
<dbReference type="PDB" id="6E6C">
    <property type="method" value="X-ray"/>
    <property type="resolution" value="1.90 A"/>
    <property type="chains" value="A=1-166"/>
</dbReference>
<dbReference type="PDB" id="6E6P">
    <property type="method" value="X-ray"/>
    <property type="resolution" value="1.93 A"/>
    <property type="chains" value="A/B/C=1-166"/>
</dbReference>
<dbReference type="PDB" id="6MQT">
    <property type="method" value="X-ray"/>
    <property type="resolution" value="1.50 A"/>
    <property type="chains" value="A/B/C/D/E/F/G/H=1-166"/>
</dbReference>
<dbReference type="PDB" id="6NTC">
    <property type="method" value="X-ray"/>
    <property type="resolution" value="2.90 A"/>
    <property type="chains" value="A=1-166"/>
</dbReference>
<dbReference type="PDB" id="6NTD">
    <property type="method" value="X-ray"/>
    <property type="resolution" value="3.15 A"/>
    <property type="chains" value="A=1-166"/>
</dbReference>
<dbReference type="PDB" id="6Q21">
    <property type="method" value="X-ray"/>
    <property type="resolution" value="1.95 A"/>
    <property type="chains" value="A/B/C/D=1-171"/>
</dbReference>
<dbReference type="PDB" id="6V94">
    <property type="method" value="X-ray"/>
    <property type="resolution" value="1.80 A"/>
    <property type="chains" value="A/C=1-166"/>
</dbReference>
<dbReference type="PDB" id="6V9F">
    <property type="method" value="X-ray"/>
    <property type="resolution" value="1.85 A"/>
    <property type="chains" value="A/C=1-166"/>
</dbReference>
<dbReference type="PDB" id="6V9J">
    <property type="method" value="X-ray"/>
    <property type="resolution" value="1.76 A"/>
    <property type="chains" value="A/C=1-166"/>
</dbReference>
<dbReference type="PDB" id="6V9L">
    <property type="method" value="X-ray"/>
    <property type="resolution" value="1.70 A"/>
    <property type="chains" value="A/C=1-166"/>
</dbReference>
<dbReference type="PDB" id="6V9M">
    <property type="method" value="X-ray"/>
    <property type="resolution" value="1.65 A"/>
    <property type="chains" value="A/C=1-166"/>
</dbReference>
<dbReference type="PDB" id="6V9N">
    <property type="method" value="X-ray"/>
    <property type="resolution" value="1.65 A"/>
    <property type="chains" value="A/C=1-166"/>
</dbReference>
<dbReference type="PDB" id="6V9O">
    <property type="method" value="X-ray"/>
    <property type="resolution" value="1.80 A"/>
    <property type="chains" value="A/C=1-166"/>
</dbReference>
<dbReference type="PDB" id="6ZJ0">
    <property type="method" value="X-ray"/>
    <property type="resolution" value="1.76 A"/>
    <property type="chains" value="A=1-166"/>
</dbReference>
<dbReference type="PDB" id="6ZL3">
    <property type="method" value="X-ray"/>
    <property type="resolution" value="2.03 A"/>
    <property type="chains" value="A=1-166"/>
</dbReference>
<dbReference type="PDB" id="721P">
    <property type="method" value="X-ray"/>
    <property type="resolution" value="2.00 A"/>
    <property type="chains" value="A=1-166"/>
</dbReference>
<dbReference type="PDB" id="7DPH">
    <property type="method" value="X-ray"/>
    <property type="resolution" value="1.54 A"/>
    <property type="chains" value="A=1-166"/>
</dbReference>
<dbReference type="PDB" id="7DPJ">
    <property type="method" value="X-ray"/>
    <property type="resolution" value="1.98 A"/>
    <property type="chains" value="A=1-166"/>
</dbReference>
<dbReference type="PDB" id="7JHP">
    <property type="method" value="X-ray"/>
    <property type="resolution" value="2.77 A"/>
    <property type="chains" value="A=1-166"/>
</dbReference>
<dbReference type="PDB" id="7JIF">
    <property type="method" value="X-ray"/>
    <property type="resolution" value="1.76 A"/>
    <property type="chains" value="A=1-166"/>
</dbReference>
<dbReference type="PDB" id="7JIG">
    <property type="method" value="X-ray"/>
    <property type="resolution" value="2.32 A"/>
    <property type="chains" value="A=1-166"/>
</dbReference>
<dbReference type="PDB" id="7JIH">
    <property type="method" value="X-ray"/>
    <property type="resolution" value="1.99 A"/>
    <property type="chains" value="A/B=1-166"/>
</dbReference>
<dbReference type="PDB" id="7JII">
    <property type="method" value="X-ray"/>
    <property type="resolution" value="1.53 A"/>
    <property type="chains" value="A/B=1-166"/>
</dbReference>
<dbReference type="PDB" id="7L0F">
    <property type="method" value="X-ray"/>
    <property type="resolution" value="1.98 A"/>
    <property type="chains" value="A/E/G/L=1-166"/>
</dbReference>
<dbReference type="PDB" id="7L0G">
    <property type="method" value="X-ray"/>
    <property type="resolution" value="2.54 A"/>
    <property type="chains" value="A/B/E/G=1-166"/>
</dbReference>
<dbReference type="PDB" id="7OG9">
    <property type="method" value="X-ray"/>
    <property type="resolution" value="1.75 A"/>
    <property type="chains" value="A=1-166"/>
</dbReference>
<dbReference type="PDB" id="7OGA">
    <property type="method" value="X-ray"/>
    <property type="resolution" value="1.90 A"/>
    <property type="chains" value="A=1-166"/>
</dbReference>
<dbReference type="PDB" id="7OGB">
    <property type="method" value="X-ray"/>
    <property type="resolution" value="1.85 A"/>
    <property type="chains" value="A=1-166"/>
</dbReference>
<dbReference type="PDB" id="7OGC">
    <property type="method" value="X-ray"/>
    <property type="resolution" value="1.70 A"/>
    <property type="chains" value="A=1-166"/>
</dbReference>
<dbReference type="PDB" id="7OGD">
    <property type="method" value="X-ray"/>
    <property type="resolution" value="1.95 A"/>
    <property type="chains" value="A=1-166"/>
</dbReference>
<dbReference type="PDB" id="7OGE">
    <property type="method" value="X-ray"/>
    <property type="resolution" value="2.10 A"/>
    <property type="chains" value="A=1-166"/>
</dbReference>
<dbReference type="PDB" id="7OGF">
    <property type="method" value="X-ray"/>
    <property type="resolution" value="1.80 A"/>
    <property type="chains" value="A=1-166"/>
</dbReference>
<dbReference type="PDB" id="7TAM">
    <property type="method" value="X-ray"/>
    <property type="resolution" value="1.87 A"/>
    <property type="chains" value="A=1-166"/>
</dbReference>
<dbReference type="PDB" id="7VV8">
    <property type="method" value="X-ray"/>
    <property type="resolution" value="1.70 A"/>
    <property type="chains" value="A=1-166"/>
</dbReference>
<dbReference type="PDB" id="7VV9">
    <property type="method" value="X-ray"/>
    <property type="resolution" value="1.60 A"/>
    <property type="chains" value="A=1-170"/>
</dbReference>
<dbReference type="PDB" id="7VVG">
    <property type="method" value="X-ray"/>
    <property type="resolution" value="1.70 A"/>
    <property type="chains" value="A=1-166"/>
</dbReference>
<dbReference type="PDB" id="821P">
    <property type="method" value="X-ray"/>
    <property type="resolution" value="1.50 A"/>
    <property type="chains" value="A=1-166"/>
</dbReference>
<dbReference type="PDB" id="8BE6">
    <property type="method" value="X-ray"/>
    <property type="resolution" value="2.90 A"/>
    <property type="chains" value="R=1-166"/>
</dbReference>
<dbReference type="PDB" id="8BE7">
    <property type="method" value="X-ray"/>
    <property type="resolution" value="3.00 A"/>
    <property type="chains" value="R=1-166"/>
</dbReference>
<dbReference type="PDB" id="8BE8">
    <property type="method" value="X-ray"/>
    <property type="resolution" value="2.40 A"/>
    <property type="chains" value="R=1-166"/>
</dbReference>
<dbReference type="PDB" id="8BE9">
    <property type="method" value="X-ray"/>
    <property type="resolution" value="2.51 A"/>
    <property type="chains" value="R=1-166"/>
</dbReference>
<dbReference type="PDB" id="8BEA">
    <property type="method" value="X-ray"/>
    <property type="resolution" value="2.47 A"/>
    <property type="chains" value="R=1-166"/>
</dbReference>
<dbReference type="PDB" id="8BOS">
    <property type="method" value="X-ray"/>
    <property type="resolution" value="2.10 A"/>
    <property type="chains" value="R=1-166"/>
</dbReference>
<dbReference type="PDB" id="8BWG">
    <property type="method" value="X-ray"/>
    <property type="resolution" value="1.32 A"/>
    <property type="chains" value="R=1-166"/>
</dbReference>
<dbReference type="PDB" id="8CNJ">
    <property type="method" value="X-ray"/>
    <property type="resolution" value="1.35 A"/>
    <property type="chains" value="A/B=1-166"/>
</dbReference>
<dbReference type="PDB" id="8CNN">
    <property type="method" value="X-ray"/>
    <property type="resolution" value="1.48 A"/>
    <property type="chains" value="A=1-166"/>
</dbReference>
<dbReference type="PDB" id="8ELK">
    <property type="method" value="X-ray"/>
    <property type="resolution" value="1.80 A"/>
    <property type="chains" value="A=1-189"/>
</dbReference>
<dbReference type="PDB" id="8ELR">
    <property type="method" value="X-ray"/>
    <property type="resolution" value="2.05 A"/>
    <property type="chains" value="A=1-189"/>
</dbReference>
<dbReference type="PDB" id="8ELS">
    <property type="method" value="X-ray"/>
    <property type="resolution" value="2.27 A"/>
    <property type="chains" value="A=1-189"/>
</dbReference>
<dbReference type="PDB" id="8ELT">
    <property type="method" value="X-ray"/>
    <property type="resolution" value="1.66 A"/>
    <property type="chains" value="A=1-189"/>
</dbReference>
<dbReference type="PDB" id="8ELU">
    <property type="method" value="X-ray"/>
    <property type="resolution" value="1.93 A"/>
    <property type="chains" value="A=1-189"/>
</dbReference>
<dbReference type="PDB" id="8ELV">
    <property type="method" value="X-ray"/>
    <property type="resolution" value="2.15 A"/>
    <property type="chains" value="A=1-189"/>
</dbReference>
<dbReference type="PDB" id="8ELW">
    <property type="method" value="X-ray"/>
    <property type="resolution" value="1.70 A"/>
    <property type="chains" value="A=1-189"/>
</dbReference>
<dbReference type="PDB" id="8ELX">
    <property type="method" value="X-ray"/>
    <property type="resolution" value="1.98 A"/>
    <property type="chains" value="A=1-189"/>
</dbReference>
<dbReference type="PDB" id="8ELY">
    <property type="method" value="X-ray"/>
    <property type="resolution" value="1.75 A"/>
    <property type="chains" value="A=1-189"/>
</dbReference>
<dbReference type="PDB" id="8ELZ">
    <property type="method" value="X-ray"/>
    <property type="resolution" value="1.96 A"/>
    <property type="chains" value="A=1-189"/>
</dbReference>
<dbReference type="PDB" id="8EM0">
    <property type="method" value="X-ray"/>
    <property type="resolution" value="2.11 A"/>
    <property type="chains" value="A=1-189"/>
</dbReference>
<dbReference type="PDB" id="8FG3">
    <property type="method" value="X-ray"/>
    <property type="resolution" value="1.49 A"/>
    <property type="chains" value="A=1-166"/>
</dbReference>
<dbReference type="PDB" id="8FG4">
    <property type="method" value="X-ray"/>
    <property type="resolution" value="1.85 A"/>
    <property type="chains" value="A=1-166"/>
</dbReference>
<dbReference type="PDB" id="8OSM">
    <property type="method" value="X-ray"/>
    <property type="resolution" value="2.05 A"/>
    <property type="chains" value="A=1-166"/>
</dbReference>
<dbReference type="PDB" id="8OSN">
    <property type="method" value="X-ray"/>
    <property type="resolution" value="1.80 A"/>
    <property type="chains" value="A=1-166"/>
</dbReference>
<dbReference type="PDB" id="8OSO">
    <property type="method" value="X-ray"/>
    <property type="resolution" value="2.50 A"/>
    <property type="chains" value="A=1-166"/>
</dbReference>
<dbReference type="PDB" id="8TBG">
    <property type="method" value="X-ray"/>
    <property type="resolution" value="1.20 A"/>
    <property type="chains" value="A/B=1-166"/>
</dbReference>
<dbReference type="PDB" id="8TLR">
    <property type="method" value="X-ray"/>
    <property type="resolution" value="1.70 A"/>
    <property type="chains" value="A=1-166"/>
</dbReference>
<dbReference type="PDB" id="8WWC">
    <property type="method" value="X-ray"/>
    <property type="resolution" value="2.80 A"/>
    <property type="chains" value="A/B=1-166"/>
</dbReference>
<dbReference type="PDBsum" id="121P"/>
<dbReference type="PDBsum" id="1AA9"/>
<dbReference type="PDBsum" id="1AGP"/>
<dbReference type="PDBsum" id="1BKD"/>
<dbReference type="PDBsum" id="1CLU"/>
<dbReference type="PDBsum" id="1CRP"/>
<dbReference type="PDBsum" id="1CRQ"/>
<dbReference type="PDBsum" id="1CRR"/>
<dbReference type="PDBsum" id="1CTQ"/>
<dbReference type="PDBsum" id="1GNP"/>
<dbReference type="PDBsum" id="1GNQ"/>
<dbReference type="PDBsum" id="1GNR"/>
<dbReference type="PDBsum" id="1HE8"/>
<dbReference type="PDBsum" id="1IAQ"/>
<dbReference type="PDBsum" id="1IOZ"/>
<dbReference type="PDBsum" id="1JAH"/>
<dbReference type="PDBsum" id="1JAI"/>
<dbReference type="PDBsum" id="1K8R"/>
<dbReference type="PDBsum" id="1LF0"/>
<dbReference type="PDBsum" id="1LF5"/>
<dbReference type="PDBsum" id="1LFD"/>
<dbReference type="PDBsum" id="1NVU"/>
<dbReference type="PDBsum" id="1NVV"/>
<dbReference type="PDBsum" id="1NVW"/>
<dbReference type="PDBsum" id="1NVX"/>
<dbReference type="PDBsum" id="1P2S"/>
<dbReference type="PDBsum" id="1P2T"/>
<dbReference type="PDBsum" id="1P2U"/>
<dbReference type="PDBsum" id="1P2V"/>
<dbReference type="PDBsum" id="1PLJ"/>
<dbReference type="PDBsum" id="1PLK"/>
<dbReference type="PDBsum" id="1PLL"/>
<dbReference type="PDBsum" id="1Q21"/>
<dbReference type="PDBsum" id="1QRA"/>
<dbReference type="PDBsum" id="1RVD"/>
<dbReference type="PDBsum" id="1WQ1"/>
<dbReference type="PDBsum" id="1XCM"/>
<dbReference type="PDBsum" id="1XD2"/>
<dbReference type="PDBsum" id="1XJ0"/>
<dbReference type="PDBsum" id="1ZVQ"/>
<dbReference type="PDBsum" id="1ZW6"/>
<dbReference type="PDBsum" id="221P"/>
<dbReference type="PDBsum" id="2C5L"/>
<dbReference type="PDBsum" id="2CE2"/>
<dbReference type="PDBsum" id="2CL0"/>
<dbReference type="PDBsum" id="2CL6"/>
<dbReference type="PDBsum" id="2CL7"/>
<dbReference type="PDBsum" id="2CLC"/>
<dbReference type="PDBsum" id="2CLD"/>
<dbReference type="PDBsum" id="2EVW"/>
<dbReference type="PDBsum" id="2LCF"/>
<dbReference type="PDBsum" id="2LWI"/>
<dbReference type="PDBsum" id="2N42"/>
<dbReference type="PDBsum" id="2N46"/>
<dbReference type="PDBsum" id="2Q21"/>
<dbReference type="PDBsum" id="2QUZ"/>
<dbReference type="PDBsum" id="2RGA"/>
<dbReference type="PDBsum" id="2RGB"/>
<dbReference type="PDBsum" id="2RGC"/>
<dbReference type="PDBsum" id="2RGD"/>
<dbReference type="PDBsum" id="2RGE"/>
<dbReference type="PDBsum" id="2RGG"/>
<dbReference type="PDBsum" id="2UZI"/>
<dbReference type="PDBsum" id="2VH5"/>
<dbReference type="PDBsum" id="2X1V"/>
<dbReference type="PDBsum" id="3DDC"/>
<dbReference type="PDBsum" id="3I3S"/>
<dbReference type="PDBsum" id="3K8Y"/>
<dbReference type="PDBsum" id="3K9L"/>
<dbReference type="PDBsum" id="3K9N"/>
<dbReference type="PDBsum" id="3KKM"/>
<dbReference type="PDBsum" id="3KKN"/>
<dbReference type="PDBsum" id="3KUD"/>
<dbReference type="PDBsum" id="3L8Y"/>
<dbReference type="PDBsum" id="3L8Z"/>
<dbReference type="PDBsum" id="3LBH"/>
<dbReference type="PDBsum" id="3LBI"/>
<dbReference type="PDBsum" id="3LBN"/>
<dbReference type="PDBsum" id="3LO5"/>
<dbReference type="PDBsum" id="3OIU"/>
<dbReference type="PDBsum" id="3OIV"/>
<dbReference type="PDBsum" id="3OIW"/>
<dbReference type="PDBsum" id="3RRY"/>
<dbReference type="PDBsum" id="3RRZ"/>
<dbReference type="PDBsum" id="3RS0"/>
<dbReference type="PDBsum" id="3RS2"/>
<dbReference type="PDBsum" id="3RS3"/>
<dbReference type="PDBsum" id="3RS4"/>
<dbReference type="PDBsum" id="3RS5"/>
<dbReference type="PDBsum" id="3RS7"/>
<dbReference type="PDBsum" id="3RSL"/>
<dbReference type="PDBsum" id="3RSO"/>
<dbReference type="PDBsum" id="3TGP"/>
<dbReference type="PDBsum" id="421P"/>
<dbReference type="PDBsum" id="4DLR"/>
<dbReference type="PDBsum" id="4DLS"/>
<dbReference type="PDBsum" id="4DLT"/>
<dbReference type="PDBsum" id="4DLU"/>
<dbReference type="PDBsum" id="4DLV"/>
<dbReference type="PDBsum" id="4DLW"/>
<dbReference type="PDBsum" id="4DLX"/>
<dbReference type="PDBsum" id="4DLY"/>
<dbReference type="PDBsum" id="4DLZ"/>
<dbReference type="PDBsum" id="4DST"/>
<dbReference type="PDBsum" id="4DSU"/>
<dbReference type="PDBsum" id="4EFL"/>
<dbReference type="PDBsum" id="4EFM"/>
<dbReference type="PDBsum" id="4EFN"/>
<dbReference type="PDBsum" id="4G0N"/>
<dbReference type="PDBsum" id="4G3X"/>
<dbReference type="PDBsum" id="4K81"/>
<dbReference type="PDBsum" id="4L9S"/>
<dbReference type="PDBsum" id="4L9W"/>
<dbReference type="PDBsum" id="4NYI"/>
<dbReference type="PDBsum" id="4NYJ"/>
<dbReference type="PDBsum" id="4NYM"/>
<dbReference type="PDBsum" id="4Q21"/>
<dbReference type="PDBsum" id="4RSG"/>
<dbReference type="PDBsum" id="4URU"/>
<dbReference type="PDBsum" id="4URV"/>
<dbReference type="PDBsum" id="4URW"/>
<dbReference type="PDBsum" id="4URX"/>
<dbReference type="PDBsum" id="4URY"/>
<dbReference type="PDBsum" id="4URZ"/>
<dbReference type="PDBsum" id="4US0"/>
<dbReference type="PDBsum" id="4US1"/>
<dbReference type="PDBsum" id="4US2"/>
<dbReference type="PDBsum" id="4XVQ"/>
<dbReference type="PDBsum" id="4XVR"/>
<dbReference type="PDBsum" id="521P"/>
<dbReference type="PDBsum" id="5B2Z"/>
<dbReference type="PDBsum" id="5B30"/>
<dbReference type="PDBsum" id="5E95"/>
<dbReference type="PDBsum" id="5P21"/>
<dbReference type="PDBsum" id="5VBE"/>
<dbReference type="PDBsum" id="5VBZ"/>
<dbReference type="PDBsum" id="5WDO"/>
<dbReference type="PDBsum" id="5WDP"/>
<dbReference type="PDBsum" id="5WDQ"/>
<dbReference type="PDBsum" id="5WFO"/>
<dbReference type="PDBsum" id="5WFP"/>
<dbReference type="PDBsum" id="5WFQ"/>
<dbReference type="PDBsum" id="5WFR"/>
<dbReference type="PDBsum" id="5WPL"/>
<dbReference type="PDBsum" id="5X9S"/>
<dbReference type="PDBsum" id="5ZC6"/>
<dbReference type="PDBsum" id="621P"/>
<dbReference type="PDBsum" id="6AMB"/>
<dbReference type="PDBsum" id="6AXG"/>
<dbReference type="PDBsum" id="6BVI"/>
<dbReference type="PDBsum" id="6BVJ"/>
<dbReference type="PDBsum" id="6BVK"/>
<dbReference type="PDBsum" id="6BVL"/>
<dbReference type="PDBsum" id="6BVM"/>
<dbReference type="PDBsum" id="6CUO"/>
<dbReference type="PDBsum" id="6CUP"/>
<dbReference type="PDBsum" id="6CUR"/>
<dbReference type="PDBsum" id="6D55"/>
<dbReference type="PDBsum" id="6D56"/>
<dbReference type="PDBsum" id="6D59"/>
<dbReference type="PDBsum" id="6D5E"/>
<dbReference type="PDBsum" id="6D5G"/>
<dbReference type="PDBsum" id="6D5H"/>
<dbReference type="PDBsum" id="6D5J"/>
<dbReference type="PDBsum" id="6D5L"/>
<dbReference type="PDBsum" id="6D5M"/>
<dbReference type="PDBsum" id="6D5V"/>
<dbReference type="PDBsum" id="6D5W"/>
<dbReference type="PDBsum" id="6DZH"/>
<dbReference type="PDBsum" id="6E6C"/>
<dbReference type="PDBsum" id="6E6P"/>
<dbReference type="PDBsum" id="6MQT"/>
<dbReference type="PDBsum" id="6NTC"/>
<dbReference type="PDBsum" id="6NTD"/>
<dbReference type="PDBsum" id="6Q21"/>
<dbReference type="PDBsum" id="6V94"/>
<dbReference type="PDBsum" id="6V9F"/>
<dbReference type="PDBsum" id="6V9J"/>
<dbReference type="PDBsum" id="6V9L"/>
<dbReference type="PDBsum" id="6V9M"/>
<dbReference type="PDBsum" id="6V9N"/>
<dbReference type="PDBsum" id="6V9O"/>
<dbReference type="PDBsum" id="6ZJ0"/>
<dbReference type="PDBsum" id="6ZL3"/>
<dbReference type="PDBsum" id="721P"/>
<dbReference type="PDBsum" id="7DPH"/>
<dbReference type="PDBsum" id="7DPJ"/>
<dbReference type="PDBsum" id="7JHP"/>
<dbReference type="PDBsum" id="7JIF"/>
<dbReference type="PDBsum" id="7JIG"/>
<dbReference type="PDBsum" id="7JIH"/>
<dbReference type="PDBsum" id="7JII"/>
<dbReference type="PDBsum" id="7L0F"/>
<dbReference type="PDBsum" id="7L0G"/>
<dbReference type="PDBsum" id="7OG9"/>
<dbReference type="PDBsum" id="7OGA"/>
<dbReference type="PDBsum" id="7OGB"/>
<dbReference type="PDBsum" id="7OGC"/>
<dbReference type="PDBsum" id="7OGD"/>
<dbReference type="PDBsum" id="7OGE"/>
<dbReference type="PDBsum" id="7OGF"/>
<dbReference type="PDBsum" id="7TAM"/>
<dbReference type="PDBsum" id="7VV8"/>
<dbReference type="PDBsum" id="7VV9"/>
<dbReference type="PDBsum" id="7VVG"/>
<dbReference type="PDBsum" id="821P"/>
<dbReference type="PDBsum" id="8BE6"/>
<dbReference type="PDBsum" id="8BE7"/>
<dbReference type="PDBsum" id="8BE8"/>
<dbReference type="PDBsum" id="8BE9"/>
<dbReference type="PDBsum" id="8BEA"/>
<dbReference type="PDBsum" id="8BOS"/>
<dbReference type="PDBsum" id="8BWG"/>
<dbReference type="PDBsum" id="8CNJ"/>
<dbReference type="PDBsum" id="8CNN"/>
<dbReference type="PDBsum" id="8ELK"/>
<dbReference type="PDBsum" id="8ELR"/>
<dbReference type="PDBsum" id="8ELS"/>
<dbReference type="PDBsum" id="8ELT"/>
<dbReference type="PDBsum" id="8ELU"/>
<dbReference type="PDBsum" id="8ELV"/>
<dbReference type="PDBsum" id="8ELW"/>
<dbReference type="PDBsum" id="8ELX"/>
<dbReference type="PDBsum" id="8ELY"/>
<dbReference type="PDBsum" id="8ELZ"/>
<dbReference type="PDBsum" id="8EM0"/>
<dbReference type="PDBsum" id="8FG3"/>
<dbReference type="PDBsum" id="8FG4"/>
<dbReference type="PDBsum" id="8OSM"/>
<dbReference type="PDBsum" id="8OSN"/>
<dbReference type="PDBsum" id="8OSO"/>
<dbReference type="PDBsum" id="8TBG"/>
<dbReference type="PDBsum" id="8TLR"/>
<dbReference type="PDBsum" id="8WWC"/>
<dbReference type="BMRB" id="P01112"/>
<dbReference type="SMR" id="P01112"/>
<dbReference type="BioGRID" id="109501">
    <property type="interactions" value="703"/>
</dbReference>
<dbReference type="ComplexPortal" id="CPX-395">
    <property type="entry name" value="GTPase HRAS - Son of sevenless homolog 1 complex"/>
</dbReference>
<dbReference type="CORUM" id="P01112"/>
<dbReference type="DIP" id="DIP-1050N"/>
<dbReference type="ELM" id="P01112"/>
<dbReference type="FunCoup" id="P01112">
    <property type="interactions" value="3079"/>
</dbReference>
<dbReference type="IntAct" id="P01112">
    <property type="interactions" value="608"/>
</dbReference>
<dbReference type="MINT" id="P01112"/>
<dbReference type="STRING" id="9606.ENSP00000407586"/>
<dbReference type="BindingDB" id="P01112"/>
<dbReference type="ChEMBL" id="CHEMBL2167"/>
<dbReference type="DrugBank" id="DB04315">
    <property type="generic name" value="Guanosine-5'-Diphosphate"/>
</dbReference>
<dbReference type="DrugBank" id="DB04137">
    <property type="generic name" value="Guanosine-5'-Triphosphate"/>
</dbReference>
<dbReference type="DrugBank" id="DB02210">
    <property type="generic name" value="Hexane-1,6-Diol"/>
</dbReference>
<dbReference type="DrugBank" id="DB08751">
    <property type="generic name" value="N,N'-DIMETHYL-N-(ACETYL)-N'-(7-NITROBENZ-2-OXA-1,3-DIAZOL-4-YL)ETHYLENEDIAMINE"/>
</dbReference>
<dbReference type="DrugBank" id="DB03226">
    <property type="generic name" value="Trifluoroethanol"/>
</dbReference>
<dbReference type="DrugBank" id="DB15588">
    <property type="generic name" value="Ursolic acid"/>
</dbReference>
<dbReference type="DrugCentral" id="P01112"/>
<dbReference type="GuidetoPHARMACOLOGY" id="2822"/>
<dbReference type="GlyCosmos" id="P01112">
    <property type="glycosylation" value="1 site, No reported glycans"/>
</dbReference>
<dbReference type="GlyGen" id="P01112">
    <property type="glycosylation" value="2 sites, 1 O-linked glycan (1 site)"/>
</dbReference>
<dbReference type="iPTMnet" id="P01112"/>
<dbReference type="PhosphoSitePlus" id="P01112"/>
<dbReference type="SwissPalm" id="P01112"/>
<dbReference type="BioMuta" id="HRAS"/>
<dbReference type="DMDM" id="131869"/>
<dbReference type="CPTAC" id="CPTAC-1551"/>
<dbReference type="CPTAC" id="CPTAC-1552"/>
<dbReference type="jPOST" id="P01112"/>
<dbReference type="MassIVE" id="P01112"/>
<dbReference type="PaxDb" id="9606-ENSP00000407586"/>
<dbReference type="PeptideAtlas" id="P01112"/>
<dbReference type="ProteomicsDB" id="51321">
    <molecule id="P01112-1"/>
</dbReference>
<dbReference type="ProteomicsDB" id="51322">
    <molecule id="P01112-2"/>
</dbReference>
<dbReference type="Pumba" id="P01112"/>
<dbReference type="ABCD" id="P01112">
    <property type="antibodies" value="6 sequenced antibodies"/>
</dbReference>
<dbReference type="Antibodypedia" id="22506">
    <property type="antibodies" value="820 antibodies from 38 providers"/>
</dbReference>
<dbReference type="CPTC" id="P01112">
    <property type="antibodies" value="4 antibodies"/>
</dbReference>
<dbReference type="DNASU" id="3265"/>
<dbReference type="Ensembl" id="ENST00000311189.8">
    <molecule id="P01112-1"/>
    <property type="protein sequence ID" value="ENSP00000309845.7"/>
    <property type="gene ID" value="ENSG00000174775.18"/>
</dbReference>
<dbReference type="Ensembl" id="ENST00000397594.7">
    <molecule id="P01112-2"/>
    <property type="protein sequence ID" value="ENSP00000380722.3"/>
    <property type="gene ID" value="ENSG00000174775.18"/>
</dbReference>
<dbReference type="Ensembl" id="ENST00000397596.6">
    <molecule id="P01112-1"/>
    <property type="protein sequence ID" value="ENSP00000380723.2"/>
    <property type="gene ID" value="ENSG00000174775.18"/>
</dbReference>
<dbReference type="Ensembl" id="ENST00000417302.7">
    <molecule id="P01112-2"/>
    <property type="protein sequence ID" value="ENSP00000388246.1"/>
    <property type="gene ID" value="ENSG00000174775.18"/>
</dbReference>
<dbReference type="Ensembl" id="ENST00000451590.5">
    <molecule id="P01112-1"/>
    <property type="protein sequence ID" value="ENSP00000407586.1"/>
    <property type="gene ID" value="ENSG00000174775.18"/>
</dbReference>
<dbReference type="Ensembl" id="ENST00000493230.5">
    <molecule id="P01112-2"/>
    <property type="protein sequence ID" value="ENSP00000434023.1"/>
    <property type="gene ID" value="ENSG00000174775.18"/>
</dbReference>
<dbReference type="Ensembl" id="ENST00000610977.3">
    <molecule id="P01112-1"/>
    <property type="protein sequence ID" value="ENSP00000480686.1"/>
    <property type="gene ID" value="ENSG00000276536.4"/>
</dbReference>
<dbReference type="Ensembl" id="ENST00000615062.2">
    <molecule id="P01112-1"/>
    <property type="protein sequence ID" value="ENSP00000482366.1"/>
    <property type="gene ID" value="ENSG00000276536.4"/>
</dbReference>
<dbReference type="Ensembl" id="ENST00000616241.4">
    <molecule id="P01112-2"/>
    <property type="protein sequence ID" value="ENSP00000480317.1"/>
    <property type="gene ID" value="ENSG00000276536.4"/>
</dbReference>
<dbReference type="Ensembl" id="ENST00000631404.1">
    <molecule id="P01112-1"/>
    <property type="protein sequence ID" value="ENSP00000488757.1"/>
    <property type="gene ID" value="ENSG00000276536.4"/>
</dbReference>
<dbReference type="Ensembl" id="ENST00000631967.1">
    <molecule id="P01112-2"/>
    <property type="protein sequence ID" value="ENSP00000488225.1"/>
    <property type="gene ID" value="ENSG00000276536.4"/>
</dbReference>
<dbReference type="Ensembl" id="ENST00000634098.1">
    <molecule id="P01112-2"/>
    <property type="protein sequence ID" value="ENSP00000488296.1"/>
    <property type="gene ID" value="ENSG00000276536.4"/>
</dbReference>
<dbReference type="GeneID" id="3265"/>
<dbReference type="KEGG" id="hsa:3265"/>
<dbReference type="MANE-Select" id="ENST00000311189.8">
    <property type="protein sequence ID" value="ENSP00000309845.7"/>
    <property type="RefSeq nucleotide sequence ID" value="NM_005343.4"/>
    <property type="RefSeq protein sequence ID" value="NP_005334.1"/>
</dbReference>
<dbReference type="UCSC" id="uc010qvw.3">
    <molecule id="P01112-1"/>
    <property type="organism name" value="human"/>
</dbReference>
<dbReference type="AGR" id="HGNC:5173"/>
<dbReference type="CTD" id="3265"/>
<dbReference type="DisGeNET" id="3265"/>
<dbReference type="GeneCards" id="HRAS"/>
<dbReference type="GeneReviews" id="HRAS"/>
<dbReference type="HGNC" id="HGNC:5173">
    <property type="gene designation" value="HRAS"/>
</dbReference>
<dbReference type="HPA" id="ENSG00000174775">
    <property type="expression patterns" value="Low tissue specificity"/>
</dbReference>
<dbReference type="MalaCards" id="HRAS"/>
<dbReference type="MIM" id="109800">
    <property type="type" value="phenotype"/>
</dbReference>
<dbReference type="MIM" id="163200">
    <property type="type" value="phenotype"/>
</dbReference>
<dbReference type="MIM" id="188470">
    <property type="type" value="phenotype"/>
</dbReference>
<dbReference type="MIM" id="190020">
    <property type="type" value="gene"/>
</dbReference>
<dbReference type="MIM" id="218040">
    <property type="type" value="phenotype"/>
</dbReference>
<dbReference type="neXtProt" id="NX_P01112"/>
<dbReference type="OpenTargets" id="ENSG00000174775"/>
<dbReference type="Orphanet" id="3071">
    <property type="disease" value="Costello syndrome"/>
</dbReference>
<dbReference type="Orphanet" id="146">
    <property type="disease" value="Differentiated thyroid carcinoma"/>
</dbReference>
<dbReference type="Orphanet" id="2612">
    <property type="disease" value="Linear nevus sebaceus syndrome"/>
</dbReference>
<dbReference type="Orphanet" id="2874">
    <property type="disease" value="Phakomatosis pigmentokeratotica"/>
</dbReference>
<dbReference type="Orphanet" id="79414">
    <property type="disease" value="Woolly hair nevus"/>
</dbReference>
<dbReference type="PharmGKB" id="PA29444"/>
<dbReference type="VEuPathDB" id="HostDB:ENSG00000174775"/>
<dbReference type="eggNOG" id="KOG0395">
    <property type="taxonomic scope" value="Eukaryota"/>
</dbReference>
<dbReference type="GeneTree" id="ENSGT00940000155653"/>
<dbReference type="HOGENOM" id="CLU_041217_9_8_1"/>
<dbReference type="InParanoid" id="P01112"/>
<dbReference type="OMA" id="HYREQIR"/>
<dbReference type="OrthoDB" id="5976022at2759"/>
<dbReference type="PAN-GO" id="P01112">
    <property type="GO annotations" value="6 GO annotations based on evolutionary models"/>
</dbReference>
<dbReference type="PhylomeDB" id="P01112"/>
<dbReference type="TreeFam" id="TF312796"/>
<dbReference type="BRENDA" id="3.6.5.2">
    <property type="organism ID" value="2681"/>
</dbReference>
<dbReference type="PathwayCommons" id="P01112"/>
<dbReference type="Reactome" id="R-HSA-112412">
    <property type="pathway name" value="SOS-mediated signalling"/>
</dbReference>
<dbReference type="Reactome" id="R-HSA-1169092">
    <property type="pathway name" value="Activation of RAS in B cells"/>
</dbReference>
<dbReference type="Reactome" id="R-HSA-1236382">
    <property type="pathway name" value="Constitutive Signaling by Ligand-Responsive EGFR Cancer Variants"/>
</dbReference>
<dbReference type="Reactome" id="R-HSA-1250196">
    <property type="pathway name" value="SHC1 events in ERBB2 signaling"/>
</dbReference>
<dbReference type="Reactome" id="R-HSA-1250347">
    <property type="pathway name" value="SHC1 events in ERBB4 signaling"/>
</dbReference>
<dbReference type="Reactome" id="R-HSA-1433557">
    <property type="pathway name" value="Signaling by SCF-KIT"/>
</dbReference>
<dbReference type="Reactome" id="R-HSA-167044">
    <property type="pathway name" value="Signalling to RAS"/>
</dbReference>
<dbReference type="Reactome" id="R-HSA-171007">
    <property type="pathway name" value="p38MAPK events"/>
</dbReference>
<dbReference type="Reactome" id="R-HSA-179812">
    <property type="pathway name" value="GRB2 events in EGFR signaling"/>
</dbReference>
<dbReference type="Reactome" id="R-HSA-180336">
    <property type="pathway name" value="SHC1 events in EGFR signaling"/>
</dbReference>
<dbReference type="Reactome" id="R-HSA-186763">
    <property type="pathway name" value="Downstream signal transduction"/>
</dbReference>
<dbReference type="Reactome" id="R-HSA-1963640">
    <property type="pathway name" value="GRB2 events in ERBB2 signaling"/>
</dbReference>
<dbReference type="Reactome" id="R-HSA-210993">
    <property type="pathway name" value="Tie2 Signaling"/>
</dbReference>
<dbReference type="Reactome" id="R-HSA-2179392">
    <property type="pathway name" value="EGFR Transactivation by Gastrin"/>
</dbReference>
<dbReference type="Reactome" id="R-HSA-2424491">
    <property type="pathway name" value="DAP12 signaling"/>
</dbReference>
<dbReference type="Reactome" id="R-HSA-2428933">
    <property type="pathway name" value="SHC-related events triggered by IGF1R"/>
</dbReference>
<dbReference type="Reactome" id="R-HSA-2871796">
    <property type="pathway name" value="FCERI mediated MAPK activation"/>
</dbReference>
<dbReference type="Reactome" id="R-HSA-375165">
    <property type="pathway name" value="NCAM signaling for neurite out-growth"/>
</dbReference>
<dbReference type="Reactome" id="R-HSA-3928662">
    <property type="pathway name" value="EPHB-mediated forward signaling"/>
</dbReference>
<dbReference type="Reactome" id="R-HSA-442982">
    <property type="pathway name" value="Ras activation upon Ca2+ influx through NMDA receptor"/>
</dbReference>
<dbReference type="Reactome" id="R-HSA-5218921">
    <property type="pathway name" value="VEGFR2 mediated cell proliferation"/>
</dbReference>
<dbReference type="Reactome" id="R-HSA-5621575">
    <property type="pathway name" value="CD209 (DC-SIGN) signaling"/>
</dbReference>
<dbReference type="Reactome" id="R-HSA-5637810">
    <property type="pathway name" value="Constitutive Signaling by EGFRvIII"/>
</dbReference>
<dbReference type="Reactome" id="R-HSA-5654688">
    <property type="pathway name" value="SHC-mediated cascade:FGFR1"/>
</dbReference>
<dbReference type="Reactome" id="R-HSA-5654693">
    <property type="pathway name" value="FRS-mediated FGFR1 signaling"/>
</dbReference>
<dbReference type="Reactome" id="R-HSA-5654699">
    <property type="pathway name" value="SHC-mediated cascade:FGFR2"/>
</dbReference>
<dbReference type="Reactome" id="R-HSA-5654700">
    <property type="pathway name" value="FRS-mediated FGFR2 signaling"/>
</dbReference>
<dbReference type="Reactome" id="R-HSA-5654704">
    <property type="pathway name" value="SHC-mediated cascade:FGFR3"/>
</dbReference>
<dbReference type="Reactome" id="R-HSA-5654706">
    <property type="pathway name" value="FRS-mediated FGFR3 signaling"/>
</dbReference>
<dbReference type="Reactome" id="R-HSA-5654712">
    <property type="pathway name" value="FRS-mediated FGFR4 signaling"/>
</dbReference>
<dbReference type="Reactome" id="R-HSA-5654719">
    <property type="pathway name" value="SHC-mediated cascade:FGFR4"/>
</dbReference>
<dbReference type="Reactome" id="R-HSA-5655253">
    <property type="pathway name" value="Signaling by FGFR2 in disease"/>
</dbReference>
<dbReference type="Reactome" id="R-HSA-5655291">
    <property type="pathway name" value="Signaling by FGFR4 in disease"/>
</dbReference>
<dbReference type="Reactome" id="R-HSA-5655302">
    <property type="pathway name" value="Signaling by FGFR1 in disease"/>
</dbReference>
<dbReference type="Reactome" id="R-HSA-5655332">
    <property type="pathway name" value="Signaling by FGFR3 in disease"/>
</dbReference>
<dbReference type="Reactome" id="R-HSA-5658442">
    <property type="pathway name" value="Regulation of RAS by GAPs"/>
</dbReference>
<dbReference type="Reactome" id="R-HSA-5673000">
    <property type="pathway name" value="RAF activation"/>
</dbReference>
<dbReference type="Reactome" id="R-HSA-5673001">
    <property type="pathway name" value="RAF/MAP kinase cascade"/>
</dbReference>
<dbReference type="Reactome" id="R-HSA-5674135">
    <property type="pathway name" value="MAP2K and MAPK activation"/>
</dbReference>
<dbReference type="Reactome" id="R-HSA-5675221">
    <property type="pathway name" value="Negative regulation of MAPK pathway"/>
</dbReference>
<dbReference type="Reactome" id="R-HSA-6802946">
    <property type="pathway name" value="Signaling by moderate kinase activity BRAF mutants"/>
</dbReference>
<dbReference type="Reactome" id="R-HSA-6802948">
    <property type="pathway name" value="Signaling by high-kinase activity BRAF mutants"/>
</dbReference>
<dbReference type="Reactome" id="R-HSA-6802952">
    <property type="pathway name" value="Signaling by BRAF and RAF1 fusions"/>
</dbReference>
<dbReference type="Reactome" id="R-HSA-6802953">
    <property type="pathway name" value="RAS signaling downstream of NF1 loss-of-function variants"/>
</dbReference>
<dbReference type="Reactome" id="R-HSA-6802955">
    <property type="pathway name" value="Paradoxical activation of RAF signaling by kinase inactive BRAF"/>
</dbReference>
<dbReference type="Reactome" id="R-HSA-74751">
    <property type="pathway name" value="Insulin receptor signalling cascade"/>
</dbReference>
<dbReference type="Reactome" id="R-HSA-8849471">
    <property type="pathway name" value="PTK6 Regulates RHO GTPases, RAS GTPase and MAP kinases"/>
</dbReference>
<dbReference type="Reactome" id="R-HSA-8851805">
    <property type="pathway name" value="MET activates RAS signaling"/>
</dbReference>
<dbReference type="Reactome" id="R-HSA-9026519">
    <property type="pathway name" value="Activated NTRK2 signals through RAS"/>
</dbReference>
<dbReference type="Reactome" id="R-HSA-9027284">
    <property type="pathway name" value="Erythropoietin activates RAS"/>
</dbReference>
<dbReference type="Reactome" id="R-HSA-9028731">
    <property type="pathway name" value="Activated NTRK2 signals through FRS2 and FRS3"/>
</dbReference>
<dbReference type="Reactome" id="R-HSA-9034864">
    <property type="pathway name" value="Activated NTRK3 signals through RAS"/>
</dbReference>
<dbReference type="Reactome" id="R-HSA-9607240">
    <property type="pathway name" value="FLT3 Signaling"/>
</dbReference>
<dbReference type="Reactome" id="R-HSA-9634285">
    <property type="pathway name" value="Constitutive Signaling by Overexpressed ERBB2"/>
</dbReference>
<dbReference type="Reactome" id="R-HSA-9634635">
    <property type="pathway name" value="Estrogen-stimulated signaling through PRKCZ"/>
</dbReference>
<dbReference type="Reactome" id="R-HSA-9648002">
    <property type="pathway name" value="RAS processing"/>
</dbReference>
<dbReference type="Reactome" id="R-HSA-9649948">
    <property type="pathway name" value="Signaling downstream of RAS mutants"/>
</dbReference>
<dbReference type="Reactome" id="R-HSA-9656223">
    <property type="pathway name" value="Signaling by RAF1 mutants"/>
</dbReference>
<dbReference type="Reactome" id="R-HSA-9664565">
    <property type="pathway name" value="Signaling by ERBB2 KD Mutants"/>
</dbReference>
<dbReference type="Reactome" id="R-HSA-9665348">
    <property type="pathway name" value="Signaling by ERBB2 ECD mutants"/>
</dbReference>
<dbReference type="Reactome" id="R-HSA-9665686">
    <property type="pathway name" value="Signaling by ERBB2 TMD/JMD mutants"/>
</dbReference>
<dbReference type="Reactome" id="R-HSA-9670439">
    <property type="pathway name" value="Signaling by phosphorylated juxtamembrane, extracellular and kinase domain KIT mutants"/>
</dbReference>
<dbReference type="Reactome" id="R-HSA-9673767">
    <property type="pathway name" value="Signaling by PDGFRA transmembrane, juxtamembrane and kinase domain mutants"/>
</dbReference>
<dbReference type="Reactome" id="R-HSA-9673770">
    <property type="pathway name" value="Signaling by PDGFRA extracellular domain mutants"/>
</dbReference>
<dbReference type="Reactome" id="R-HSA-9703465">
    <property type="pathway name" value="Signaling by FLT3 fusion proteins"/>
</dbReference>
<dbReference type="Reactome" id="R-HSA-9703648">
    <property type="pathway name" value="Signaling by FLT3 ITD and TKD mutants"/>
</dbReference>
<dbReference type="Reactome" id="R-HSA-9753510">
    <property type="pathway name" value="Signaling by RAS GAP mutants"/>
</dbReference>
<dbReference type="Reactome" id="R-HSA-9753512">
    <property type="pathway name" value="Signaling by RAS GTPase mutants"/>
</dbReference>
<dbReference type="SABIO-RK" id="P01112"/>
<dbReference type="SignaLink" id="P01112"/>
<dbReference type="SIGNOR" id="P01112"/>
<dbReference type="BioGRID-ORCS" id="3265">
    <property type="hits" value="28 hits in 1176 CRISPR screens"/>
</dbReference>
<dbReference type="EvolutionaryTrace" id="P01112"/>
<dbReference type="GeneWiki" id="HRAS"/>
<dbReference type="GenomeRNAi" id="3265"/>
<dbReference type="Pharos" id="P01112">
    <property type="development level" value="Tchem"/>
</dbReference>
<dbReference type="PRO" id="PR:P01112"/>
<dbReference type="Proteomes" id="UP000005640">
    <property type="component" value="Chromosome 11"/>
</dbReference>
<dbReference type="RNAct" id="P01112">
    <property type="molecule type" value="protein"/>
</dbReference>
<dbReference type="Bgee" id="ENSG00000174775">
    <property type="expression patterns" value="Expressed in skin of abdomen and 97 other cell types or tissues"/>
</dbReference>
<dbReference type="ExpressionAtlas" id="P01112">
    <property type="expression patterns" value="baseline and differential"/>
</dbReference>
<dbReference type="GO" id="GO:0036064">
    <property type="term" value="C:ciliary basal body"/>
    <property type="evidence" value="ECO:0000314"/>
    <property type="project" value="HPA"/>
</dbReference>
<dbReference type="GO" id="GO:0005737">
    <property type="term" value="C:cytoplasm"/>
    <property type="evidence" value="ECO:0000304"/>
    <property type="project" value="ProtInc"/>
</dbReference>
<dbReference type="GO" id="GO:0005829">
    <property type="term" value="C:cytosol"/>
    <property type="evidence" value="ECO:0000314"/>
    <property type="project" value="HPA"/>
</dbReference>
<dbReference type="GO" id="GO:0005789">
    <property type="term" value="C:endoplasmic reticulum membrane"/>
    <property type="evidence" value="ECO:0000304"/>
    <property type="project" value="Reactome"/>
</dbReference>
<dbReference type="GO" id="GO:0098978">
    <property type="term" value="C:glutamatergic synapse"/>
    <property type="evidence" value="ECO:0000314"/>
    <property type="project" value="SynGO"/>
</dbReference>
<dbReference type="GO" id="GO:0005794">
    <property type="term" value="C:Golgi apparatus"/>
    <property type="evidence" value="ECO:0000314"/>
    <property type="project" value="UniProtKB"/>
</dbReference>
<dbReference type="GO" id="GO:0000139">
    <property type="term" value="C:Golgi membrane"/>
    <property type="evidence" value="ECO:0000304"/>
    <property type="project" value="Reactome"/>
</dbReference>
<dbReference type="GO" id="GO:1905360">
    <property type="term" value="C:GTPase complex"/>
    <property type="evidence" value="ECO:0000353"/>
    <property type="project" value="ComplexPortal"/>
</dbReference>
<dbReference type="GO" id="GO:0005654">
    <property type="term" value="C:nucleoplasm"/>
    <property type="evidence" value="ECO:0000314"/>
    <property type="project" value="HPA"/>
</dbReference>
<dbReference type="GO" id="GO:0048471">
    <property type="term" value="C:perinuclear region of cytoplasm"/>
    <property type="evidence" value="ECO:0007669"/>
    <property type="project" value="UniProtKB-SubCell"/>
</dbReference>
<dbReference type="GO" id="GO:0005886">
    <property type="term" value="C:plasma membrane"/>
    <property type="evidence" value="ECO:0000314"/>
    <property type="project" value="UniProtKB"/>
</dbReference>
<dbReference type="GO" id="GO:0003925">
    <property type="term" value="F:G protein activity"/>
    <property type="evidence" value="ECO:0007669"/>
    <property type="project" value="UniProtKB-EC"/>
</dbReference>
<dbReference type="GO" id="GO:0019003">
    <property type="term" value="F:GDP binding"/>
    <property type="evidence" value="ECO:0000315"/>
    <property type="project" value="CAFA"/>
</dbReference>
<dbReference type="GO" id="GO:0005525">
    <property type="term" value="F:GTP binding"/>
    <property type="evidence" value="ECO:0000314"/>
    <property type="project" value="UniProtKB"/>
</dbReference>
<dbReference type="GO" id="GO:0003924">
    <property type="term" value="F:GTPase activity"/>
    <property type="evidence" value="ECO:0000314"/>
    <property type="project" value="WormBase"/>
</dbReference>
<dbReference type="GO" id="GO:0160185">
    <property type="term" value="F:phospholipase C activator activity"/>
    <property type="evidence" value="ECO:0000314"/>
    <property type="project" value="UniProtKB"/>
</dbReference>
<dbReference type="GO" id="GO:0043495">
    <property type="term" value="F:protein-membrane adaptor activity"/>
    <property type="evidence" value="ECO:0007669"/>
    <property type="project" value="Ensembl"/>
</dbReference>
<dbReference type="GO" id="GO:0060612">
    <property type="term" value="P:adipose tissue development"/>
    <property type="evidence" value="ECO:0007669"/>
    <property type="project" value="Ensembl"/>
</dbReference>
<dbReference type="GO" id="GO:0009887">
    <property type="term" value="P:animal organ morphogenesis"/>
    <property type="evidence" value="ECO:0000304"/>
    <property type="project" value="ProtInc"/>
</dbReference>
<dbReference type="GO" id="GO:0007166">
    <property type="term" value="P:cell surface receptor signaling pathway"/>
    <property type="evidence" value="ECO:0000304"/>
    <property type="project" value="ProtInc"/>
</dbReference>
<dbReference type="GO" id="GO:0071480">
    <property type="term" value="P:cellular response to gamma radiation"/>
    <property type="evidence" value="ECO:0000314"/>
    <property type="project" value="CAFA"/>
</dbReference>
<dbReference type="GO" id="GO:0090398">
    <property type="term" value="P:cellular senescence"/>
    <property type="evidence" value="ECO:0000314"/>
    <property type="project" value="BHF-UCL"/>
</dbReference>
<dbReference type="GO" id="GO:0006935">
    <property type="term" value="P:chemotaxis"/>
    <property type="evidence" value="ECO:0000304"/>
    <property type="project" value="ProtInc"/>
</dbReference>
<dbReference type="GO" id="GO:0042832">
    <property type="term" value="P:defense response to protozoan"/>
    <property type="evidence" value="ECO:0007669"/>
    <property type="project" value="Ensembl"/>
</dbReference>
<dbReference type="GO" id="GO:0006897">
    <property type="term" value="P:endocytosis"/>
    <property type="evidence" value="ECO:0007669"/>
    <property type="project" value="Ensembl"/>
</dbReference>
<dbReference type="GO" id="GO:0048144">
    <property type="term" value="P:fibroblast proliferation"/>
    <property type="evidence" value="ECO:0007669"/>
    <property type="project" value="Ensembl"/>
</dbReference>
<dbReference type="GO" id="GO:0008286">
    <property type="term" value="P:insulin receptor signaling pathway"/>
    <property type="evidence" value="ECO:0007669"/>
    <property type="project" value="Ensembl"/>
</dbReference>
<dbReference type="GO" id="GO:0097193">
    <property type="term" value="P:intrinsic apoptotic signaling pathway"/>
    <property type="evidence" value="ECO:0007669"/>
    <property type="project" value="Ensembl"/>
</dbReference>
<dbReference type="GO" id="GO:0000165">
    <property type="term" value="P:MAPK cascade"/>
    <property type="evidence" value="ECO:0000304"/>
    <property type="project" value="Reactome"/>
</dbReference>
<dbReference type="GO" id="GO:0042552">
    <property type="term" value="P:myelination"/>
    <property type="evidence" value="ECO:0007669"/>
    <property type="project" value="Ensembl"/>
</dbReference>
<dbReference type="GO" id="GO:0008285">
    <property type="term" value="P:negative regulation of cell population proliferation"/>
    <property type="evidence" value="ECO:0000314"/>
    <property type="project" value="BHF-UCL"/>
</dbReference>
<dbReference type="GO" id="GO:0010629">
    <property type="term" value="P:negative regulation of gene expression"/>
    <property type="evidence" value="ECO:0000314"/>
    <property type="project" value="BHF-UCL"/>
</dbReference>
<dbReference type="GO" id="GO:0043524">
    <property type="term" value="P:negative regulation of neuron apoptotic process"/>
    <property type="evidence" value="ECO:0007669"/>
    <property type="project" value="Ensembl"/>
</dbReference>
<dbReference type="GO" id="GO:0051402">
    <property type="term" value="P:neuron apoptotic process"/>
    <property type="evidence" value="ECO:0007669"/>
    <property type="project" value="Ensembl"/>
</dbReference>
<dbReference type="GO" id="GO:0090402">
    <property type="term" value="P:oncogene-induced cell senescence"/>
    <property type="evidence" value="ECO:0007669"/>
    <property type="project" value="Ensembl"/>
</dbReference>
<dbReference type="GO" id="GO:0030335">
    <property type="term" value="P:positive regulation of cell migration"/>
    <property type="evidence" value="ECO:0000314"/>
    <property type="project" value="BHF-UCL"/>
</dbReference>
<dbReference type="GO" id="GO:0008284">
    <property type="term" value="P:positive regulation of cell population proliferation"/>
    <property type="evidence" value="ECO:0000314"/>
    <property type="project" value="BHF-UCL"/>
</dbReference>
<dbReference type="GO" id="GO:0050679">
    <property type="term" value="P:positive regulation of epithelial cell proliferation"/>
    <property type="evidence" value="ECO:0000315"/>
    <property type="project" value="BHF-UCL"/>
</dbReference>
<dbReference type="GO" id="GO:0070374">
    <property type="term" value="P:positive regulation of ERK1 and ERK2 cascade"/>
    <property type="evidence" value="ECO:0000314"/>
    <property type="project" value="BHF-UCL"/>
</dbReference>
<dbReference type="GO" id="GO:0048146">
    <property type="term" value="P:positive regulation of fibroblast proliferation"/>
    <property type="evidence" value="ECO:0007669"/>
    <property type="project" value="Ensembl"/>
</dbReference>
<dbReference type="GO" id="GO:0046330">
    <property type="term" value="P:positive regulation of JNK cascade"/>
    <property type="evidence" value="ECO:0000314"/>
    <property type="project" value="BHF-UCL"/>
</dbReference>
<dbReference type="GO" id="GO:0043410">
    <property type="term" value="P:positive regulation of MAPK cascade"/>
    <property type="evidence" value="ECO:0000314"/>
    <property type="project" value="BHF-UCL"/>
</dbReference>
<dbReference type="GO" id="GO:2000630">
    <property type="term" value="P:positive regulation of miRNA metabolic process"/>
    <property type="evidence" value="ECO:0000314"/>
    <property type="project" value="BHF-UCL"/>
</dbReference>
<dbReference type="GO" id="GO:0090314">
    <property type="term" value="P:positive regulation of protein targeting to membrane"/>
    <property type="evidence" value="ECO:0000315"/>
    <property type="project" value="UniProtKB"/>
</dbReference>
<dbReference type="GO" id="GO:1900029">
    <property type="term" value="P:positive regulation of ruffle assembly"/>
    <property type="evidence" value="ECO:0000314"/>
    <property type="project" value="BHF-UCL"/>
</dbReference>
<dbReference type="GO" id="GO:0045944">
    <property type="term" value="P:positive regulation of transcription by RNA polymerase II"/>
    <property type="evidence" value="ECO:0000314"/>
    <property type="project" value="BHF-UCL"/>
</dbReference>
<dbReference type="GO" id="GO:0032729">
    <property type="term" value="P:positive regulation of type II interferon production"/>
    <property type="evidence" value="ECO:0007669"/>
    <property type="project" value="Ensembl"/>
</dbReference>
<dbReference type="GO" id="GO:0090303">
    <property type="term" value="P:positive regulation of wound healing"/>
    <property type="evidence" value="ECO:0000314"/>
    <property type="project" value="BHF-UCL"/>
</dbReference>
<dbReference type="GO" id="GO:0007265">
    <property type="term" value="P:Ras protein signal transduction"/>
    <property type="evidence" value="ECO:0000314"/>
    <property type="project" value="BHF-UCL"/>
</dbReference>
<dbReference type="GO" id="GO:0032956">
    <property type="term" value="P:regulation of actin cytoskeleton organization"/>
    <property type="evidence" value="ECO:0000314"/>
    <property type="project" value="BHF-UCL"/>
</dbReference>
<dbReference type="GO" id="GO:0051726">
    <property type="term" value="P:regulation of cell cycle"/>
    <property type="evidence" value="ECO:0000314"/>
    <property type="project" value="BHF-UCL"/>
</dbReference>
<dbReference type="GO" id="GO:0042127">
    <property type="term" value="P:regulation of cell population proliferation"/>
    <property type="evidence" value="ECO:0000314"/>
    <property type="project" value="ComplexPortal"/>
</dbReference>
<dbReference type="GO" id="GO:0048169">
    <property type="term" value="P:regulation of long-term neuronal synaptic plasticity"/>
    <property type="evidence" value="ECO:0007669"/>
    <property type="project" value="Ensembl"/>
</dbReference>
<dbReference type="GO" id="GO:0098696">
    <property type="term" value="P:regulation of neurotransmitter receptor localization to postsynaptic specialization membrane"/>
    <property type="evidence" value="ECO:0000314"/>
    <property type="project" value="SynGO"/>
</dbReference>
<dbReference type="GO" id="GO:0006357">
    <property type="term" value="P:regulation of transcription by RNA polymerase II"/>
    <property type="evidence" value="ECO:0000314"/>
    <property type="project" value="ComplexPortal"/>
</dbReference>
<dbReference type="GO" id="GO:0014044">
    <property type="term" value="P:Schwann cell development"/>
    <property type="evidence" value="ECO:0007669"/>
    <property type="project" value="Ensembl"/>
</dbReference>
<dbReference type="GO" id="GO:0007165">
    <property type="term" value="P:signal transduction"/>
    <property type="evidence" value="ECO:0000303"/>
    <property type="project" value="ProtInc"/>
</dbReference>
<dbReference type="GO" id="GO:0050852">
    <property type="term" value="P:T cell receptor signaling pathway"/>
    <property type="evidence" value="ECO:0007669"/>
    <property type="project" value="Ensembl"/>
</dbReference>
<dbReference type="GO" id="GO:0042088">
    <property type="term" value="P:T-helper 1 type immune response"/>
    <property type="evidence" value="ECO:0007669"/>
    <property type="project" value="Ensembl"/>
</dbReference>
<dbReference type="CDD" id="cd04138">
    <property type="entry name" value="H_N_K_Ras_like"/>
    <property type="match status" value="1"/>
</dbReference>
<dbReference type="DisProt" id="DP00153"/>
<dbReference type="FunFam" id="3.40.50.300:FF:000096">
    <property type="entry name" value="KRAS proto-oncogene, GTPase"/>
    <property type="match status" value="1"/>
</dbReference>
<dbReference type="Gene3D" id="3.40.50.300">
    <property type="entry name" value="P-loop containing nucleotide triphosphate hydrolases"/>
    <property type="match status" value="1"/>
</dbReference>
<dbReference type="InterPro" id="IPR027417">
    <property type="entry name" value="P-loop_NTPase"/>
</dbReference>
<dbReference type="InterPro" id="IPR005225">
    <property type="entry name" value="Small_GTP-bd"/>
</dbReference>
<dbReference type="InterPro" id="IPR001806">
    <property type="entry name" value="Small_GTPase"/>
</dbReference>
<dbReference type="InterPro" id="IPR020849">
    <property type="entry name" value="Small_GTPase_Ras-type"/>
</dbReference>
<dbReference type="NCBIfam" id="TIGR00231">
    <property type="entry name" value="small_GTP"/>
    <property type="match status" value="1"/>
</dbReference>
<dbReference type="PANTHER" id="PTHR24070">
    <property type="entry name" value="RAS, DI-RAS, AND RHEB FAMILY MEMBERS OF SMALL GTPASE SUPERFAMILY"/>
    <property type="match status" value="1"/>
</dbReference>
<dbReference type="Pfam" id="PF00071">
    <property type="entry name" value="Ras"/>
    <property type="match status" value="1"/>
</dbReference>
<dbReference type="PRINTS" id="PR00449">
    <property type="entry name" value="RASTRNSFRMNG"/>
</dbReference>
<dbReference type="SMART" id="SM00175">
    <property type="entry name" value="RAB"/>
    <property type="match status" value="1"/>
</dbReference>
<dbReference type="SMART" id="SM00173">
    <property type="entry name" value="RAS"/>
    <property type="match status" value="1"/>
</dbReference>
<dbReference type="SMART" id="SM00174">
    <property type="entry name" value="RHO"/>
    <property type="match status" value="1"/>
</dbReference>
<dbReference type="SUPFAM" id="SSF52540">
    <property type="entry name" value="P-loop containing nucleoside triphosphate hydrolases"/>
    <property type="match status" value="1"/>
</dbReference>
<dbReference type="PROSITE" id="PS51421">
    <property type="entry name" value="RAS"/>
    <property type="match status" value="1"/>
</dbReference>
<comment type="function">
    <text evidence="12 13 32 48">Involved in the activation of Ras protein signal transduction (PubMed:22821884). Ras proteins bind GDP/GTP and possess intrinsic GTPase activity (PubMed:12740440, PubMed:14500341, PubMed:9020151).</text>
</comment>
<comment type="catalytic activity">
    <reaction evidence="48">
        <text>GTP + H2O = GDP + phosphate + H(+)</text>
        <dbReference type="Rhea" id="RHEA:19669"/>
        <dbReference type="ChEBI" id="CHEBI:15377"/>
        <dbReference type="ChEBI" id="CHEBI:15378"/>
        <dbReference type="ChEBI" id="CHEBI:37565"/>
        <dbReference type="ChEBI" id="CHEBI:43474"/>
        <dbReference type="ChEBI" id="CHEBI:58189"/>
        <dbReference type="EC" id="3.6.5.2"/>
    </reaction>
</comment>
<comment type="activity regulation">
    <text>Alternates between an inactive form bound to GDP and an active form bound to GTP. Activated by a guanine nucleotide-exchange factor (GEF) and inactivated by a GTPase-activating protein (GAP).</text>
</comment>
<comment type="subunit">
    <text evidence="2 3 4 5 6 7 8 9 13 23 28 38 39 40 41">In its GTP-bound form interacts with PLCE1 (PubMed:11022048). Interacts with TBC1D10C (PubMed:17230191). Interacts with RGL3 (By similarity). Interacts with HSPD1 (By similarity). Found in a complex with at least BRAF, HRAS, MAP2K1, MAPK3 and RGS14 (By similarity). Interacts (active GTP-bound form) with RGS14 (via RBD 1 domain) (By similarity). Forms a signaling complex with RASGRP1 and DGKZ (PubMed:11257115). Interacts with RASSF5 (PubMed:18596699). Interacts with PDE6D (PubMed:11980706). Interacts with IKZF3 (PubMed:10369681). Interacts with RACK1 (PubMed:14500341). Interacts with PIK3CG; the interaction is required for membrane recruitment and beta-gamma G protein dimer-dependent activation of the PI3K gamma complex PIK3CG:PIK3R6 (By similarity). Interacts with RAPGEF2 (PubMed:10608844, PubMed:11598133). Interacts (active GTP-bound form) with both SHOC2 and PP1c (all isoforms) to form a tertiary complex; SHOC2 and PP1c preferably bind M-Ras/MRAS, but they also bind K-Ras/KRAS, N-Ras/NRAS and H-Ras/HRAS (PubMed:35768504, PubMed:35831509, PubMed:36175670). Interacts (GTP-bound form) with MAPKAP1/SIN1; inhibiting H-Ras/HRAS activity (PubMed:35522713).</text>
</comment>
<comment type="interaction">
    <interactant intactId="EBI-350145">
        <id>P01112</id>
    </interactant>
    <interactant intactId="EBI-11022349">
        <id>Q99996-3</id>
        <label>AKAP9</label>
    </interactant>
    <organismsDiffer>false</organismsDiffer>
    <experiments>3</experiments>
</comment>
<comment type="interaction">
    <interactant intactId="EBI-350145">
        <id>P01112</id>
    </interactant>
    <interactant intactId="EBI-12177015">
        <id>P53677-2</id>
        <label>AP3M2</label>
    </interactant>
    <organismsDiffer>false</organismsDiffer>
    <experiments>3</experiments>
</comment>
<comment type="interaction">
    <interactant intactId="EBI-350145">
        <id>P01112</id>
    </interactant>
    <interactant intactId="EBI-365961">
        <id>P10398</id>
        <label>ARAF</label>
    </interactant>
    <organismsDiffer>false</organismsDiffer>
    <experiments>7</experiments>
</comment>
<comment type="interaction">
    <interactant intactId="EBI-350145">
        <id>P01112</id>
    </interactant>
    <interactant intactId="EBI-18172597">
        <id>Q9NXL2-1</id>
        <label>ARHGEF38</label>
    </interactant>
    <organismsDiffer>false</organismsDiffer>
    <experiments>3</experiments>
</comment>
<comment type="interaction">
    <interactant intactId="EBI-350145">
        <id>P01112</id>
    </interactant>
    <interactant intactId="EBI-718459">
        <id>Q9UII2</id>
        <label>ATP5IF1</label>
    </interactant>
    <organismsDiffer>false</organismsDiffer>
    <experiments>3</experiments>
</comment>
<comment type="interaction">
    <interactant intactId="EBI-350145">
        <id>P01112</id>
    </interactant>
    <interactant intactId="EBI-10693257">
        <id>Q9H7T9</id>
        <label>AUNIP</label>
    </interactant>
    <organismsDiffer>false</organismsDiffer>
    <experiments>3</experiments>
</comment>
<comment type="interaction">
    <interactant intactId="EBI-350145">
        <id>P01112</id>
    </interactant>
    <interactant intactId="EBI-741753">
        <id>Q00994</id>
        <label>BEX3</label>
    </interactant>
    <organismsDiffer>false</organismsDiffer>
    <experiments>3</experiments>
</comment>
<comment type="interaction">
    <interactant intactId="EBI-350145">
        <id>P01112</id>
    </interactant>
    <interactant intactId="EBI-2548012">
        <id>Q9H2G9</id>
        <label>BLZF1</label>
    </interactant>
    <organismsDiffer>false</organismsDiffer>
    <experiments>4</experiments>
</comment>
<comment type="interaction">
    <interactant intactId="EBI-350145">
        <id>P01112</id>
    </interactant>
    <interactant intactId="EBI-365980">
        <id>P15056</id>
        <label>BRAF</label>
    </interactant>
    <organismsDiffer>false</organismsDiffer>
    <experiments>8</experiments>
</comment>
<comment type="interaction">
    <interactant intactId="EBI-350145">
        <id>P01112</id>
    </interactant>
    <interactant intactId="EBI-349900">
        <id>Q7Z569</id>
        <label>BRAP</label>
    </interactant>
    <organismsDiffer>false</organismsDiffer>
    <experiments>3</experiments>
</comment>
<comment type="interaction">
    <interactant intactId="EBI-350145">
        <id>P01112</id>
    </interactant>
    <interactant intactId="EBI-5666615">
        <id>Q5PSV4</id>
        <label>BRMS1L</label>
    </interactant>
    <organismsDiffer>false</organismsDiffer>
    <experiments>3</experiments>
</comment>
<comment type="interaction">
    <interactant intactId="EBI-350145">
        <id>P01112</id>
    </interactant>
    <interactant intactId="EBI-23662416">
        <id>Q9ULD4-2</id>
        <label>BRPF3</label>
    </interactant>
    <organismsDiffer>false</organismsDiffer>
    <experiments>3</experiments>
</comment>
<comment type="interaction">
    <interactant intactId="EBI-350145">
        <id>P01112</id>
    </interactant>
    <interactant intactId="EBI-751596">
        <id>Q96LL4</id>
        <label>C8orf48</label>
    </interactant>
    <organismsDiffer>false</organismsDiffer>
    <experiments>3</experiments>
</comment>
<comment type="interaction">
    <interactant intactId="EBI-350145">
        <id>P01112</id>
    </interactant>
    <interactant intactId="EBI-744556">
        <id>Q96HB5</id>
        <label>CCDC120</label>
    </interactant>
    <organismsDiffer>false</organismsDiffer>
    <experiments>3</experiments>
</comment>
<comment type="interaction">
    <interactant intactId="EBI-350145">
        <id>P01112</id>
    </interactant>
    <interactant intactId="EBI-12105646">
        <id>Q49A88-3</id>
        <label>CCDC14</label>
    </interactant>
    <organismsDiffer>false</organismsDiffer>
    <experiments>3</experiments>
</comment>
<comment type="interaction">
    <interactant intactId="EBI-350145">
        <id>P01112</id>
    </interactant>
    <interactant intactId="EBI-9091443">
        <id>Q96GN5-2</id>
        <label>CDCA7L</label>
    </interactant>
    <organismsDiffer>false</organismsDiffer>
    <experiments>3</experiments>
</comment>
<comment type="interaction">
    <interactant intactId="EBI-350145">
        <id>P01112</id>
    </interactant>
    <interactant intactId="EBI-375096">
        <id>P24941</id>
        <label>CDK2</label>
    </interactant>
    <organismsDiffer>false</organismsDiffer>
    <experiments>3</experiments>
</comment>
<comment type="interaction">
    <interactant intactId="EBI-350145">
        <id>P01112</id>
    </interactant>
    <interactant intactId="EBI-3913685">
        <id>O95674</id>
        <label>CDS2</label>
    </interactant>
    <organismsDiffer>false</organismsDiffer>
    <experiments>3</experiments>
</comment>
<comment type="interaction">
    <interactant intactId="EBI-350145">
        <id>P01112</id>
    </interactant>
    <interactant intactId="EBI-1003700">
        <id>Q9H3R5</id>
        <label>CENPH</label>
    </interactant>
    <organismsDiffer>false</organismsDiffer>
    <experiments>3</experiments>
</comment>
<comment type="interaction">
    <interactant intactId="EBI-350145">
        <id>P01112</id>
    </interactant>
    <interactant intactId="EBI-12950757">
        <id>Q9Y4F5-3</id>
        <label>CEP170B</label>
    </interactant>
    <organismsDiffer>false</organismsDiffer>
    <experiments>3</experiments>
</comment>
<comment type="interaction">
    <interactant intactId="EBI-350145">
        <id>P01112</id>
    </interactant>
    <interactant intactId="EBI-308614">
        <id>Q86XR8</id>
        <label>CEP57</label>
    </interactant>
    <organismsDiffer>false</organismsDiffer>
    <experiments>3</experiments>
</comment>
<comment type="interaction">
    <interactant intactId="EBI-350145">
        <id>P01112</id>
    </interactant>
    <interactant intactId="EBI-11953200">
        <id>Q494V2-2</id>
        <label>CFAP100</label>
    </interactant>
    <organismsDiffer>false</organismsDiffer>
    <experiments>3</experiments>
</comment>
<comment type="interaction">
    <interactant intactId="EBI-350145">
        <id>P01112</id>
    </interactant>
    <interactant intactId="EBI-749253">
        <id>Q8WUX9</id>
        <label>CHMP7</label>
    </interactant>
    <organismsDiffer>false</organismsDiffer>
    <experiments>4</experiments>
</comment>
<comment type="interaction">
    <interactant intactId="EBI-350145">
        <id>P01112</id>
    </interactant>
    <interactant intactId="EBI-12275416">
        <id>Q14117</id>
        <label>DPYS</label>
    </interactant>
    <organismsDiffer>false</organismsDiffer>
    <experiments>3</experiments>
</comment>
<comment type="interaction">
    <interactant intactId="EBI-350145">
        <id>P01112</id>
    </interactant>
    <interactant intactId="EBI-3443946">
        <id>Q9Y6W6</id>
        <label>DUSP10</label>
    </interactant>
    <organismsDiffer>false</organismsDiffer>
    <experiments>3</experiments>
</comment>
<comment type="interaction">
    <interactant intactId="EBI-350145">
        <id>P01112</id>
    </interactant>
    <interactant intactId="EBI-740850">
        <id>O14641</id>
        <label>DVL2</label>
    </interactant>
    <organismsDiffer>false</organismsDiffer>
    <experiments>3</experiments>
</comment>
<comment type="interaction">
    <interactant intactId="EBI-350145">
        <id>P01112</id>
    </interactant>
    <interactant intactId="EBI-7779316">
        <id>A0AVK6</id>
        <label>E2F8</label>
    </interactant>
    <organismsDiffer>false</organismsDiffer>
    <experiments>3</experiments>
</comment>
<comment type="interaction">
    <interactant intactId="EBI-350145">
        <id>P01112</id>
    </interactant>
    <interactant intactId="EBI-9917523">
        <id>Q8NB25</id>
        <label>FAM184A</label>
    </interactant>
    <organismsDiffer>false</organismsDiffer>
    <experiments>3</experiments>
</comment>
<comment type="interaction">
    <interactant intactId="EBI-350145">
        <id>P01112</id>
    </interactant>
    <interactant intactId="EBI-8468186">
        <id>Q8IZU1</id>
        <label>FAM9A</label>
    </interactant>
    <organismsDiffer>false</organismsDiffer>
    <experiments>3</experiments>
</comment>
<comment type="interaction">
    <interactant intactId="EBI-350145">
        <id>P01112</id>
    </interactant>
    <interactant intactId="EBI-11958845">
        <id>O94868-3</id>
        <label>FCHSD2</label>
    </interactant>
    <organismsDiffer>false</organismsDiffer>
    <experiments>3</experiments>
</comment>
<comment type="interaction">
    <interactant intactId="EBI-350145">
        <id>P01112</id>
    </interactant>
    <interactant intactId="EBI-744510">
        <id>P15407</id>
        <label>FOSL1</label>
    </interactant>
    <organismsDiffer>false</organismsDiffer>
    <experiments>3</experiments>
</comment>
<comment type="interaction">
    <interactant intactId="EBI-350145">
        <id>P01112</id>
    </interactant>
    <interactant intactId="EBI-3893419">
        <id>P15408</id>
        <label>FOSL2</label>
    </interactant>
    <organismsDiffer>false</organismsDiffer>
    <experiments>3</experiments>
</comment>
<comment type="interaction">
    <interactant intactId="EBI-350145">
        <id>P01112</id>
    </interactant>
    <interactant intactId="EBI-389518">
        <id>P52655</id>
        <label>GTF2A1</label>
    </interactant>
    <organismsDiffer>false</organismsDiffer>
    <experiments>3</experiments>
</comment>
<comment type="interaction">
    <interactant intactId="EBI-350145">
        <id>P01112</id>
    </interactant>
    <interactant intactId="EBI-2514791">
        <id>Q96CS2</id>
        <label>HAUS1</label>
    </interactant>
    <organismsDiffer>false</organismsDiffer>
    <experiments>3</experiments>
</comment>
<comment type="interaction">
    <interactant intactId="EBI-350145">
        <id>P01112</id>
    </interactant>
    <interactant intactId="EBI-2558143">
        <id>Q9BT25</id>
        <label>HAUS8</label>
    </interactant>
    <organismsDiffer>false</organismsDiffer>
    <experiments>3</experiments>
</comment>
<comment type="interaction">
    <interactant intactId="EBI-350145">
        <id>P01112</id>
    </interactant>
    <interactant intactId="EBI-743438">
        <id>Q8IV36</id>
        <label>HID1</label>
    </interactant>
    <organismsDiffer>false</organismsDiffer>
    <experiments>3</experiments>
</comment>
<comment type="interaction">
    <interactant intactId="EBI-350145">
        <id>P01112</id>
    </interactant>
    <interactant intactId="EBI-2652631">
        <id>O43248</id>
        <label>HOXC11</label>
    </interactant>
    <organismsDiffer>false</organismsDiffer>
    <experiments>3</experiments>
</comment>
<comment type="interaction">
    <interactant intactId="EBI-350145">
        <id>P01112</id>
    </interactant>
    <interactant intactId="EBI-2963255">
        <id>Q53GQ0</id>
        <label>HSD17B12</label>
    </interactant>
    <organismsDiffer>false</organismsDiffer>
    <experiments>3</experiments>
</comment>
<comment type="interaction">
    <interactant intactId="EBI-350145">
        <id>P01112</id>
    </interactant>
    <interactant intactId="EBI-352528">
        <id>P10809</id>
        <label>HSPD1</label>
    </interactant>
    <organismsDiffer>false</organismsDiffer>
    <experiments>3</experiments>
</comment>
<comment type="interaction">
    <interactant intactId="EBI-350145">
        <id>P01112</id>
    </interactant>
    <interactant intactId="EBI-12141931">
        <id>Q8NDH6-2</id>
        <label>ICA1L</label>
    </interactant>
    <organismsDiffer>false</organismsDiffer>
    <experiments>3</experiments>
</comment>
<comment type="interaction">
    <interactant intactId="EBI-350145">
        <id>P01112</id>
    </interactant>
    <interactant intactId="EBI-11742277">
        <id>Q8IY31-2</id>
        <label>IFT20</label>
    </interactant>
    <organismsDiffer>false</organismsDiffer>
    <experiments>3</experiments>
</comment>
<comment type="interaction">
    <interactant intactId="EBI-350145">
        <id>P01112</id>
    </interactant>
    <interactant intactId="EBI-10220600">
        <id>Q8NA54</id>
        <label>IQUB</label>
    </interactant>
    <organismsDiffer>false</organismsDiffer>
    <experiments>3</experiments>
</comment>
<comment type="interaction">
    <interactant intactId="EBI-350145">
        <id>P01112</id>
    </interactant>
    <interactant intactId="EBI-712105">
        <id>Q13352</id>
        <label>ITGB3BP</label>
    </interactant>
    <organismsDiffer>false</organismsDiffer>
    <experiments>3</experiments>
</comment>
<comment type="interaction">
    <interactant intactId="EBI-350145">
        <id>P01112</id>
    </interactant>
    <interactant intactId="EBI-25863618">
        <id>P28290-2</id>
        <label>ITPRID2</label>
    </interactant>
    <organismsDiffer>false</organismsDiffer>
    <experiments>3</experiments>
</comment>
<comment type="interaction">
    <interactant intactId="EBI-350145">
        <id>P01112</id>
    </interactant>
    <interactant intactId="EBI-14069005">
        <id>Q9BVG8-5</id>
        <label>KIFC3</label>
    </interactant>
    <organismsDiffer>false</organismsDiffer>
    <experiments>3</experiments>
</comment>
<comment type="interaction">
    <interactant intactId="EBI-350145">
        <id>P01112</id>
    </interactant>
    <interactant intactId="EBI-2554344">
        <id>Q2M2Z5</id>
        <label>KIZ</label>
    </interactant>
    <organismsDiffer>false</organismsDiffer>
    <experiments>3</experiments>
</comment>
<comment type="interaction">
    <interactant intactId="EBI-350145">
        <id>P01112</id>
    </interactant>
    <interactant intactId="EBI-1643885">
        <id>Q6P597</id>
        <label>KLC3</label>
    </interactant>
    <organismsDiffer>false</organismsDiffer>
    <experiments>3</experiments>
</comment>
<comment type="interaction">
    <interactant intactId="EBI-350145">
        <id>P01112</id>
    </interactant>
    <interactant intactId="EBI-8472267">
        <id>P57682</id>
        <label>KLF3</label>
    </interactant>
    <organismsDiffer>false</organismsDiffer>
    <experiments>3</experiments>
</comment>
<comment type="interaction">
    <interactant intactId="EBI-350145">
        <id>P01112</id>
    </interactant>
    <interactant intactId="EBI-8524663">
        <id>Q9UH77</id>
        <label>KLHL3</label>
    </interactant>
    <organismsDiffer>false</organismsDiffer>
    <experiments>3</experiments>
</comment>
<comment type="interaction">
    <interactant intactId="EBI-350145">
        <id>P01112</id>
    </interactant>
    <interactant intactId="EBI-742756">
        <id>P08727</id>
        <label>KRT19</label>
    </interactant>
    <organismsDiffer>false</organismsDiffer>
    <experiments>3</experiments>
</comment>
<comment type="interaction">
    <interactant intactId="EBI-350145">
        <id>P01112</id>
    </interactant>
    <interactant intactId="EBI-1049638">
        <id>Q14525</id>
        <label>KRT33B</label>
    </interactant>
    <organismsDiffer>false</organismsDiffer>
    <experiments>3</experiments>
</comment>
<comment type="interaction">
    <interactant intactId="EBI-350145">
        <id>P01112</id>
    </interactant>
    <interactant intactId="EBI-9088686">
        <id>Q14847-2</id>
        <label>LASP1</label>
    </interactant>
    <organismsDiffer>false</organismsDiffer>
    <experiments>3</experiments>
</comment>
<comment type="interaction">
    <interactant intactId="EBI-350145">
        <id>P01112</id>
    </interactant>
    <interactant intactId="EBI-741355">
        <id>Q96LR2</id>
        <label>LURAP1</label>
    </interactant>
    <organismsDiffer>false</organismsDiffer>
    <experiments>3</experiments>
</comment>
<comment type="interaction">
    <interactant intactId="EBI-350145">
        <id>P01112</id>
    </interactant>
    <interactant intactId="EBI-3911344">
        <id>P27338</id>
        <label>MAOB</label>
    </interactant>
    <organismsDiffer>false</organismsDiffer>
    <experiments>3</experiments>
</comment>
<comment type="interaction">
    <interactant intactId="EBI-350145">
        <id>P01112</id>
    </interactant>
    <interactant intactId="EBI-358011">
        <id>Q99558</id>
        <label>MAP3K14</label>
    </interactant>
    <organismsDiffer>false</organismsDiffer>
    <experiments>3</experiments>
</comment>
<comment type="interaction">
    <interactant intactId="EBI-350145">
        <id>P01112</id>
    </interactant>
    <interactant intactId="EBI-348259">
        <id>Q96EZ8</id>
        <label>MCRS1</label>
    </interactant>
    <organismsDiffer>false</organismsDiffer>
    <experiments>3</experiments>
</comment>
<comment type="interaction">
    <interactant intactId="EBI-350145">
        <id>P01112</id>
    </interactant>
    <interactant intactId="EBI-25851300">
        <id>Q8TAC0</id>
        <label>MGC27345</label>
    </interactant>
    <organismsDiffer>false</organismsDiffer>
    <experiments>3</experiments>
</comment>
<comment type="interaction">
    <interactant intactId="EBI-350145">
        <id>P01112</id>
    </interactant>
    <interactant intactId="EBI-2801965">
        <id>Q5JXC2</id>
        <label>MIIP</label>
    </interactant>
    <organismsDiffer>false</organismsDiffer>
    <experiments>3</experiments>
</comment>
<comment type="interaction">
    <interactant intactId="EBI-350145">
        <id>P01112</id>
    </interactant>
    <interactant intactId="EBI-743811">
        <id>Q8NEH6</id>
        <label>MNS1</label>
    </interactant>
    <organismsDiffer>false</organismsDiffer>
    <experiments>3</experiments>
</comment>
<comment type="interaction">
    <interactant intactId="EBI-350145">
        <id>P01112</id>
    </interactant>
    <interactant intactId="EBI-995714">
        <id>Q9Y605</id>
        <label>MRFAP1</label>
    </interactant>
    <organismsDiffer>false</organismsDiffer>
    <experiments>3</experiments>
</comment>
<comment type="interaction">
    <interactant intactId="EBI-350145">
        <id>P01112</id>
    </interactant>
    <interactant intactId="EBI-748896">
        <id>Q96HT8</id>
        <label>MRFAP1L1</label>
    </interactant>
    <organismsDiffer>false</organismsDiffer>
    <experiments>3</experiments>
</comment>
<comment type="interaction">
    <interactant intactId="EBI-350145">
        <id>P01112</id>
    </interactant>
    <interactant intactId="EBI-928842">
        <id>Q9GZM8</id>
        <label>NDEL1</label>
    </interactant>
    <organismsDiffer>false</organismsDiffer>
    <experiments>3</experiments>
</comment>
<comment type="interaction">
    <interactant intactId="EBI-350145">
        <id>P01112</id>
    </interactant>
    <interactant intactId="EBI-1172917">
        <id>P21359</id>
        <label>NF1</label>
    </interactant>
    <organismsDiffer>false</organismsDiffer>
    <experiments>3</experiments>
</comment>
<comment type="interaction">
    <interactant intactId="EBI-350145">
        <id>P01112</id>
    </interactant>
    <interactant intactId="EBI-718372">
        <id>Q8N5V2</id>
        <label>NGEF</label>
    </interactant>
    <organismsDiffer>false</organismsDiffer>
    <experiments>3</experiments>
</comment>
<comment type="interaction">
    <interactant intactId="EBI-350145">
        <id>P01112</id>
    </interactant>
    <interactant intactId="EBI-2802743">
        <id>Q6PHZ7</id>
        <label>NR2C2</label>
    </interactant>
    <organismsDiffer>false</organismsDiffer>
    <experiments>3</experiments>
</comment>
<comment type="interaction">
    <interactant intactId="EBI-350145">
        <id>P01112</id>
    </interactant>
    <interactant intactId="EBI-22002759">
        <id>Q9BZ95-3</id>
        <label>NSD3</label>
    </interactant>
    <organismsDiffer>false</organismsDiffer>
    <experiments>3</experiments>
</comment>
<comment type="interaction">
    <interactant intactId="EBI-350145">
        <id>P01112</id>
    </interactant>
    <interactant intactId="EBI-8466445">
        <id>A5D8V7</id>
        <label>ODAD3</label>
    </interactant>
    <organismsDiffer>false</organismsDiffer>
    <experiments>3</experiments>
</comment>
<comment type="interaction">
    <interactant intactId="EBI-350145">
        <id>P01112</id>
    </interactant>
    <interactant intactId="EBI-536879">
        <id>O43482</id>
        <label>OIP5</label>
    </interactant>
    <organismsDiffer>false</organismsDiffer>
    <experiments>3</experiments>
</comment>
<comment type="interaction">
    <interactant intactId="EBI-350145">
        <id>P01112</id>
    </interactant>
    <interactant intactId="EBI-22012354">
        <id>Q9BR81</id>
        <label>PCDHGC3</label>
    </interactant>
    <organismsDiffer>false</organismsDiffer>
    <experiments>3</experiments>
</comment>
<comment type="interaction">
    <interactant intactId="EBI-350145">
        <id>P01112</id>
    </interactant>
    <interactant intactId="EBI-2557276">
        <id>O15534</id>
        <label>PER1</label>
    </interactant>
    <organismsDiffer>false</organismsDiffer>
    <experiments>3</experiments>
</comment>
<comment type="interaction">
    <interactant intactId="EBI-350145">
        <id>P01112</id>
    </interactant>
    <interactant intactId="EBI-722852">
        <id>Q9BUL5</id>
        <label>PHF23</label>
    </interactant>
    <organismsDiffer>false</organismsDiffer>
    <experiments>3</experiments>
</comment>
<comment type="interaction">
    <interactant intactId="EBI-350145">
        <id>P01112</id>
    </interactant>
    <interactant intactId="EBI-718309">
        <id>O00329</id>
        <label>PIK3CD</label>
    </interactant>
    <organismsDiffer>false</organismsDiffer>
    <experiments>2</experiments>
</comment>
<comment type="interaction">
    <interactant intactId="EBI-350145">
        <id>P01112</id>
    </interactant>
    <interactant intactId="EBI-6470902">
        <id>O00329-2</id>
        <label>PIK3CD</label>
    </interactant>
    <organismsDiffer>false</organismsDiffer>
    <experiments>2</experiments>
</comment>
<comment type="interaction">
    <interactant intactId="EBI-350145">
        <id>P01112</id>
    </interactant>
    <interactant intactId="EBI-311059">
        <id>Q9UPR0</id>
        <label>PLCL2</label>
    </interactant>
    <organismsDiffer>false</organismsDiffer>
    <experiments>3</experiments>
</comment>
<comment type="interaction">
    <interactant intactId="EBI-350145">
        <id>P01112</id>
    </interactant>
    <interactant intactId="EBI-710402">
        <id>Q96I34</id>
        <label>PPP1R16A</label>
    </interactant>
    <organismsDiffer>false</organismsDiffer>
    <experiments>3</experiments>
</comment>
<comment type="interaction">
    <interactant intactId="EBI-350145">
        <id>P01112</id>
    </interactant>
    <interactant intactId="EBI-10695066">
        <id>Q15435-3</id>
        <label>PPP1R7</label>
    </interactant>
    <organismsDiffer>false</organismsDiffer>
    <experiments>3</experiments>
</comment>
<comment type="interaction">
    <interactant intactId="EBI-350145">
        <id>P01112</id>
    </interactant>
    <interactant intactId="EBI-365996">
        <id>P04049</id>
        <label>RAF1</label>
    </interactant>
    <organismsDiffer>false</organismsDiffer>
    <experiments>27</experiments>
</comment>
<comment type="interaction">
    <interactant intactId="EBI-350145">
        <id>P01112</id>
    </interactant>
    <interactant intactId="EBI-1036803">
        <id>P11233</id>
        <label>RALA</label>
    </interactant>
    <organismsDiffer>false</organismsDiffer>
    <experiments>2</experiments>
</comment>
<comment type="interaction">
    <interactant intactId="EBI-350145">
        <id>P01112</id>
    </interactant>
    <interactant intactId="EBI-749285">
        <id>Q15311</id>
        <label>RALBP1</label>
    </interactant>
    <organismsDiffer>false</organismsDiffer>
    <experiments>3</experiments>
</comment>
<comment type="interaction">
    <interactant intactId="EBI-350145">
        <id>P01112</id>
    </interactant>
    <interactant intactId="EBI-365861">
        <id>Q12967</id>
        <label>RALGDS</label>
    </interactant>
    <organismsDiffer>false</organismsDiffer>
    <experiments>3</experiments>
</comment>
<comment type="interaction">
    <interactant intactId="EBI-350145">
        <id>P01112</id>
    </interactant>
    <interactant intactId="EBI-438698">
        <id>Q9NS23-2</id>
        <label>RASSF1</label>
    </interactant>
    <organismsDiffer>false</organismsDiffer>
    <experiments>2</experiments>
</comment>
<comment type="interaction">
    <interactant intactId="EBI-350145">
        <id>P01112</id>
    </interactant>
    <interactant intactId="EBI-438710">
        <id>Q9NS23-4</id>
        <label>RASSF1</label>
    </interactant>
    <organismsDiffer>false</organismsDiffer>
    <experiments>4</experiments>
</comment>
<comment type="interaction">
    <interactant intactId="EBI-350145">
        <id>P01112</id>
    </interactant>
    <interactant intactId="EBI-367390">
        <id>Q8WWW0</id>
        <label>RASSF5</label>
    </interactant>
    <organismsDiffer>false</organismsDiffer>
    <experiments>2</experiments>
</comment>
<comment type="interaction">
    <interactant intactId="EBI-350145">
        <id>P01112</id>
    </interactant>
    <interactant intactId="EBI-12068216">
        <id>Q8TBY0</id>
        <label>RBM46</label>
    </interactant>
    <organismsDiffer>false</organismsDiffer>
    <experiments>3</experiments>
</comment>
<comment type="interaction">
    <interactant intactId="EBI-350145">
        <id>P01112</id>
    </interactant>
    <interactant intactId="EBI-1504830">
        <id>Q9P2K3-2</id>
        <label>RCOR3</label>
    </interactant>
    <organismsDiffer>false</organismsDiffer>
    <experiments>3</experiments>
</comment>
<comment type="interaction">
    <interactant intactId="EBI-350145">
        <id>P01112</id>
    </interactant>
    <interactant intactId="EBI-365926">
        <id>Q9NZL6</id>
        <label>RGL1</label>
    </interactant>
    <organismsDiffer>false</organismsDiffer>
    <experiments>4</experiments>
</comment>
<comment type="interaction">
    <interactant intactId="EBI-350145">
        <id>P01112</id>
    </interactant>
    <interactant intactId="EBI-712355">
        <id>O15211</id>
        <label>RGL2</label>
    </interactant>
    <organismsDiffer>false</organismsDiffer>
    <experiments>3</experiments>
</comment>
<comment type="interaction">
    <interactant intactId="EBI-350145">
        <id>P01112</id>
    </interactant>
    <interactant intactId="EBI-21890191">
        <id>Q8IXN7</id>
        <label>RIMKLA</label>
    </interactant>
    <organismsDiffer>false</organismsDiffer>
    <experiments>3</experiments>
</comment>
<comment type="interaction">
    <interactant intactId="EBI-350145">
        <id>P01112</id>
    </interactant>
    <interactant intactId="EBI-366017">
        <id>Q13671</id>
        <label>RIN1</label>
    </interactant>
    <organismsDiffer>false</organismsDiffer>
    <experiments>14</experiments>
</comment>
<comment type="interaction">
    <interactant intactId="EBI-350145">
        <id>P01112</id>
    </interactant>
    <interactant intactId="EBI-366030">
        <id>Q13671-1</id>
        <label>RIN1</label>
    </interactant>
    <organismsDiffer>false</organismsDiffer>
    <experiments>2</experiments>
</comment>
<comment type="interaction">
    <interactant intactId="EBI-350145">
        <id>P01112</id>
    </interactant>
    <interactant intactId="EBI-749039">
        <id>Q8WVD3</id>
        <label>RNF138</label>
    </interactant>
    <organismsDiffer>false</organismsDiffer>
    <experiments>3</experiments>
</comment>
<comment type="interaction">
    <interactant intactId="EBI-350145">
        <id>P01112</id>
    </interactant>
    <interactant intactId="EBI-25837959">
        <id>Q9BY12-3</id>
        <label>SCAPER</label>
    </interactant>
    <organismsDiffer>false</organismsDiffer>
    <experiments>3</experiments>
</comment>
<comment type="interaction">
    <interactant intactId="EBI-350145">
        <id>P01112</id>
    </interactant>
    <interactant intactId="EBI-749111">
        <id>Q13435</id>
        <label>SF3B2</label>
    </interactant>
    <organismsDiffer>false</organismsDiffer>
    <experiments>3</experiments>
</comment>
<comment type="interaction">
    <interactant intactId="EBI-350145">
        <id>P01112</id>
    </interactant>
    <interactant intactId="EBI-358419">
        <id>Q12824</id>
        <label>SMARCB1</label>
    </interactant>
    <organismsDiffer>false</organismsDiffer>
    <experiments>3</experiments>
</comment>
<comment type="interaction">
    <interactant intactId="EBI-350145">
        <id>P01112</id>
    </interactant>
    <interactant intactId="EBI-632715">
        <id>Q13573</id>
        <label>SNW1</label>
    </interactant>
    <organismsDiffer>false</organismsDiffer>
    <experiments>3</experiments>
</comment>
<comment type="interaction">
    <interactant intactId="EBI-350145">
        <id>P01112</id>
    </interactant>
    <interactant intactId="EBI-297487">
        <id>Q07889</id>
        <label>SOS1</label>
    </interactant>
    <organismsDiffer>false</organismsDiffer>
    <experiments>11</experiments>
</comment>
<comment type="interaction">
    <interactant intactId="EBI-350145">
        <id>P01112</id>
    </interactant>
    <interactant intactId="EBI-12041693">
        <id>Q86W54-2</id>
        <label>SPATA24</label>
    </interactant>
    <organismsDiffer>false</organismsDiffer>
    <experiments>3</experiments>
</comment>
<comment type="interaction">
    <interactant intactId="EBI-350145">
        <id>P01112</id>
    </interactant>
    <interactant intactId="EBI-12025738">
        <id>Q92783-2</id>
        <label>STAM</label>
    </interactant>
    <organismsDiffer>false</organismsDiffer>
    <experiments>3</experiments>
</comment>
<comment type="interaction">
    <interactant intactId="EBI-350145">
        <id>P01112</id>
    </interactant>
    <interactant intactId="EBI-373258">
        <id>O75886</id>
        <label>STAM2</label>
    </interactant>
    <organismsDiffer>false</organismsDiffer>
    <experiments>3</experiments>
</comment>
<comment type="interaction">
    <interactant intactId="EBI-350145">
        <id>P01112</id>
    </interactant>
    <interactant intactId="EBI-448878">
        <id>Q13586</id>
        <label>STIM1</label>
    </interactant>
    <organismsDiffer>false</organismsDiffer>
    <experiments>4</experiments>
</comment>
<comment type="interaction">
    <interactant intactId="EBI-350145">
        <id>P01112</id>
    </interactant>
    <interactant intactId="EBI-8484990">
        <id>Q8N4C7</id>
        <label>STX19</label>
    </interactant>
    <organismsDiffer>false</organismsDiffer>
    <experiments>3</experiments>
</comment>
<comment type="interaction">
    <interactant intactId="EBI-350145">
        <id>P01112</id>
    </interactant>
    <interactant intactId="EBI-473249">
        <id>O75528</id>
        <label>TADA3</label>
    </interactant>
    <organismsDiffer>false</organismsDiffer>
    <experiments>3</experiments>
</comment>
<comment type="interaction">
    <interactant intactId="EBI-350145">
        <id>P01112</id>
    </interactant>
    <interactant intactId="EBI-711018">
        <id>P54274-2</id>
        <label>TERF1</label>
    </interactant>
    <organismsDiffer>false</organismsDiffer>
    <experiments>3</experiments>
</comment>
<comment type="interaction">
    <interactant intactId="EBI-350145">
        <id>P01112</id>
    </interactant>
    <interactant intactId="EBI-12090309">
        <id>Q9BXU0</id>
        <label>TEX12</label>
    </interactant>
    <organismsDiffer>false</organismsDiffer>
    <experiments>3</experiments>
</comment>
<comment type="interaction">
    <interactant intactId="EBI-350145">
        <id>P01112</id>
    </interactant>
    <interactant intactId="EBI-12833746">
        <id>Q5T0J7-2</id>
        <label>TEX35</label>
    </interactant>
    <organismsDiffer>false</organismsDiffer>
    <experiments>3</experiments>
</comment>
<comment type="interaction">
    <interactant intactId="EBI-350145">
        <id>P01112</id>
    </interactant>
    <interactant intactId="EBI-7684443">
        <id>Q5T1C6</id>
        <label>THEM4</label>
    </interactant>
    <organismsDiffer>false</organismsDiffer>
    <experiments>3</experiments>
</comment>
<comment type="interaction">
    <interactant intactId="EBI-350145">
        <id>P01112</id>
    </interactant>
    <interactant intactId="EBI-9089156">
        <id>Q8IUR5-4</id>
        <label>TMTC1</label>
    </interactant>
    <organismsDiffer>false</organismsDiffer>
    <experiments>3</experiments>
</comment>
<comment type="interaction">
    <interactant intactId="EBI-350145">
        <id>P01112</id>
    </interactant>
    <interactant intactId="EBI-740098">
        <id>P36406</id>
        <label>TRIM23</label>
    </interactant>
    <organismsDiffer>false</organismsDiffer>
    <experiments>3</experiments>
</comment>
<comment type="interaction">
    <interactant intactId="EBI-350145">
        <id>P01112</id>
    </interactant>
    <interactant intactId="EBI-11525489">
        <id>Q86WT6-2</id>
        <label>TRIM69</label>
    </interactant>
    <organismsDiffer>false</organismsDiffer>
    <experiments>3</experiments>
</comment>
<comment type="interaction">
    <interactant intactId="EBI-350145">
        <id>P01112</id>
    </interactant>
    <interactant intactId="EBI-21353855">
        <id>Q99598</id>
        <label>TSNAX</label>
    </interactant>
    <organismsDiffer>false</organismsDiffer>
    <experiments>3</experiments>
</comment>
<comment type="interaction">
    <interactant intactId="EBI-350145">
        <id>P01112</id>
    </interactant>
    <interactant intactId="EBI-8656864">
        <id>Q6PF05</id>
        <label>TTC23L</label>
    </interactant>
    <organismsDiffer>false</organismsDiffer>
    <experiments>3</experiments>
</comment>
<comment type="interaction">
    <interactant intactId="EBI-350145">
        <id>P01112</id>
    </interactant>
    <interactant intactId="EBI-10964469">
        <id>Q9UGJ1-2</id>
        <label>TUBGCP4</label>
    </interactant>
    <organismsDiffer>false</organismsDiffer>
    <experiments>3</experiments>
</comment>
<comment type="interaction">
    <interactant intactId="EBI-350145">
        <id>P01112</id>
    </interactant>
    <interactant intactId="EBI-2819725">
        <id>Q9Y5Z9</id>
        <label>UBIAD1</label>
    </interactant>
    <organismsDiffer>false</organismsDiffer>
    <experiments>9</experiments>
</comment>
<comment type="interaction">
    <interactant intactId="EBI-350145">
        <id>P01112</id>
    </interactant>
    <interactant intactId="EBI-1054489">
        <id>P22415</id>
        <label>USF1</label>
    </interactant>
    <organismsDiffer>false</organismsDiffer>
    <experiments>3</experiments>
</comment>
<comment type="interaction">
    <interactant intactId="EBI-350145">
        <id>P01112</id>
    </interactant>
    <interactant intactId="EBI-8601749">
        <id>Q495M9</id>
        <label>USH1G</label>
    </interactant>
    <organismsDiffer>false</organismsDiffer>
    <experiments>3</experiments>
</comment>
<comment type="interaction">
    <interactant intactId="EBI-350145">
        <id>P01112</id>
    </interactant>
    <interactant intactId="EBI-373380">
        <id>Q9H270</id>
        <label>VPS11</label>
    </interactant>
    <organismsDiffer>false</organismsDiffer>
    <experiments>3</experiments>
</comment>
<comment type="interaction">
    <interactant intactId="EBI-350145">
        <id>P01112</id>
    </interactant>
    <interactant intactId="EBI-2850578">
        <id>Q8NEZ2</id>
        <label>VPS37A</label>
    </interactant>
    <organismsDiffer>false</organismsDiffer>
    <experiments>3</experiments>
</comment>
<comment type="interaction">
    <interactant intactId="EBI-350145">
        <id>P01112</id>
    </interactant>
    <interactant intactId="EBI-11745701">
        <id>P19544-6</id>
        <label>WT1</label>
    </interactant>
    <organismsDiffer>false</organismsDiffer>
    <experiments>3</experiments>
</comment>
<comment type="interaction">
    <interactant intactId="EBI-350145">
        <id>P01112</id>
    </interactant>
    <interactant intactId="EBI-10176632">
        <id>O43829</id>
        <label>ZBTB14</label>
    </interactant>
    <organismsDiffer>false</organismsDiffer>
    <experiments>3</experiments>
</comment>
<comment type="interaction">
    <interactant intactId="EBI-350145">
        <id>P01112</id>
    </interactant>
    <interactant intactId="EBI-8489702">
        <id>Q9C0F3</id>
        <label>ZNF436</label>
    </interactant>
    <organismsDiffer>false</organismsDiffer>
    <experiments>3</experiments>
</comment>
<comment type="interaction">
    <interactant intactId="EBI-350145">
        <id>P01112</id>
    </interactant>
    <interactant intactId="EBI-25831475">
        <id>Q7Z637</id>
    </interactant>
    <organismsDiffer>false</organismsDiffer>
    <experiments>3</experiments>
</comment>
<comment type="interaction">
    <interactant intactId="EBI-350145">
        <id>P01112</id>
    </interactant>
    <interactant intactId="EBI-10259496">
        <id>Q86V28</id>
    </interactant>
    <organismsDiffer>false</organismsDiffer>
    <experiments>3</experiments>
</comment>
<comment type="interaction">
    <interactant intactId="EBI-350145">
        <id>P01112</id>
    </interactant>
    <interactant intactId="EBI-641748">
        <id>P42337</id>
        <label>Pik3ca</label>
    </interactant>
    <organismsDiffer>true</organismsDiffer>
    <experiments>2</experiments>
</comment>
<comment type="interaction">
    <interactant intactId="EBI-350145">
        <id>P01112</id>
    </interactant>
    <interactant intactId="EBI-476965">
        <id>Q9Z0S9</id>
        <label>Rabac1</label>
    </interactant>
    <organismsDiffer>true</organismsDiffer>
    <experiments>4</experiments>
</comment>
<comment type="interaction">
    <interactant intactId="EBI-350145">
        <id>P01112</id>
    </interactant>
    <interactant intactId="EBI-772212">
        <id>Q9EQZ6</id>
        <label>Rapgef4</label>
    </interactant>
    <organismsDiffer>true</organismsDiffer>
    <experiments>3</experiments>
</comment>
<comment type="interaction">
    <interactant intactId="EBI-350145">
        <id>P01112</id>
    </interactant>
    <interactant intactId="EBI-645522">
        <id>P27671</id>
        <label>Rasgrf1</label>
    </interactant>
    <organismsDiffer>true</organismsDiffer>
    <experiments>2</experiments>
</comment>
<comment type="interaction">
    <interactant intactId="EBI-350145">
        <id>P01112</id>
    </interactant>
    <interactant intactId="EBI-960530">
        <id>Q5EBH1</id>
        <label>Rassf5</label>
    </interactant>
    <organismsDiffer>true</organismsDiffer>
    <experiments>13</experiments>
</comment>
<comment type="interaction">
    <interactant intactId="EBI-350145">
        <id>P01112</id>
    </interactant>
    <interactant intactId="EBI-960543">
        <id>Q5EBH1-1</id>
        <label>Rassf5</label>
    </interactant>
    <organismsDiffer>true</organismsDiffer>
    <experiments>3</experiments>
</comment>
<comment type="interaction">
    <interactant intactId="EBI-13290525">
        <id>P01112-2</id>
    </interactant>
    <interactant intactId="EBI-12832744">
        <id>P52306-5</id>
        <label>RAP1GDS1</label>
    </interactant>
    <organismsDiffer>false</organismsDiffer>
    <experiments>5</experiments>
</comment>
<comment type="subcellular location">
    <subcellularLocation>
        <location evidence="2">Cell membrane</location>
        <topology>Lipid-anchor</topology>
        <orientation>Cytoplasmic side</orientation>
    </subcellularLocation>
    <subcellularLocation>
        <location>Golgi apparatus</location>
    </subcellularLocation>
    <subcellularLocation>
        <location>Golgi apparatus membrane</location>
        <topology>Lipid-anchor</topology>
    </subcellularLocation>
    <text evidence="1">The active GTP-bound form is localized most strongly to membranes than the inactive GDP-bound form (By similarity). Shuttles between the plasma membrane and the Golgi apparatus.</text>
</comment>
<comment type="subcellular location">
    <molecule>Isoform 2</molecule>
    <subcellularLocation>
        <location>Nucleus</location>
    </subcellularLocation>
    <subcellularLocation>
        <location>Cytoplasm</location>
    </subcellularLocation>
    <subcellularLocation>
        <location>Cytoplasm</location>
        <location>Perinuclear region</location>
    </subcellularLocation>
    <text>Colocalizes with RACK1 to the perinuclear region.</text>
</comment>
<comment type="alternative products">
    <event type="alternative splicing"/>
    <isoform>
        <id>P01112-1</id>
        <name>1</name>
        <name>H-Ras4A</name>
        <name>p21</name>
        <sequence type="displayed"/>
    </isoform>
    <isoform>
        <id>P01112-2</id>
        <name>2</name>
        <name>H-RasIDX</name>
        <name>p19</name>
        <sequence type="described" ref="VSP_041597"/>
    </isoform>
</comment>
<comment type="tissue specificity">
    <text evidence="13">Widely expressed.</text>
</comment>
<comment type="PTM">
    <text>Palmitoylated by the ZDHHC9-GOLGA7 complex. A continuous cycle of de- and re-palmitoylation regulates rapid exchange between plasma membrane and Golgi.</text>
</comment>
<comment type="PTM">
    <text>S-nitrosylated; critical for redox regulation. Important for stimulating guanine nucleotide exchange. No structural perturbation on nitrosylation.</text>
</comment>
<comment type="PTM">
    <text>The covalent modification of cysteine by 15-deoxy-Delta12,14-prostaglandin-J2 is autocatalytic and reversible. It may occur as an alternative to other cysteine modifications, such as S-nitrosylation and S-palmitoylation.</text>
</comment>
<comment type="PTM">
    <text evidence="1">Acetylation at Lys-104 prevents interaction with guanine nucleotide exchange factors (GEFs).</text>
</comment>
<comment type="PTM">
    <text evidence="34">Fatty-acylated at Lys-170.</text>
</comment>
<comment type="PTM">
    <text evidence="36">Ubiquitinated by the BCR(LZTR1) E3 ubiquitin ligase complex at Lys-170 in a non-degradative manner, leading to inhibit Ras signaling by decreasing Ras association with membranes.</text>
</comment>
<comment type="PTM">
    <text evidence="29 45 46 49">(Microbial infection) Glucosylated at Thr-35 by P.sordellii toxin TcsL (PubMed:19744486, PubMed:8626575, PubMed:8626586, PubMed:9632667). Monoglucosylation completely prevents the recognition of the downstream effector, blocking the GTPases in their inactive form, leading to inhibit Ras signaling (PubMed:8626575, PubMed:8626586, PubMed:9632667).</text>
</comment>
<comment type="disease" evidence="18 19 20 22 25 27 30">
    <disease id="DI-01437">
        <name>Costello syndrome</name>
        <acronym>CSTLO</acronym>
        <description>A rare condition characterized by prenatally increased growth, postnatal growth deficiency, intellectual disability, distinctive facial appearance, cardiovascular abnormalities (typically pulmonic stenosis, hypertrophic cardiomyopathy and/or atrial tachycardia), tumor predisposition, skin and musculoskeletal abnormalities.</description>
        <dbReference type="MIM" id="218040"/>
    </disease>
    <text>The disease is caused by variants affecting the gene represented in this entry.</text>
</comment>
<comment type="disease" evidence="24">
    <disease id="DI-01411">
        <name>Congenital myopathy with excess of muscle spindles</name>
        <acronym>CMEMS</acronym>
        <description>Variant of Costello syndrome.</description>
        <dbReference type="MIM" id="218040"/>
    </disease>
    <text>The disease is caused by variants affecting the gene represented in this entry.</text>
</comment>
<comment type="disease" evidence="11">
    <disease id="DI-04532">
        <name>Thyroid cancer, non-medullary, 2</name>
        <acronym>NMTC2</acronym>
        <description>A form of non-medullary thyroid cancer (NMTC), a cancer characterized by tumors originating from the thyroid follicular cells. NMTCs represent approximately 95% of all cases of thyroid cancer and are classified into papillary, follicular, Hurthle cell, and anaplastic neoplasms.</description>
        <dbReference type="MIM" id="188470"/>
    </disease>
    <text>Disease susceptibility is associated with variants affecting the gene represented in this entry.</text>
</comment>
<comment type="disease">
    <text evidence="42">Mutations which change positions 12, 13 or 61 activate the potential of HRAS to transform cultured cells and are implicated in a variety of human tumors.</text>
</comment>
<comment type="disease" evidence="43 44">
    <disease id="DI-02612">
        <name>Bladder cancer</name>
        <acronym>BLC</acronym>
        <description>A malignancy originating in tissues of the urinary bladder. It often presents with multiple tumors appearing at different times and at different sites in the bladder. Most bladder cancers are transitional cell carcinomas that begin in cells that normally make up the inner lining of the bladder. Other types of bladder cancer include squamous cell carcinoma (cancer that begins in thin, flat cells) and adenocarcinoma (cancer that begins in cells that make and release mucus and other fluids). Bladder cancer is a complex disorder with both genetic and environmental influences.</description>
        <dbReference type="MIM" id="109800"/>
    </disease>
    <text>Disease susceptibility is associated with variants affecting the gene represented in this entry.</text>
</comment>
<comment type="disease" evidence="31">
    <disease id="DI-03512">
        <name>Schimmelpenning-Feuerstein-Mims syndrome</name>
        <acronym>SFM</acronym>
        <description>A disease characterized by sebaceous nevi, often on the face, associated with variable ipsilateral abnormalities of the central nervous system, ocular anomalies, and skeletal defects. Many oral manifestations have been reported, not only including hypoplastic and malformed teeth, and mucosal papillomatosis, but also ankyloglossia, hemihyperplastic tongue, intraoral nevus, giant cell granuloma, ameloblastoma, bone cysts, follicular cysts, oligodontia, and odontodysplasia. Sebaceous nevi follow the lines of Blaschko and these can continue as linear intraoral lesions, as in mucosal papillomatosis.</description>
        <dbReference type="MIM" id="163200"/>
    </disease>
    <text>The disease is caused by variants affecting the gene represented in this entry.</text>
</comment>
<comment type="similarity">
    <text evidence="53">Belongs to the small GTPase superfamily. Ras family.</text>
</comment>
<comment type="online information" name="Atlas of Genetics and Cytogenetics in Oncology and Haematology">
    <link uri="https://atlasgeneticsoncology.org/gene/108/HRAS"/>
</comment>
<proteinExistence type="evidence at protein level"/>
<reference key="1">
    <citation type="journal article" date="1983" name="Nature">
        <title>Complete nucleotide sequences of the T24 human bladder carcinoma oncogene and its normal homologue.</title>
        <authorList>
            <person name="Capon D.J."/>
            <person name="Chen E.Y."/>
            <person name="Levinson A.D."/>
            <person name="Seeburg P.H."/>
            <person name="Goeddel D.V."/>
        </authorList>
    </citation>
    <scope>NUCLEOTIDE SEQUENCE [GENOMIC DNA]</scope>
    <scope>INVOLVEMENT IN BLADDER CANCER</scope>
</reference>
<reference key="2">
    <citation type="journal article" date="1983" name="Science">
        <title>Nucleotide sequence analysis of the T24 human bladder carcinoma oncogene.</title>
        <authorList>
            <person name="Reddy E.P."/>
        </authorList>
    </citation>
    <scope>NUCLEOTIDE SEQUENCE [GENOMIC DNA]</scope>
    <scope>INVOLVEMENT IN BLADDER CANCER</scope>
</reference>
<reference key="3">
    <citation type="journal article" date="1984" name="Proc. Natl. Acad. Sci. U.S.A.">
        <title>Molecular cloning and the total nucleotide sequence of the human c-Ha-ras-1 gene activated in a melanoma from a Japanese patient.</title>
        <authorList>
            <person name="Sekiya T."/>
            <person name="Fushimi M."/>
            <person name="Hori H."/>
            <person name="Hirohashi S."/>
            <person name="Nishimura S."/>
            <person name="Sugimura T."/>
        </authorList>
    </citation>
    <scope>NUCLEOTIDE SEQUENCE [GENOMIC DNA]</scope>
</reference>
<reference key="4">
    <citation type="journal article" date="2003" name="Cancer Res.">
        <title>Alternative splicing of the human proto-oncogene c-H-ras renders a new Ras family protein that trafficks to cytoplasm and nucleus.</title>
        <authorList>
            <person name="Guil S."/>
            <person name="de La Iglesia N."/>
            <person name="Fernandez-Larrea J."/>
            <person name="Cifuentes D."/>
            <person name="Ferrer J.C."/>
            <person name="Guinovart J.J."/>
            <person name="Bach-Elias M."/>
        </authorList>
    </citation>
    <scope>NUCLEOTIDE SEQUENCE [MRNA] (ISOFORM 2)</scope>
    <scope>FUNCTION</scope>
    <scope>INTERACTION WITH RACK1</scope>
    <scope>SUBCELLULAR LOCATION</scope>
    <scope>ALTERNATIVE SPLICING</scope>
    <scope>TISSUE SPECIFICITY</scope>
    <scope>MUTAGENESIS OF SER-17</scope>
</reference>
<reference key="5">
    <citation type="submission" date="2002-03" db="EMBL/GenBank/DDBJ databases">
        <title>cDNA clones of human proteins involved in signal transduction sequenced by the Guthrie cDNA resource center (www.cdna.org).</title>
        <authorList>
            <person name="Puhl H.L. III"/>
            <person name="Ikeda S.R."/>
            <person name="Aronstam R.S."/>
        </authorList>
    </citation>
    <scope>NUCLEOTIDE SEQUENCE [LARGE SCALE MRNA] (ISOFORM 1)</scope>
    <source>
        <tissue>Brain</tissue>
    </source>
</reference>
<reference key="6">
    <citation type="submission" date="2004-06" db="EMBL/GenBank/DDBJ databases">
        <title>Cloning of human full open reading frames in Gateway(TM) system entry vector (pDONR201).</title>
        <authorList>
            <person name="Halleck A."/>
            <person name="Ebert L."/>
            <person name="Mkoundinya M."/>
            <person name="Schick M."/>
            <person name="Eisenstein S."/>
            <person name="Neubert P."/>
            <person name="Kstrang K."/>
            <person name="Schatten R."/>
            <person name="Shen B."/>
            <person name="Henze S."/>
            <person name="Mar W."/>
            <person name="Korn B."/>
            <person name="Zuo D."/>
            <person name="Hu Y."/>
            <person name="LaBaer J."/>
        </authorList>
    </citation>
    <scope>NUCLEOTIDE SEQUENCE [LARGE SCALE MRNA] (ISOFORM 1)</scope>
</reference>
<reference key="7">
    <citation type="submission" date="2004-10" db="EMBL/GenBank/DDBJ databases">
        <title>Cloning of human full-length CDSs in BD Creator(TM) system donor vector.</title>
        <authorList>
            <person name="Kalnine N."/>
            <person name="Chen X."/>
            <person name="Rolfs A."/>
            <person name="Halleck A."/>
            <person name="Hines L."/>
            <person name="Eisenstein S."/>
            <person name="Koundinya M."/>
            <person name="Raphael J."/>
            <person name="Moreira D."/>
            <person name="Kelley T."/>
            <person name="LaBaer J."/>
            <person name="Lin Y."/>
            <person name="Phelan M."/>
            <person name="Farmer A."/>
        </authorList>
    </citation>
    <scope>NUCLEOTIDE SEQUENCE [LARGE SCALE MRNA] (ISOFORM 1)</scope>
</reference>
<reference key="8">
    <citation type="submission" date="2006-09" db="EMBL/GenBank/DDBJ databases">
        <authorList>
            <consortium name="NIEHS SNPs program"/>
        </authorList>
    </citation>
    <scope>NUCLEOTIDE SEQUENCE [GENOMIC DNA]</scope>
</reference>
<reference key="9">
    <citation type="journal article" date="2008" name="Nat. Methods">
        <title>Human protein factory for converting the transcriptome into an in vitro-expressed proteome.</title>
        <authorList>
            <person name="Goshima N."/>
            <person name="Kawamura Y."/>
            <person name="Fukumoto A."/>
            <person name="Miura A."/>
            <person name="Honma R."/>
            <person name="Satoh R."/>
            <person name="Wakamatsu A."/>
            <person name="Yamamoto J."/>
            <person name="Kimura K."/>
            <person name="Nishikawa T."/>
            <person name="Andoh T."/>
            <person name="Iida Y."/>
            <person name="Ishikawa K."/>
            <person name="Ito E."/>
            <person name="Kagawa N."/>
            <person name="Kaminaga C."/>
            <person name="Kanehori K."/>
            <person name="Kawakami B."/>
            <person name="Kenmochi K."/>
            <person name="Kimura R."/>
            <person name="Kobayashi M."/>
            <person name="Kuroita T."/>
            <person name="Kuwayama H."/>
            <person name="Maruyama Y."/>
            <person name="Matsuo K."/>
            <person name="Minami K."/>
            <person name="Mitsubori M."/>
            <person name="Mori M."/>
            <person name="Morishita R."/>
            <person name="Murase A."/>
            <person name="Nishikawa A."/>
            <person name="Nishikawa S."/>
            <person name="Okamoto T."/>
            <person name="Sakagami N."/>
            <person name="Sakamoto Y."/>
            <person name="Sasaki Y."/>
            <person name="Seki T."/>
            <person name="Sono S."/>
            <person name="Sugiyama A."/>
            <person name="Sumiya T."/>
            <person name="Takayama T."/>
            <person name="Takayama Y."/>
            <person name="Takeda H."/>
            <person name="Togashi T."/>
            <person name="Yahata K."/>
            <person name="Yamada H."/>
            <person name="Yanagisawa Y."/>
            <person name="Endo Y."/>
            <person name="Imamoto F."/>
            <person name="Kisu Y."/>
            <person name="Tanaka S."/>
            <person name="Isogai T."/>
            <person name="Imai J."/>
            <person name="Watanabe S."/>
            <person name="Nomura N."/>
        </authorList>
    </citation>
    <scope>NUCLEOTIDE SEQUENCE [LARGE SCALE MRNA] (ISOFORM 1)</scope>
</reference>
<reference key="10">
    <citation type="submission" date="2005-07" db="EMBL/GenBank/DDBJ databases">
        <authorList>
            <person name="Mural R.J."/>
            <person name="Istrail S."/>
            <person name="Sutton G.G."/>
            <person name="Florea L."/>
            <person name="Halpern A.L."/>
            <person name="Mobarry C.M."/>
            <person name="Lippert R."/>
            <person name="Walenz B."/>
            <person name="Shatkay H."/>
            <person name="Dew I."/>
            <person name="Miller J.R."/>
            <person name="Flanigan M.J."/>
            <person name="Edwards N.J."/>
            <person name="Bolanos R."/>
            <person name="Fasulo D."/>
            <person name="Halldorsson B.V."/>
            <person name="Hannenhalli S."/>
            <person name="Turner R."/>
            <person name="Yooseph S."/>
            <person name="Lu F."/>
            <person name="Nusskern D.R."/>
            <person name="Shue B.C."/>
            <person name="Zheng X.H."/>
            <person name="Zhong F."/>
            <person name="Delcher A.L."/>
            <person name="Huson D.H."/>
            <person name="Kravitz S.A."/>
            <person name="Mouchard L."/>
            <person name="Reinert K."/>
            <person name="Remington K.A."/>
            <person name="Clark A.G."/>
            <person name="Waterman M.S."/>
            <person name="Eichler E.E."/>
            <person name="Adams M.D."/>
            <person name="Hunkapiller M.W."/>
            <person name="Myers E.W."/>
            <person name="Venter J.C."/>
        </authorList>
    </citation>
    <scope>NUCLEOTIDE SEQUENCE [LARGE SCALE GENOMIC DNA]</scope>
</reference>
<reference key="11">
    <citation type="journal article" date="2004" name="Genome Res.">
        <title>The status, quality, and expansion of the NIH full-length cDNA project: the Mammalian Gene Collection (MGC).</title>
        <authorList>
            <consortium name="The MGC Project Team"/>
        </authorList>
    </citation>
    <scope>NUCLEOTIDE SEQUENCE [LARGE SCALE MRNA] (ISOFORMS 1 AND 2)</scope>
    <source>
        <tissue>Lung carcinoma</tissue>
    </source>
</reference>
<reference key="12">
    <citation type="submission" date="2008-02" db="UniProtKB">
        <authorList>
            <person name="Bienvenut W.V."/>
            <person name="Calvo F."/>
            <person name="Kolch W."/>
        </authorList>
    </citation>
    <scope>PROTEIN SEQUENCE OF 1-41; 43-117; 129-161 AND 170-185</scope>
    <scope>CLEAVAGE OF INITIATOR METHIONINE</scope>
    <scope>ACETYLATION AT MET-1 AND THR-2</scope>
    <scope>IDENTIFICATION BY MASS SPECTROMETRY</scope>
    <source>
        <tissue>Cervix carcinoma</tissue>
    </source>
</reference>
<reference key="13">
    <citation type="journal article" date="1982" name="Nature">
        <title>Mechanism of activation of a human oncogene.</title>
        <authorList>
            <person name="Tabin C.J."/>
            <person name="Bradley S.M."/>
            <person name="Bargmann C.I."/>
            <person name="Weinberg R.A."/>
            <person name="Papageorge A.G."/>
            <person name="Scolnick E.M."/>
            <person name="Dhar R."/>
            <person name="Lowy D.R."/>
            <person name="Chang E.H."/>
        </authorList>
    </citation>
    <scope>NUCLEOTIDE SEQUENCE [GENOMIC DNA] OF 1-37</scope>
</reference>
<reference key="14">
    <citation type="journal article" date="1987" name="Mol. Cell. Biol.">
        <title>Identification of the principal promoter sequence of the c-H-ras transforming oncogene: deletion analysis of the 5'-flanking region by focus formation assay.</title>
        <authorList>
            <person name="Honkawa H."/>
            <person name="Masahashi W."/>
            <person name="Hashimoto S."/>
            <person name="Hashimoto-Gotoh T."/>
        </authorList>
    </citation>
    <scope>NUCLEOTIDE SEQUENCE [GENOMIC DNA] OF 1-16</scope>
</reference>
<reference key="15">
    <citation type="journal article" date="1993" name="Eur. J. Biochem.">
        <title>Affinity labeling of c-H-ras p21 consensus elements with periodate-oxidized GDP and GTP.</title>
        <authorList>
            <person name="Loew A."/>
            <person name="Sprinzl M."/>
            <person name="Faulhammer H.G."/>
        </authorList>
    </citation>
    <scope>PROTEIN SEQUENCE OF 108-117 AND 132-153</scope>
</reference>
<reference key="16">
    <citation type="journal article" date="1986" name="Proc. Natl. Acad. Sci. U.S.A.">
        <title>Isolation of ras GTP-binding mutants using an in situ colony-binding assay.</title>
        <authorList>
            <person name="Feig L.A."/>
            <person name="Pan B.-T."/>
            <person name="Roberts T.M."/>
            <person name="Cooper G.M."/>
        </authorList>
    </citation>
    <scope>MUTAGENESIS OF ALA-83; ASP-119 AND THR-144</scope>
</reference>
<reference key="17">
    <citation type="journal article" date="1986" name="EMBO J.">
        <title>Deletion mutants of Harvey ras p21 protein reveal the absolute requirement of at least two distant regions for GTP-binding and transforming activities.</title>
        <authorList>
            <person name="Lacal J.C."/>
            <person name="Anderson P.S."/>
            <person name="Aaronson S.A."/>
        </authorList>
    </citation>
    <scope>MUTAGENESIS OF 164-ARG-GLN-165</scope>
</reference>
<reference key="18">
    <citation type="journal article" date="1989" name="Cell">
        <title>All ras proteins are polyisoprenylated but only some are palmitoylated.</title>
        <authorList>
            <person name="Hancock J.F."/>
            <person name="Magee A.I."/>
            <person name="Childs J.E."/>
            <person name="Marshall C.J."/>
        </authorList>
    </citation>
    <scope>PALMITOYLATION AT CYS-181 AND CYS-184</scope>
</reference>
<reference key="19">
    <citation type="journal article" date="1996" name="J. Biol. Chem.">
        <title>Ras, Rap, and Rac small GTP-binding proteins are targets for Clostridium sordellii lethal toxin glucosylation.</title>
        <authorList>
            <person name="Popoff M.R."/>
            <person name="Chaves-Olarte E."/>
            <person name="Lemichez E."/>
            <person name="von Eichel-Streiber C."/>
            <person name="Thelestam M."/>
            <person name="Chardin P."/>
            <person name="Cussac D."/>
            <person name="Antonny B."/>
            <person name="Chavrier P."/>
            <person name="Flatau G."/>
            <person name="Giry M."/>
            <person name="de Gunzburg J."/>
            <person name="Boquet P."/>
        </authorList>
    </citation>
    <scope>GLYCOSYLATION AT THR-35 (MICROBIAL INFECTION)</scope>
</reference>
<reference key="20">
    <citation type="journal article" date="1996" name="J. Biol. Chem.">
        <title>Inactivation of Ras by Clostridium sordellii lethal toxin-catalyzed glucosylation.</title>
        <authorList>
            <person name="Just I."/>
            <person name="Selzer J."/>
            <person name="Hofmann F."/>
            <person name="Green G.A."/>
            <person name="Aktories K."/>
        </authorList>
    </citation>
    <scope>GLYCOSYLATION AT THR-35 (MICROBIAL INFECTION)</scope>
</reference>
<reference key="21">
    <citation type="journal article" date="1996" name="J. Biol. Chem.">
        <title>Palmitoylation of Ha-Ras facilitates membrane binding, activation of downstream effectors, and meiotic maturation in Xenopus oocytes.</title>
        <authorList>
            <person name="Dudler T."/>
            <person name="Gelb M.H."/>
        </authorList>
    </citation>
    <scope>PALMITOYLATION AT CYS-181 AND CYS-184</scope>
    <scope>ISOPRENYLATION AT CYS-186</scope>
    <scope>METHYLATION AT CYS-186</scope>
    <scope>MUTAGENESIS OF CYS-181 AND CYS-184</scope>
</reference>
<reference key="22">
    <citation type="journal article" date="1997" name="J. Biol. Chem.">
        <title>A molecular redox switch on p21(ras). Structural basis for the nitric oxide-p21(ras) interaction.</title>
        <authorList>
            <person name="Lander H.M."/>
            <person name="Hajjar D.P."/>
            <person name="Hempstead B.L."/>
            <person name="Mirza U.A."/>
            <person name="Chait B.T."/>
            <person name="Campbell S."/>
            <person name="Quilliam L.A."/>
        </authorList>
    </citation>
    <scope>S-NITROSYLATION AT CYS-118</scope>
    <scope>FUNCTION</scope>
    <scope>CATALYTIC ACTIVITY</scope>
    <scope>MUTAGENESIS OF CYS-118</scope>
</reference>
<reference key="23">
    <citation type="journal article" date="1998" name="J. Biol. Chem.">
        <title>Functional consequences of monoglucosylation of Ha-Ras at effector domain amino acid threonine 35.</title>
        <authorList>
            <person name="Herrmann C."/>
            <person name="Ahmadian M.R."/>
            <person name="Hofmann F."/>
            <person name="Just I."/>
        </authorList>
    </citation>
    <scope>GLYCOSYLATION AT THR-35 (MICROBIAL INFECTION)</scope>
</reference>
<reference key="24">
    <citation type="journal article" date="1999" name="EMBO J.">
        <title>Aiolos transcription factor controls cell death in T cells by regulating Bcl-2 expression and its cellular localization.</title>
        <authorList>
            <person name="Romero F."/>
            <person name="Martinez-A C."/>
            <person name="Camonis J."/>
            <person name="Rebollo A."/>
        </authorList>
    </citation>
    <scope>INTERACTION WITH IKZF3</scope>
</reference>
<reference key="25">
    <citation type="journal article" date="1999" name="J. Biol. Chem.">
        <title>RA-GEF, a novel Rap1A guanine nucleotide exchange factor containing a Ras/Rap1A-associating domain, is conserved between nematode and humans.</title>
        <authorList>
            <person name="Liao Y."/>
            <person name="Kariya K."/>
            <person name="Hu C.-D."/>
            <person name="Shibatohge M."/>
            <person name="Goshima M."/>
            <person name="Okada T."/>
            <person name="Watari Y."/>
            <person name="Gao X."/>
            <person name="Jin T.-G."/>
            <person name="Yamawaki-Kataoka Y."/>
            <person name="Kataoka T."/>
        </authorList>
    </citation>
    <scope>INTERACTION WITH RAPGEF2</scope>
</reference>
<reference key="26">
    <citation type="journal article" date="2001" name="J. Biol. Chem.">
        <title>Regulation of a novel human phospholipase C, PLCepsilon, through membrane targeting by Ras.</title>
        <authorList>
            <person name="Song C."/>
            <person name="Hu C.-D."/>
            <person name="Masago M."/>
            <person name="Kariya K."/>
            <person name="Yamawaki-Kataoka Y."/>
            <person name="Shibatohge M."/>
            <person name="Wu D."/>
            <person name="Satoh T."/>
            <person name="Kataoka T."/>
        </authorList>
    </citation>
    <scope>INTERACTION WITH PLCE1</scope>
    <scope>CHARACTERIZATION OF VARIANT VAL-12</scope>
    <scope>MUTAGENESIS OF SER-17; ASN-26; VAL-29; TYR-32; PRO-34; THR-35; GLU-37; ASP-38 AND SER-39</scope>
</reference>
<reference key="27">
    <citation type="journal article" date="2001" name="J. Biol. Chem.">
        <title>Nedd4 regulates ubiquitination and stability of the guanine-nucleotide exchange factor CNrasGEF.</title>
        <authorList>
            <person name="Pham N."/>
            <person name="Rotin D."/>
        </authorList>
    </citation>
    <scope>INTERACTION WITH RAPGEF2</scope>
</reference>
<reference key="28">
    <citation type="journal article" date="2001" name="J. Cell Biol.">
        <title>Diacylglycerol kinase zeta regulates Ras activation by a novel mechanism.</title>
        <authorList>
            <person name="Topham M.K."/>
            <person name="Prescott S.M."/>
        </authorList>
    </citation>
    <scope>IDENTIFICATION IN A COMPLEX WITH RASGRP1 AND DGKZ</scope>
</reference>
<reference key="29">
    <citation type="journal article" date="2002" name="EMBO J.">
        <title>The complex of Arl2-GTP and PDE delta: from structure to function.</title>
        <authorList>
            <person name="Hanzal-Bayer M."/>
            <person name="Renault L."/>
            <person name="Roversi P."/>
            <person name="Wittinghofer A."/>
            <person name="Hillig R.C."/>
        </authorList>
    </citation>
    <scope>INTERACTION WITH PDE6D</scope>
</reference>
<reference key="30">
    <citation type="journal article" date="2003" name="Proc. Natl. Acad. Sci. U.S.A.">
        <title>The cyclopentenone 15-deoxy-delta 12,14-prostaglandin J2 binds to and activates H-Ras.</title>
        <authorList>
            <person name="Oliva J.L."/>
            <person name="Perez-Sala D."/>
            <person name="Castrillo A."/>
            <person name="Martinez N."/>
            <person name="Canada F.J."/>
            <person name="Bosca L."/>
            <person name="Rojas J.M."/>
        </authorList>
    </citation>
    <scope>LIPIDATION AT CYS-184</scope>
    <scope>MUTAGENESIS OF CYS-184</scope>
</reference>
<reference key="31">
    <citation type="journal article" date="2012" name="Am. J. Med. Genet. A">
        <title>A novel HRAS substitution (c.266C&gt;G; p.S89C) resulting in decreased downstream signaling suggests a new dimension of RAS pathway dysregulation in human development.</title>
        <authorList>
            <person name="Gripp K.W."/>
            <person name="Bifeld E."/>
            <person name="Stabley D.L."/>
            <person name="Hopkins E."/>
            <person name="Meien S."/>
            <person name="Vinette K."/>
            <person name="Sol-Church K."/>
            <person name="Rosenberger G."/>
        </authorList>
    </citation>
    <scope>FUNCTION</scope>
    <scope>VARIANT CYS-89</scope>
    <scope>CHARACTERIZATION OF VARIANT CYS-89</scope>
</reference>
<reference key="32">
    <citation type="journal article" date="2005" name="J. Biol. Chem.">
        <title>Dephosphorylation of tau by protein phosphatase 5: impairment in Alzheimer's disease.</title>
        <authorList>
            <person name="Liu F."/>
            <person name="Iqbal K."/>
            <person name="Grundke-Iqbal I."/>
            <person name="Rossie S."/>
            <person name="Gong C.X."/>
        </authorList>
    </citation>
    <scope>CHARACTERIZATION OF CSTLO VARIANT VAL-12</scope>
</reference>
<reference key="33">
    <citation type="journal article" date="2005" name="J. Biol. Chem.">
        <title>DHHC9 and GCP16 constitute a human protein fatty acyltransferase with specificity for H- and N-Ras.</title>
        <authorList>
            <person name="Swarthout J.T."/>
            <person name="Lobo S."/>
            <person name="Farh L."/>
            <person name="Croke M.R."/>
            <person name="Greentree W.K."/>
            <person name="Deschenes R.J."/>
            <person name="Linder M.E."/>
        </authorList>
    </citation>
    <scope>PALMITOYLATION AT CYS-181 AND CYS-184</scope>
</reference>
<reference key="34">
    <citation type="journal article" date="2005" name="Science">
        <title>An acylation cycle regulates localization and activity of palmitoylated Ras isoforms.</title>
        <authorList>
            <person name="Rocks O."/>
            <person name="Peyker A."/>
            <person name="Kahms M."/>
            <person name="Verveer P.J."/>
            <person name="Koerner C."/>
            <person name="Lumbierres M."/>
            <person name="Kuhlmann J."/>
            <person name="Waldmann H."/>
            <person name="Wittinghofer A."/>
            <person name="Bastiaens P.I.H."/>
        </authorList>
    </citation>
    <scope>PALMITOYLATION AT CYS-181 AND CYS-184</scope>
    <scope>MUTAGENESIS OF CYS-181 AND CYS-184</scope>
    <scope>SUBCELLULAR LOCATION</scope>
</reference>
<reference key="35">
    <citation type="journal article" date="2007" name="Nature">
        <title>Feedback inhibition of calcineurin and Ras by a dual inhibitory protein Carabin.</title>
        <authorList>
            <person name="Pan F."/>
            <person name="Sun L."/>
            <person name="Kardian D.B."/>
            <person name="Whartenby K.A."/>
            <person name="Pardoll D.M."/>
            <person name="Liu J.O."/>
        </authorList>
    </citation>
    <scope>INTERACTION WITH TBC1D10C</scope>
</reference>
<reference key="36">
    <citation type="journal article" date="2009" name="FEBS Lett.">
        <title>Distinct kinetics of (H/K/N)Ras glucosylation and Rac1 glucosylation catalysed by Clostridium sordellii lethal toxin.</title>
        <authorList>
            <person name="Huelsenbeck S.C."/>
            <person name="Klose I."/>
            <person name="Reichenbach M."/>
            <person name="Huelsenbeck J."/>
            <person name="Genth H."/>
        </authorList>
    </citation>
    <scope>GLYCOSYLATION AT THR-35 (MICROBIAL INFECTION)</scope>
</reference>
<reference key="37">
    <citation type="journal article" date="2017" name="Elife">
        <title>SIRT2 and lysine fatty acylation regulate the transforming activity of K-Ras4a.</title>
        <authorList>
            <person name="Jing H."/>
            <person name="Zhang X."/>
            <person name="Wisner S.A."/>
            <person name="Chen X."/>
            <person name="Spiegelman N.A."/>
            <person name="Linder M.E."/>
            <person name="Lin H."/>
        </authorList>
    </citation>
    <scope>ACYLATION</scope>
    <scope>MUTAGENESIS OF 167-LYS--LYS-185</scope>
</reference>
<reference key="38">
    <citation type="journal article" date="2018" name="Science">
        <title>Mutations in LZTR1 drive human disease by dysregulating RAS ubiquitination.</title>
        <authorList>
            <person name="Steklov M."/>
            <person name="Pandolfi S."/>
            <person name="Baietti M.F."/>
            <person name="Batiuk A."/>
            <person name="Carai P."/>
            <person name="Najm P."/>
            <person name="Zhang M."/>
            <person name="Jang H."/>
            <person name="Renzi F."/>
            <person name="Cai Y."/>
            <person name="Abbasi Asbagh L."/>
            <person name="Pastor T."/>
            <person name="De Troyer M."/>
            <person name="Simicek M."/>
            <person name="Radaelli E."/>
            <person name="Brems H."/>
            <person name="Legius E."/>
            <person name="Tavernier J."/>
            <person name="Gevaert K."/>
            <person name="Impens F."/>
            <person name="Messiaen L."/>
            <person name="Nussinov R."/>
            <person name="Heymans S."/>
            <person name="Eyckerman S."/>
            <person name="Sablina A.A."/>
        </authorList>
    </citation>
    <scope>UBIQUITINATION AT LYS-170</scope>
    <scope>MUTAGENESIS OF LYS-170</scope>
</reference>
<reference key="39">
    <citation type="journal article" date="2022" name="Nat. Struct. Mol. Biol.">
        <title>Structure of the SHOC2-MRAS-PP1c complex provides insights into RAF activation and Noonan syndrome.</title>
        <authorList>
            <person name="Bonsor D.A."/>
            <person name="Alexander P."/>
            <person name="Snead K."/>
            <person name="Hartig N."/>
            <person name="Drew M."/>
            <person name="Messing S."/>
            <person name="Finci L.I."/>
            <person name="Nissley D.V."/>
            <person name="McCormick F."/>
            <person name="Esposito D."/>
            <person name="Rodriguez-Viciana P."/>
            <person name="Stephen A.G."/>
            <person name="Simanshu D.K."/>
        </authorList>
    </citation>
    <scope>INTERACTION WITH PPP1CA; PPP1CB AND SHOC2</scope>
</reference>
<reference key="40">
    <citation type="journal article" date="2022" name="Nature">
        <title>Structural basis for SHOC2 modulation of RAS signalling.</title>
        <authorList>
            <person name="Liau N.P.D."/>
            <person name="Johnson M.C."/>
            <person name="Izadi S."/>
            <person name="Gerosa L."/>
            <person name="Hammel M."/>
            <person name="Bruning J.M."/>
            <person name="Wendorff T.J."/>
            <person name="Phung W."/>
            <person name="Hymowitz S.G."/>
            <person name="Sudhamsu J."/>
        </authorList>
    </citation>
    <scope>INTERACTION WITH PPP1CA; PPP1CB; PPP1CC AND SHOC2</scope>
</reference>
<reference key="41">
    <citation type="journal article" date="2022" name="Nature">
        <title>Structure-function analysis of the SHOC2-MRAS-PP1c holophosphatase complex.</title>
        <authorList>
            <person name="Kwon J.J."/>
            <person name="Hajian B."/>
            <person name="Bian Y."/>
            <person name="Young L.C."/>
            <person name="Amor A.J."/>
            <person name="Fuller J.R."/>
            <person name="Fraley C.V."/>
            <person name="Sykes A.M."/>
            <person name="So J."/>
            <person name="Pan J."/>
            <person name="Baker L."/>
            <person name="Lee S.J."/>
            <person name="Wheeler D.B."/>
            <person name="Mayhew D.L."/>
            <person name="Persky N.S."/>
            <person name="Yang X."/>
            <person name="Root D.E."/>
            <person name="Barsotti A.M."/>
            <person name="Stamford A.W."/>
            <person name="Perry C.K."/>
            <person name="Burgin A."/>
            <person name="McCormick F."/>
            <person name="Lemke C.T."/>
            <person name="Hahn W.C."/>
            <person name="Aguirre A.J."/>
        </authorList>
    </citation>
    <scope>INTERACTION WITH PPP1CA; PPP1CB; PPP1CC AND SHOC2</scope>
    <scope>MUTAGENESIS OF GLN-61</scope>
</reference>
<reference key="42">
    <citation type="journal article" date="1988" name="Science">
        <title>Three-dimensional structure of an oncogene protein: catalytic domain of human c-H-ras p21.</title>
        <authorList>
            <person name="de Vos A.M."/>
            <person name="Tong L."/>
            <person name="Milburn M.V."/>
            <person name="Matias P.M."/>
            <person name="Jancarik J."/>
            <person name="Noguchi S."/>
            <person name="Nishimura S."/>
            <person name="Miura K."/>
            <person name="Ohtsuka E."/>
            <person name="Kim S.-H."/>
        </authorList>
    </citation>
    <scope>X-RAY CRYSTALLOGRAPHY (2.2 ANGSTROMS)</scope>
</reference>
<reference key="43">
    <citation type="journal article" date="1989" name="Nature">
        <title>Structure of the guanine-nucleotide-binding domain of the Ha-ras oncogene product p21 in the triphosphate conformation.</title>
        <authorList>
            <person name="Pai E.F."/>
            <person name="Kabsch W."/>
            <person name="Krengel U."/>
            <person name="Holmes K.C."/>
            <person name="John J."/>
            <person name="Wittinghofer A."/>
        </authorList>
    </citation>
    <scope>X-RAY CRYSTALLOGRAPHY (2.6 ANGSTROMS)</scope>
</reference>
<reference evidence="77" key="44">
    <citation type="journal article" date="1990" name="EMBO J.">
        <title>Refined crystal structure of the triphosphate conformation of H-ras p21 at 1.35-A resolution: implications for the mechanism of GTP hydrolysis.</title>
        <authorList>
            <person name="Pai E.F."/>
            <person name="Krengel U."/>
            <person name="Petsko G.A."/>
            <person name="Goody R.S."/>
            <person name="Kabsch W."/>
            <person name="Wittinghofer A."/>
        </authorList>
    </citation>
    <scope>X-RAY CRYSTALLOGRAPHY (1.35 ANGSTROMS)</scope>
</reference>
<reference evidence="59 69" key="45">
    <citation type="journal article" date="1991" name="J. Mol. Biol.">
        <title>Crystal structures at 2.2-A resolution of the catalytic domains of normal ras protein and an oncogenic mutant complexed with GDP.</title>
        <authorList>
            <person name="Tong L.A."/>
            <person name="de Vos A.M."/>
            <person name="Milburn M.V."/>
            <person name="Kim S.H."/>
        </authorList>
    </citation>
    <scope>X-RAY CRYSTALLOGRAPHY (2.2 ANGSTROMS)</scope>
</reference>
<reference evidence="55" key="46">
    <citation type="journal article" date="1994" name="Biochemistry">
        <title>Solution structure and dynamics of ras p21.GDP determined by heteronuclear three- and four-dimensional NMR spectroscopy.</title>
        <authorList>
            <person name="Kraulis P.J."/>
            <person name="Domaille P.J."/>
            <person name="Campbell-Burk S.L."/>
            <person name="van Aken T."/>
            <person name="Laue E.D."/>
        </authorList>
    </citation>
    <scope>STRUCTURE BY NMR OF 1-166</scope>
</reference>
<reference evidence="61" key="47">
    <citation type="journal article" date="1997" name="Science">
        <title>The Ras-RasGAP complex: structural basis for GTPase activation and its loss in oncogenic Ras mutants.</title>
        <authorList>
            <person name="Scheffzek K."/>
            <person name="Ahmadian M.R."/>
            <person name="Kabsch W."/>
            <person name="Wiesmuller L."/>
            <person name="Lautwein A."/>
            <person name="Schmitz F."/>
            <person name="Wittinghofer A."/>
        </authorList>
    </citation>
    <scope>X-RAY CRYSTALLOGRAPHY (2.5 ANGSTROMS) OF 1-166 IN COMPLEX WITH RASA1/RASGAP</scope>
</reference>
<reference evidence="56 60" key="48">
    <citation type="journal article" date="1999" name="Structure">
        <title>The pre-hydrolysis state of p21(ras) in complex with GTP: new insights into the role of water molecules in the GTP hydrolysis reaction of ras-like proteins.</title>
        <authorList>
            <person name="Scheidig A.J."/>
            <person name="Burmester C."/>
            <person name="Goody R.S."/>
        </authorList>
    </citation>
    <scope>X-RAY CRYSTALLOGRAPHY (1.26 ANGSTROMS)</scope>
</reference>
<reference evidence="57 58" key="49">
    <citation type="journal article" date="2002" name="Proc. Natl. Acad. Sci. U.S.A.">
        <title>The structural basis for the transition from Ras-GTP to Ras-GDP.</title>
        <authorList>
            <person name="Hall B.E."/>
            <person name="Bar-Sagi D."/>
            <person name="Nassar N."/>
        </authorList>
    </citation>
    <scope>X-RAY CRYSTALLOGRAPHY (1.7 ANGSTROMS) OF 1-166 IN COMPLEXES WITH GTP ANALOGS</scope>
</reference>
<reference key="50">
    <citation type="journal article" date="2003" name="Proc. Natl. Acad. Sci. U.S.A.">
        <title>Structural and biochemical studies of p21Ras S-nitrosylation and nitric oxide-mediated guanine nucleotide exchange.</title>
        <authorList>
            <person name="Williams J.G."/>
            <person name="Pappu K."/>
            <person name="Campbell S.L."/>
        </authorList>
    </citation>
    <scope>STRUCTURE BY NMR OF 1-166</scope>
    <scope>S-NITROSYLATION</scope>
    <scope>FUNCTION</scope>
    <scope>MUTAGENESIS OF CYS-118</scope>
    <scope>IDENTIFICATION BY MASS SPECTROMETRY</scope>
</reference>
<reference evidence="62 63 64 65 66 67 68" key="51">
    <citation type="journal article" date="2006" name="Biophys. J.">
        <title>A newly designed microspectrofluorometer for kinetic studies on protein crystals in combination with x-ray diffraction.</title>
        <authorList>
            <person name="Klink B.U."/>
            <person name="Goody R.S."/>
            <person name="Scheidig A.J."/>
        </authorList>
    </citation>
    <scope>X-RAY CRYSTALLOGRAPHY (1.00 ANGSTROMS) OF 1-166 IN COMPLEX WITH GTP AND MAGNESIUM</scope>
</reference>
<reference evidence="70 71 72 73 74 75" key="52">
    <citation type="journal article" date="2007" name="Structure">
        <title>Transformation efficiency of RasQ61 mutants linked to structural features of the switch regions in the presence of Raf.</title>
        <authorList>
            <person name="Buhrman G."/>
            <person name="Wink G."/>
            <person name="Mattos C."/>
        </authorList>
    </citation>
    <scope>X-RAY CRYSTALLOGRAPHY (1.4 ANGSTROMS) OF 1-166 IN COMPLEXES WITH GTP ANALOG</scope>
    <scope>CHARACTERIZATION OF VARIANTS LEU-61 AND LYS-61</scope>
    <scope>MUTAGENESIS OF GLN-61</scope>
</reference>
<reference evidence="76" key="53">
    <citation type="journal article" date="2008" name="EMBO J.">
        <title>Novel type of Ras effector interaction established between tumour suppressor NORE1A and Ras switch II.</title>
        <authorList>
            <person name="Stieglitz B."/>
            <person name="Bee C."/>
            <person name="Schwarz D."/>
            <person name="Yildiz O."/>
            <person name="Moshnikova A."/>
            <person name="Khokhlatchev A."/>
            <person name="Herrmann C."/>
        </authorList>
    </citation>
    <scope>X-RAY CRYSTALLOGRAPHY (1.8 ANGSTROMS) OF 1-166 IN COMPLEX WITH RASSF5</scope>
</reference>
<reference evidence="78 79 80" key="54">
    <citation type="journal article" date="2022" name="Proc. Natl. Acad. Sci. U.S.A.">
        <title>Structural insights into Ras regulation by SIN1.</title>
        <authorList>
            <person name="Zheng Y."/>
            <person name="Ding L."/>
            <person name="Meng X."/>
            <person name="Potter M."/>
            <person name="Kearney A.L."/>
            <person name="Zhang J."/>
            <person name="Sun J."/>
            <person name="James D.E."/>
            <person name="Yang G."/>
            <person name="Zhou C."/>
        </authorList>
    </citation>
    <scope>X-RAY CRYSTALLOGRAPHY (1.60 ANGSTROMS) OF 1-166 IN COMPLEX WITH MAPKAP1</scope>
    <scope>INTERACTION WITH MAPKAP1</scope>
</reference>
<reference key="55">
    <citation type="journal article" date="1992" name="Int. J. Cancer">
        <title>The p53 tumor-suppressor gene and ras oncogene mutations in oral squamous-cell carcinoma.</title>
        <authorList>
            <person name="Sakai E."/>
            <person name="Rikimaru K."/>
            <person name="Ueda M."/>
            <person name="Matsumoto Y."/>
            <person name="Ishii N."/>
            <person name="Enomoto S."/>
            <person name="Yamamoto H."/>
            <person name="Tsuchida N."/>
        </authorList>
    </citation>
    <scope>VARIANT SER-12</scope>
</reference>
<reference key="56">
    <citation type="journal article" date="2003" name="J. Clin. Endocrinol. Metab.">
        <title>RAS point mutations and PAX8-PPAR gamma rearrangement in thyroid tumors: evidence for distinct molecular pathways in thyroid follicular carcinoma.</title>
        <authorList>
            <person name="Nikiforova M.N."/>
            <person name="Lynch R.A."/>
            <person name="Biddinger P.W."/>
            <person name="Alexander E.K."/>
            <person name="Dorn G.W. II"/>
            <person name="Tallini G."/>
            <person name="Kroll T.G."/>
            <person name="Nikiforov Y.E."/>
        </authorList>
    </citation>
    <scope>INVOLVEMENT IN NMTC2</scope>
    <scope>VARIANT NMTC2 LYS-61</scope>
</reference>
<reference key="57">
    <citation type="journal article" date="2005" name="Nat. Genet.">
        <title>Germline mutations in HRAS proto-oncogene cause Costello syndrome.</title>
        <authorList>
            <person name="Aoki Y."/>
            <person name="Niihori T."/>
            <person name="Kawame H."/>
            <person name="Kurosawa K."/>
            <person name="Ohashi H."/>
            <person name="Tanaka Y."/>
            <person name="Filocamo M."/>
            <person name="Kato K."/>
            <person name="Suzuki Y."/>
            <person name="Kure S."/>
            <person name="Matsubara Y."/>
        </authorList>
    </citation>
    <scope>VARIANTS CSTLO ALA-12; SER-12; VAL-12 AND ASP-13</scope>
</reference>
<reference key="58">
    <citation type="journal article" date="2006" name="Am. J. Med. Genet. A">
        <title>HRAS mutation analysis in Costello syndrome: genotype and phenotype correlation.</title>
        <authorList>
            <person name="Gripp K.W."/>
            <person name="Lin A.E."/>
            <person name="Stabley D.L."/>
            <person name="Nicholson L."/>
            <person name="Scott C.I. Jr."/>
            <person name="Doyle D."/>
            <person name="Aoki Y."/>
            <person name="Matsubara Y."/>
            <person name="Zackai E.H."/>
            <person name="Lapunzina P."/>
            <person name="Gonzalez-Meneses A."/>
            <person name="Holbrook J."/>
            <person name="Agresta C.A."/>
            <person name="Gonzalez I.L."/>
            <person name="Sol-Church K."/>
        </authorList>
    </citation>
    <scope>VARIANTS CSTLO ALA-12; SER-12 AND CYS-13</scope>
</reference>
<reference key="59">
    <citation type="journal article" date="2006" name="J. Med. Genet.">
        <title>Genotype-phenotype correlation in Costello syndrome: HRAS mutation analysis in 43 cases.</title>
        <authorList>
            <person name="Kerr B."/>
            <person name="Delrue M.-A."/>
            <person name="Sigaudy S."/>
            <person name="Perveen R."/>
            <person name="Marche M."/>
            <person name="Burgelin I."/>
            <person name="Stef M."/>
            <person name="Tang B."/>
            <person name="Eden O.B."/>
            <person name="O'Sullivan J."/>
            <person name="De Sandre-Giovannoli A."/>
            <person name="Reardon W."/>
            <person name="Brewer C."/>
            <person name="Bennett C."/>
            <person name="Quarell O."/>
            <person name="M'Cann E."/>
            <person name="Donnai D."/>
            <person name="Stewart F."/>
            <person name="Hennekam R."/>
            <person name="Cave H."/>
            <person name="Verloes A."/>
            <person name="Philip N."/>
            <person name="Lacombe D."/>
            <person name="Levy N."/>
            <person name="Arveiler B."/>
            <person name="Black G."/>
        </authorList>
    </citation>
    <scope>VARIANTS CSTLO SER-12; CYS-12; GLU-12; ALA-12 AND ARG-117</scope>
</reference>
<reference key="60">
    <citation type="journal article" date="2007" name="Hum. Mutat.">
        <title>Diversity, parental germline origin, and phenotypic spectrum of de novo HRAS missense changes in Costello syndrome.</title>
        <authorList>
            <person name="Zampino G."/>
            <person name="Pantaleoni F."/>
            <person name="Carta C."/>
            <person name="Cobellis G."/>
            <person name="Vasta I."/>
            <person name="Neri C."/>
            <person name="Pogna E.A."/>
            <person name="De Feo E."/>
            <person name="Delogu A."/>
            <person name="Sarkozy A."/>
            <person name="Atzeri F."/>
            <person name="Selicorni A."/>
            <person name="Rauen K.A."/>
            <person name="Cytrynbaum C.S."/>
            <person name="Weksberg R."/>
            <person name="Dallapiccola B."/>
            <person name="Ballabio A."/>
            <person name="Gelb B.D."/>
            <person name="Neri G."/>
            <person name="Tartaglia M."/>
        </authorList>
    </citation>
    <scope>VARIANTS CSTLO SER-12 AND THR-146</scope>
</reference>
<reference key="61">
    <citation type="journal article" date="2007" name="J. Med. Genet.">
        <title>Myopathy caused by HRAS germline mutations: implications for disturbed myogenic differentiation in the presence of constitutive HRas activation.</title>
        <authorList>
            <person name="van der Burgt I."/>
            <person name="Kupsky W."/>
            <person name="Stassou S."/>
            <person name="Nadroo A."/>
            <person name="Barroso C."/>
            <person name="Diem A."/>
            <person name="Kratz C.P."/>
            <person name="Dvorsky R."/>
            <person name="Ahmadian M.R."/>
            <person name="Zenker M."/>
        </authorList>
    </citation>
    <scope>VARIANTS CMEMS VAL-12; SER-12; LYS-22 AND LYS-63</scope>
</reference>
<reference key="62">
    <citation type="journal article" date="2008" name="Am. J. Med. Genet. A">
        <title>Costello syndrome associated with novel germline HRAS mutations: an attenuated phenotype?</title>
        <authorList>
            <person name="Gripp K.W."/>
            <person name="Innes A.M."/>
            <person name="Axelrad M.E."/>
            <person name="Gillan T.L."/>
            <person name="Parboosingh J.S."/>
            <person name="Davies C."/>
            <person name="Leonard N.J."/>
            <person name="Lapointe M."/>
            <person name="Doyle D."/>
            <person name="Catalano S."/>
            <person name="Nicholson L."/>
            <person name="Stabley D.L."/>
            <person name="Sol-Church K."/>
        </authorList>
    </citation>
    <scope>VARIANTS CSTLO ILE-58 AND VAL-146</scope>
</reference>
<reference key="63">
    <citation type="journal article" date="2008" name="J. Med. Genet.">
        <title>Severe neonatal manifestations of Costello syndrome.</title>
        <authorList>
            <person name="Lo I.F."/>
            <person name="Brewer C."/>
            <person name="Shannon N."/>
            <person name="Shorto J."/>
            <person name="Tang B."/>
            <person name="Black G."/>
            <person name="Soo M.T."/>
            <person name="Ng D.K."/>
            <person name="Lam S.T."/>
            <person name="Kerr B."/>
        </authorList>
    </citation>
    <scope>VARIANTS CSTLO ASP-12 AND CYS-12</scope>
</reference>
<reference key="64">
    <citation type="journal article" date="2010" name="Hum. Mol. Genet.">
        <title>Duplication of Glu37 in the switch I region of HRAS impairs effector/GAP binding and underlies Costello syndrome by promoting enhanced growth factor-dependent MAPK and AKT activation.</title>
        <authorList>
            <person name="Gremer L."/>
            <person name="De Luca A."/>
            <person name="Merbitz-Zahradnik T."/>
            <person name="Dallapiccola B."/>
            <person name="Morlot S."/>
            <person name="Tartaglia M."/>
            <person name="Kutsche K."/>
            <person name="Ahmadian M.R."/>
            <person name="Rosenberger G."/>
        </authorList>
    </citation>
    <scope>VARIANT CSTLO GLU-37 INS</scope>
</reference>
<reference key="65">
    <citation type="journal article" date="2012" name="Nat. Genet.">
        <title>Postzygotic HRAS and KRAS mutations cause nevus sebaceous and Schimmelpenning syndrome.</title>
        <authorList>
            <person name="Groesser L."/>
            <person name="Herschberger E."/>
            <person name="Ruetten A."/>
            <person name="Ruivenkamp C."/>
            <person name="Lopriore E."/>
            <person name="Zutt M."/>
            <person name="Langmann T."/>
            <person name="Singer S."/>
            <person name="Klingseisen L."/>
            <person name="Schneider-Brachert W."/>
            <person name="Toll A."/>
            <person name="Real F.X."/>
            <person name="Landthaler M."/>
            <person name="Hafner C."/>
        </authorList>
    </citation>
    <scope>VARIANT SFM ARG-13</scope>
    <scope>CHARACTERIZATION OF VARIANT SFM ARG-13</scope>
</reference>
<protein>
    <recommendedName>
        <fullName>GTPase HRas</fullName>
        <ecNumber evidence="48">3.6.5.2</ecNumber>
    </recommendedName>
    <alternativeName>
        <fullName>H-Ras-1</fullName>
    </alternativeName>
    <alternativeName>
        <fullName>Ha-Ras</fullName>
    </alternativeName>
    <alternativeName>
        <fullName>Transforming protein p21</fullName>
    </alternativeName>
    <alternativeName>
        <fullName>c-H-ras</fullName>
    </alternativeName>
    <alternativeName>
        <fullName>p21ras</fullName>
    </alternativeName>
    <component>
        <recommendedName>
            <fullName>GTPase HRas, N-terminally processed</fullName>
        </recommendedName>
    </component>
</protein>
<name>RASH_HUMAN</name>